<name>EP300_HUMAN</name>
<accession>Q09472</accession>
<accession>B1AKC2</accession>
<protein>
    <recommendedName>
        <fullName evidence="131">Histone acetyltransferase p300</fullName>
        <shortName>p300 HAT</shortName>
        <ecNumber evidence="47 90 92 106 124">2.3.1.48</ecNumber>
    </recommendedName>
    <alternativeName>
        <fullName>E1A-associated protein p300</fullName>
    </alternativeName>
    <alternativeName>
        <fullName>Histone butyryltransferase p300</fullName>
        <ecNumber evidence="71">2.3.1.-</ecNumber>
    </alternativeName>
    <alternativeName>
        <fullName>Histone crotonyltransferase p300</fullName>
        <ecNumber evidence="106">2.3.1.-</ecNumber>
    </alternativeName>
    <alternativeName>
        <fullName>Protein 2-hydroxyisobutyryltransferase p300</fullName>
        <ecNumber evidence="115">2.3.1.-</ecNumber>
    </alternativeName>
    <alternativeName>
        <fullName>Protein lactyltransferas p300</fullName>
        <ecNumber evidence="118">2.3.1.-</ecNumber>
    </alternativeName>
    <alternativeName>
        <fullName>Protein propionyltransferase p300</fullName>
        <ecNumber evidence="71">2.3.1.-</ecNumber>
    </alternativeName>
</protein>
<sequence length="2414" mass="264161">MAENVVEPGPPSAKRPKLSSPALSASASDGTDFGSLFDLEHDLPDELINSTELGLTNGGDINQLQTSLGMVQDAASKHKQLSELLRSGSSPNLNMGVGGPGQVMASQAQQSSPGLGLINSMVKSPMTQAGLTSPNMGMGTSGPNQGPTQSTGMMNSPVNQPAMGMNTGMNAGMNPGMLAAGNGQGIMPNQVMNGSIGAGRGRQNMQYPNPGMGSAGNLLTEPLQQGSPQMGGQTGLRGPQPLKMGMMNNPNPYGSPYTQNPGQQIGASGLGLQIQTKTVLSNNLSPFAMDKKAVPGGGMPNMGQQPAPQVQQPGLVTPVAQGMGSGAHTADPEKRKLIQQQLVLLLHAHKCQRREQANGEVRQCNLPHCRTMKNVLNHMTHCQSGKSCQVAHCASSRQIISHWKNCTRHDCPVCLPLKNAGDKRNQQPILTGAPVGLGNPSSLGVGQQSAPNLSTVSQIDPSSIERAYAALGLPYQVNQMPTQPQVQAKNQQNQQPGQSPQGMRPMSNMSASPMGVNGGVGVQTPSLLSDSMLHSAINSQNPMMSENASVPSLGPMPTAAQPSTTGIRKQWHEDITQDLRNHLVHKLVQAIFPTPDPAALKDRRMENLVAYARKVEGDMYESANNRAEYYHLLAEKIYKIQKELEEKRRTRLQKQNMLPNAAGMVPVSMNPGPNMGQPQPGMTSNGPLPDPSMIRGSVPNQMMPRITPQSGLNQFGQMSMAQPPIVPRQTPPLQHHGQLAQPGALNPPMGYGPRMQQPSNQGQFLPQTQFPSQGMNVTNIPLAPSSGQAPVSQAQMSSSSCPVNSPIMPPGSQGSHIHCPQLPQPALHQNSPSPVPSRTPTPHHTPPSIGAQQPPATTIPAPVPTPPAMPPGPQSQALHPPPRQTPTPPTTQLPQQVQPSLPAAPSADQPQQQPRSQQSTAASVPTPTAPLLPPQPATPLSQPAVSIEGQVSNPPSTSSTEVNSQAIAEKQPSQEVKMEAKMEVDQPEPADTQPEDISESKVEDCKMESTETEERSTELKTEIKEEEDQPSTSATQSSPAPGQSKKKIFKPEELRQALMPTLEALYRQDPESLPFRQPVDPQLLGIPDYFDIVKSPMDLSTIKRKLDTGQYQEPWQYVDDIWLMFNNAWLYNRKTSRVYKYCSKLSEVFEQEIDPVMQSLGYCCGRKLEFSPQTLCCYGKQLCTIPRDATYYSYQNRYHFCEKCFNEIQGESVSLGDDPSQPQTTINKEQFSKRKNDTLDPELFVECTECGRKMHQICVLHHEIIWPAGFVCDGCLKKSARTRKENKFSAKRLPSTRLGTFLENRVNDFLRRQNHPESGEVTVRVVHASDKTVEVKPGMKARFVDSGEMAESFPYRTKALFAFEEIDGVDLCFFGMHVQEYGSDCPPPNQRRVYISYLDSVHFFRPKCLRTAVYHEILIGYLEYVKKLGYTTGHIWACPPSEGDDYIFHCHPPDQKIPKPKRLQEWYKKMLDKAVSERIVHDYKDIFKQATEDRLTSAKELPYFEGDFWPNVLEESIKELEQEEEERKREENTSNESTDVTKGDSKNAKKKNNKKTSKNKSSLSRGNKKKPGMPNVSNDLSQKLYATMEKHKEVFFVIRLIAGPAANSLPPIVDPDPLIPCDLMDGRDAFLTLARDKHLEFSSLRRAQWSTMCMLVELHTQSQDRFVYTCNECKHHVETRWHCTVCEDYDLCITCYNTKNHDHKMEKLGLGLDDESNNQQAAATQSPGDSRRLSIQRCIQSLVHACQCRNANCSLPSCQKMKRVVQHTKGCKRKTNGGCPICKQLIALCCYHAKHCQENKCPVPFCLNIKQKLRQQQLQHRLQQAQMLRRRMASMQRTGVVGQQQGLPSPTPATPTTPTGQQPTTPQTPQPTSQPQPTPPNSMPPYLPRTQAAGPVSQGKAAGQVTPPTPPQTAQPPLPGPPPAAVEMAMQIQRAAETQRQMAHVQIFQRPIQHQMPPMTPMAPMGMNPPPMTRGPSGHLEPGMGPTGMQQQPPWSQGGLPQPQQLQSGMPRPAMMSVAQHGQPLNMAPQPGLGQVGISPLKPGTVSQQALQNLLRTLRSPSSPLQQQQVLSILHANPQLLAAFIKQRAAKYANSNPQPIPGQPGMPQGQPGLQPPTMPGQQGVHSNPAMQNMNPMQAGVQRAGLPQQQPQQQLQPPMGGMSPQAQQMNMNHNTMPSQFRDILRRQQMMQQQQQQGAGPGIGPGMANHNQFQQPQGVGYPPQQQQRMQHHMQQMQQGNMGQIGQLPQALGAEAGASLQAYQQRLLQQQMGSPVQPNPMSPQQHMLPNQAQSPHLQGQQIPNSLSNQVRSPQPVPSPRPQSQPPHSSPSPRMQPQPSPHHVSPQTSSPHPGLVAAQANPMEQGHFASPDQNSMLSQLASNPGMANLHGASATDLGLSTDNSDLNSNLSQSTLDIH</sequence>
<organism>
    <name type="scientific">Homo sapiens</name>
    <name type="common">Human</name>
    <dbReference type="NCBI Taxonomy" id="9606"/>
    <lineage>
        <taxon>Eukaryota</taxon>
        <taxon>Metazoa</taxon>
        <taxon>Chordata</taxon>
        <taxon>Craniata</taxon>
        <taxon>Vertebrata</taxon>
        <taxon>Euteleostomi</taxon>
        <taxon>Mammalia</taxon>
        <taxon>Eutheria</taxon>
        <taxon>Euarchontoglires</taxon>
        <taxon>Primates</taxon>
        <taxon>Haplorrhini</taxon>
        <taxon>Catarrhini</taxon>
        <taxon>Hominidae</taxon>
        <taxon>Homo</taxon>
    </lineage>
</organism>
<feature type="initiator methionine" description="Removed" evidence="137 140">
    <location>
        <position position="1"/>
    </location>
</feature>
<feature type="chain" id="PRO_0000211193" description="Histone acetyltransferase p300">
    <location>
        <begin position="2"/>
        <end position="2414"/>
    </location>
</feature>
<feature type="domain" description="KIX" evidence="6">
    <location>
        <begin position="566"/>
        <end position="645"/>
    </location>
</feature>
<feature type="domain" description="Bromo" evidence="3">
    <location>
        <begin position="1049"/>
        <end position="1156"/>
    </location>
</feature>
<feature type="domain" description="CBP/p300-type HAT" evidence="7">
    <location>
        <begin position="1287"/>
        <end position="1663"/>
    </location>
</feature>
<feature type="zinc finger region" description="TAZ-type 1" evidence="4">
    <location>
        <begin position="331"/>
        <end position="417"/>
    </location>
</feature>
<feature type="zinc finger region" description="ZZ-type" evidence="5">
    <location>
        <begin position="1665"/>
        <end position="1713"/>
    </location>
</feature>
<feature type="zinc finger region" description="TAZ-type 2" evidence="4">
    <location>
        <begin position="1728"/>
        <end position="1809"/>
    </location>
</feature>
<feature type="region of interest" description="Disordered" evidence="8">
    <location>
        <begin position="1"/>
        <end position="29"/>
    </location>
</feature>
<feature type="region of interest" description="Interaction with RORA" evidence="127">
    <location>
        <begin position="2"/>
        <end position="149"/>
    </location>
</feature>
<feature type="region of interest" description="Interaction with ALX1" evidence="45">
    <location>
        <begin position="2"/>
        <end position="139"/>
    </location>
</feature>
<feature type="region of interest" description="Disordered" evidence="8">
    <location>
        <begin position="133"/>
        <end position="157"/>
    </location>
</feature>
<feature type="region of interest" description="Disordered" evidence="8">
    <location>
        <begin position="196"/>
        <end position="235"/>
    </location>
</feature>
<feature type="region of interest" description="Disordered" evidence="8">
    <location>
        <begin position="482"/>
        <end position="518"/>
    </location>
</feature>
<feature type="region of interest" description="Disordered" evidence="8">
    <location>
        <begin position="729"/>
        <end position="1050"/>
    </location>
</feature>
<feature type="region of interest" description="CRD1; mediates transcriptional repression">
    <location>
        <begin position="1017"/>
        <end position="1029"/>
    </location>
</feature>
<feature type="region of interest" description="Interaction with histone" evidence="74">
    <location>
        <begin position="1397"/>
        <end position="1399"/>
    </location>
</feature>
<feature type="region of interest" description="Disordered" evidence="8">
    <location>
        <begin position="1520"/>
        <end position="1578"/>
    </location>
</feature>
<feature type="region of interest" description="Binding region for E1A adenovirus">
    <location>
        <begin position="1572"/>
        <end position="1818"/>
    </location>
</feature>
<feature type="region of interest" description="Disordered" evidence="8">
    <location>
        <begin position="1833"/>
        <end position="1924"/>
    </location>
</feature>
<feature type="region of interest" description="Disordered" evidence="8">
    <location>
        <begin position="1980"/>
        <end position="2010"/>
    </location>
</feature>
<feature type="region of interest" description="Interaction with HTLV-1 Tax">
    <location>
        <begin position="2003"/>
        <end position="2212"/>
    </location>
</feature>
<feature type="region of interest" description="Interaction with NCOA2" evidence="59">
    <location>
        <begin position="2041"/>
        <end position="2240"/>
    </location>
</feature>
<feature type="region of interest" description="Disordered" evidence="8">
    <location>
        <begin position="2094"/>
        <end position="2163"/>
    </location>
</feature>
<feature type="region of interest" description="Disordered" evidence="8">
    <location>
        <begin position="2186"/>
        <end position="2237"/>
    </location>
</feature>
<feature type="region of interest" description="Disordered" evidence="8">
    <location>
        <begin position="2267"/>
        <end position="2385"/>
    </location>
</feature>
<feature type="short sequence motif" description="Nuclear localization signal" evidence="2">
    <location>
        <begin position="11"/>
        <end position="17"/>
    </location>
</feature>
<feature type="compositionally biased region" description="Low complexity" evidence="8">
    <location>
        <begin position="18"/>
        <end position="28"/>
    </location>
</feature>
<feature type="compositionally biased region" description="Polar residues" evidence="8">
    <location>
        <begin position="141"/>
        <end position="157"/>
    </location>
</feature>
<feature type="compositionally biased region" description="Polar residues" evidence="8">
    <location>
        <begin position="222"/>
        <end position="231"/>
    </location>
</feature>
<feature type="compositionally biased region" description="Low complexity" evidence="8">
    <location>
        <begin position="482"/>
        <end position="501"/>
    </location>
</feature>
<feature type="compositionally biased region" description="Polar residues" evidence="8">
    <location>
        <begin position="756"/>
        <end position="803"/>
    </location>
</feature>
<feature type="compositionally biased region" description="Pro residues" evidence="8">
    <location>
        <begin position="833"/>
        <end position="845"/>
    </location>
</feature>
<feature type="compositionally biased region" description="Low complexity" evidence="8">
    <location>
        <begin position="846"/>
        <end position="860"/>
    </location>
</feature>
<feature type="compositionally biased region" description="Pro residues" evidence="8">
    <location>
        <begin position="861"/>
        <end position="891"/>
    </location>
</feature>
<feature type="compositionally biased region" description="Low complexity" evidence="8">
    <location>
        <begin position="892"/>
        <end position="926"/>
    </location>
</feature>
<feature type="compositionally biased region" description="Pro residues" evidence="8">
    <location>
        <begin position="927"/>
        <end position="937"/>
    </location>
</feature>
<feature type="compositionally biased region" description="Polar residues" evidence="8">
    <location>
        <begin position="949"/>
        <end position="974"/>
    </location>
</feature>
<feature type="compositionally biased region" description="Acidic residues" evidence="8">
    <location>
        <begin position="985"/>
        <end position="997"/>
    </location>
</feature>
<feature type="compositionally biased region" description="Basic and acidic residues" evidence="8">
    <location>
        <begin position="998"/>
        <end position="1023"/>
    </location>
</feature>
<feature type="compositionally biased region" description="Low complexity" evidence="8">
    <location>
        <begin position="1030"/>
        <end position="1041"/>
    </location>
</feature>
<feature type="compositionally biased region" description="Basic and acidic residues" evidence="8">
    <location>
        <begin position="1520"/>
        <end position="1532"/>
    </location>
</feature>
<feature type="compositionally biased region" description="Basic residues" evidence="8">
    <location>
        <begin position="1548"/>
        <end position="1558"/>
    </location>
</feature>
<feature type="compositionally biased region" description="Low complexity" evidence="8">
    <location>
        <begin position="1856"/>
        <end position="1865"/>
    </location>
</feature>
<feature type="compositionally biased region" description="Pro residues" evidence="8">
    <location>
        <begin position="1866"/>
        <end position="1887"/>
    </location>
</feature>
<feature type="compositionally biased region" description="Pro residues" evidence="8">
    <location>
        <begin position="1907"/>
        <end position="1924"/>
    </location>
</feature>
<feature type="compositionally biased region" description="Low complexity" evidence="8">
    <location>
        <begin position="1990"/>
        <end position="2009"/>
    </location>
</feature>
<feature type="compositionally biased region" description="Polar residues" evidence="8">
    <location>
        <begin position="2124"/>
        <end position="2135"/>
    </location>
</feature>
<feature type="compositionally biased region" description="Low complexity" evidence="8">
    <location>
        <begin position="2145"/>
        <end position="2157"/>
    </location>
</feature>
<feature type="compositionally biased region" description="Low complexity" evidence="8">
    <location>
        <begin position="2186"/>
        <end position="2195"/>
    </location>
</feature>
<feature type="compositionally biased region" description="Low complexity" evidence="8">
    <location>
        <begin position="2210"/>
        <end position="2237"/>
    </location>
</feature>
<feature type="compositionally biased region" description="Polar residues" evidence="8">
    <location>
        <begin position="2279"/>
        <end position="2305"/>
    </location>
</feature>
<feature type="compositionally biased region" description="Pro residues" evidence="8">
    <location>
        <begin position="2311"/>
        <end position="2336"/>
    </location>
</feature>
<feature type="compositionally biased region" description="Low complexity" evidence="8">
    <location>
        <begin position="2337"/>
        <end position="2349"/>
    </location>
</feature>
<feature type="compositionally biased region" description="Polar residues" evidence="8">
    <location>
        <begin position="2367"/>
        <end position="2378"/>
    </location>
</feature>
<feature type="binding site" evidence="34 43">
    <location>
        <position position="347"/>
    </location>
    <ligand>
        <name>Zn(2+)</name>
        <dbReference type="ChEBI" id="CHEBI:29105"/>
        <label>1</label>
    </ligand>
</feature>
<feature type="binding site" evidence="34 43">
    <location>
        <position position="351"/>
    </location>
    <ligand>
        <name>Zn(2+)</name>
        <dbReference type="ChEBI" id="CHEBI:29105"/>
        <label>1</label>
    </ligand>
</feature>
<feature type="binding site" evidence="34 43">
    <location>
        <position position="364"/>
    </location>
    <ligand>
        <name>Zn(2+)</name>
        <dbReference type="ChEBI" id="CHEBI:29105"/>
        <label>1</label>
    </ligand>
</feature>
<feature type="binding site" evidence="34 43">
    <location>
        <position position="369"/>
    </location>
    <ligand>
        <name>Zn(2+)</name>
        <dbReference type="ChEBI" id="CHEBI:29105"/>
        <label>1</label>
    </ligand>
</feature>
<feature type="binding site" evidence="34 43">
    <location>
        <position position="378"/>
    </location>
    <ligand>
        <name>Zn(2+)</name>
        <dbReference type="ChEBI" id="CHEBI:29105"/>
        <label>2</label>
    </ligand>
</feature>
<feature type="binding site" evidence="34 43">
    <location>
        <position position="382"/>
    </location>
    <ligand>
        <name>Zn(2+)</name>
        <dbReference type="ChEBI" id="CHEBI:29105"/>
        <label>2</label>
    </ligand>
</feature>
<feature type="binding site" evidence="34 43">
    <location>
        <position position="388"/>
    </location>
    <ligand>
        <name>Zn(2+)</name>
        <dbReference type="ChEBI" id="CHEBI:29105"/>
        <label>2</label>
    </ligand>
</feature>
<feature type="binding site" evidence="34 43">
    <location>
        <position position="393"/>
    </location>
    <ligand>
        <name>Zn(2+)</name>
        <dbReference type="ChEBI" id="CHEBI:29105"/>
        <label>2</label>
    </ligand>
</feature>
<feature type="binding site" evidence="34 43">
    <location>
        <position position="402"/>
    </location>
    <ligand>
        <name>Zn(2+)</name>
        <dbReference type="ChEBI" id="CHEBI:29105"/>
        <label>3</label>
    </ligand>
</feature>
<feature type="binding site" evidence="34 43">
    <location>
        <position position="406"/>
    </location>
    <ligand>
        <name>Zn(2+)</name>
        <dbReference type="ChEBI" id="CHEBI:29105"/>
        <label>3</label>
    </ligand>
</feature>
<feature type="binding site" evidence="34 43">
    <location>
        <position position="411"/>
    </location>
    <ligand>
        <name>Zn(2+)</name>
        <dbReference type="ChEBI" id="CHEBI:29105"/>
        <label>3</label>
    </ligand>
</feature>
<feature type="binding site" evidence="34 43">
    <location>
        <position position="414"/>
    </location>
    <ligand>
        <name>Zn(2+)</name>
        <dbReference type="ChEBI" id="CHEBI:29105"/>
        <label>3</label>
    </ligand>
</feature>
<feature type="binding site" evidence="99">
    <location>
        <begin position="1398"/>
        <end position="1400"/>
    </location>
    <ligand>
        <name>acetyl-CoA</name>
        <dbReference type="ChEBI" id="CHEBI:57288"/>
    </ligand>
</feature>
<feature type="binding site" evidence="99">
    <location>
        <begin position="1410"/>
        <end position="1411"/>
    </location>
    <ligand>
        <name>acetyl-CoA</name>
        <dbReference type="ChEBI" id="CHEBI:57288"/>
    </ligand>
</feature>
<feature type="binding site" evidence="99">
    <location>
        <position position="1457"/>
    </location>
    <ligand>
        <name>acetyl-CoA</name>
        <dbReference type="ChEBI" id="CHEBI:57288"/>
    </ligand>
</feature>
<feature type="binding site" evidence="99">
    <location>
        <position position="1462"/>
    </location>
    <ligand>
        <name>acetyl-CoA</name>
        <dbReference type="ChEBI" id="CHEBI:57288"/>
    </ligand>
</feature>
<feature type="binding site" evidence="99">
    <location>
        <position position="1466"/>
    </location>
    <ligand>
        <name>acetyl-CoA</name>
        <dbReference type="ChEBI" id="CHEBI:57288"/>
    </ligand>
</feature>
<feature type="binding site" evidence="5">
    <location>
        <position position="1670"/>
    </location>
    <ligand>
        <name>Zn(2+)</name>
        <dbReference type="ChEBI" id="CHEBI:29105"/>
        <label>4</label>
    </ligand>
</feature>
<feature type="binding site" evidence="5">
    <location>
        <position position="1673"/>
    </location>
    <ligand>
        <name>Zn(2+)</name>
        <dbReference type="ChEBI" id="CHEBI:29105"/>
        <label>4</label>
    </ligand>
</feature>
<feature type="binding site" evidence="5">
    <location>
        <position position="1683"/>
    </location>
    <ligand>
        <name>Zn(2+)</name>
        <dbReference type="ChEBI" id="CHEBI:29105"/>
        <label>5</label>
    </ligand>
</feature>
<feature type="binding site" evidence="5">
    <location>
        <position position="1686"/>
    </location>
    <ligand>
        <name>Zn(2+)</name>
        <dbReference type="ChEBI" id="CHEBI:29105"/>
        <label>5</label>
    </ligand>
</feature>
<feature type="binding site" evidence="5">
    <location>
        <position position="1692"/>
    </location>
    <ligand>
        <name>Zn(2+)</name>
        <dbReference type="ChEBI" id="CHEBI:29105"/>
        <label>4</label>
    </ligand>
</feature>
<feature type="binding site" evidence="5">
    <location>
        <position position="1695"/>
    </location>
    <ligand>
        <name>Zn(2+)</name>
        <dbReference type="ChEBI" id="CHEBI:29105"/>
        <label>4</label>
    </ligand>
</feature>
<feature type="binding site" evidence="5">
    <location>
        <position position="1701"/>
    </location>
    <ligand>
        <name>Zn(2+)</name>
        <dbReference type="ChEBI" id="CHEBI:29105"/>
        <label>5</label>
    </ligand>
</feature>
<feature type="binding site" evidence="5">
    <location>
        <position position="1703"/>
    </location>
    <ligand>
        <name>Zn(2+)</name>
        <dbReference type="ChEBI" id="CHEBI:29105"/>
        <label>5</label>
    </ligand>
</feature>
<feature type="site" description="Breakpoint for translocation to form KAT6A-EP300 and EP300-KAT6A">
    <location>
        <begin position="31"/>
        <end position="32"/>
    </location>
</feature>
<feature type="site" description="Interaction with NCOA2">
    <location>
        <position position="2088"/>
    </location>
</feature>
<feature type="site" description="Interaction with NCOA2">
    <location>
        <position position="2142"/>
    </location>
</feature>
<feature type="modified residue" description="N-acetylalanine" evidence="137 140">
    <location>
        <position position="2"/>
    </location>
</feature>
<feature type="modified residue" description="Phosphoserine; by AMPK" evidence="24 64">
    <location>
        <position position="89"/>
    </location>
</feature>
<feature type="modified residue" description="N6-acetyllysine" evidence="80">
    <location>
        <position position="418"/>
    </location>
</feature>
<feature type="modified residue" description="N6-acetyllysine" evidence="80">
    <location>
        <position position="423"/>
    </location>
</feature>
<feature type="modified residue" description="Phosphoserine" evidence="1">
    <location>
        <position position="499"/>
    </location>
</feature>
<feature type="modified residue" description="Asymmetric dimethylarginine; by CARM1" evidence="29">
    <location>
        <position position="580"/>
    </location>
</feature>
<feature type="modified residue" description="Asymmetric dimethylarginine; by CARM1" evidence="29">
    <location>
        <position position="604"/>
    </location>
</feature>
<feature type="modified residue" description="N6-acetyllysine" evidence="138">
    <location>
        <position position="636"/>
    </location>
</feature>
<feature type="modified residue" description="N6-acetyllysine" evidence="138">
    <location>
        <position position="977"/>
    </location>
</feature>
<feature type="modified residue" description="N6-acetyllysine; alternate" evidence="56">
    <location>
        <position position="1020"/>
    </location>
</feature>
<feature type="modified residue" description="N6-acetyllysine; alternate" evidence="56">
    <location>
        <position position="1024"/>
    </location>
</feature>
<feature type="modified residue" description="Phosphoserine" evidence="139 141 142">
    <location>
        <position position="1038"/>
    </location>
</feature>
<feature type="modified residue" description="N6-acetyllysine" evidence="1">
    <location>
        <position position="1180"/>
    </location>
</feature>
<feature type="modified residue" description="N6-acetyllysine" evidence="69">
    <location>
        <position position="1336"/>
    </location>
</feature>
<feature type="modified residue" description="N6-acetyllysine" evidence="69">
    <location>
        <position position="1473"/>
    </location>
</feature>
<feature type="modified residue" description="N6-acetyllysine; by autocatalysis" evidence="50">
    <location>
        <position position="1499"/>
    </location>
</feature>
<feature type="modified residue" description="N6-acetyllysine" evidence="80 138">
    <location>
        <position position="1542"/>
    </location>
</feature>
<feature type="modified residue" description="N6-acetyllysine" evidence="80 138">
    <location>
        <position position="1546"/>
    </location>
</feature>
<feature type="modified residue" description="N6-acetyllysine; by autocatalysis" evidence="50 80">
    <location>
        <position position="1549"/>
    </location>
</feature>
<feature type="modified residue" description="N6-acetyllysine; by autocatalysis" evidence="50 138">
    <location>
        <position position="1554"/>
    </location>
</feature>
<feature type="modified residue" description="N6-acetyllysine" evidence="138">
    <location>
        <position position="1555"/>
    </location>
</feature>
<feature type="modified residue" description="N6-acetyllysine" evidence="50 138">
    <location>
        <position position="1558"/>
    </location>
</feature>
<feature type="modified residue" description="N6-acetyllysine; by autocatalysis" evidence="50 138">
    <location>
        <position position="1560"/>
    </location>
</feature>
<feature type="modified residue" description="N6-acetyllysine" evidence="138">
    <location>
        <position position="1583"/>
    </location>
</feature>
<feature type="modified residue" description="N6-acetyllysine" evidence="80">
    <location>
        <position position="1699"/>
    </location>
</feature>
<feature type="modified residue" description="N6-acetyllysine" evidence="80">
    <location>
        <position position="1704"/>
    </location>
</feature>
<feature type="modified residue" description="N6-acetyllysine" evidence="80">
    <location>
        <position position="1707"/>
    </location>
</feature>
<feature type="modified residue" description="Phosphoserine" evidence="141">
    <location>
        <position position="1726"/>
    </location>
</feature>
<feature type="modified residue" description="Asymmetric dimethylarginine; by CARM1; alternate" evidence="59">
    <location>
        <position position="2142"/>
    </location>
</feature>
<feature type="modified residue" description="Citrulline; by PADI4; alternate" evidence="59">
    <location>
        <position position="2142"/>
    </location>
</feature>
<feature type="cross-link" description="Glycyl lysine isopeptide (Lys-Gly) (interchain with G-Cter in SUMO)" evidence="40">
    <location>
        <position position="1020"/>
    </location>
</feature>
<feature type="cross-link" description="Glycyl lysine isopeptide (Lys-Gly) (interchain with G-Cter in SUMO)" evidence="40">
    <location>
        <position position="1024"/>
    </location>
</feature>
<feature type="sequence variant" id="VAR_055554" description="In dbSNP:rs2230111.">
    <original>M</original>
    <variation>V</variation>
    <location>
        <position position="289"/>
    </location>
</feature>
<feature type="sequence variant" id="VAR_014428" description="In a breast cancer sample." evidence="11">
    <original>L</original>
    <variation>P</variation>
    <location>
        <position position="827"/>
    </location>
</feature>
<feature type="sequence variant" id="VAR_020425" description="In dbSNP:rs20551.">
    <original>I</original>
    <variation>V</variation>
    <location>
        <position position="997"/>
    </location>
</feature>
<feature type="sequence variant" id="VAR_014429" description="In a breast cancer sample; dbSNP:rs1234168115." evidence="11">
    <original>E</original>
    <variation>G</variation>
    <location>
        <position position="1013"/>
    </location>
</feature>
<feature type="sequence variant" id="VAR_074021" description="In dbSNP:rs763860567." evidence="98">
    <original>N</original>
    <variation>I</variation>
    <location>
        <position position="1511"/>
    </location>
</feature>
<feature type="sequence variant" id="VAR_014430" description="In a pancreatic cancer sample; dbSNP:rs2145513278." evidence="11">
    <original>S</original>
    <variation>Y</variation>
    <location>
        <position position="1650"/>
    </location>
</feature>
<feature type="sequence variant" id="VAR_081986" description="In MKHK2; dbSNP:rs1569120903." evidence="114">
    <original>Q</original>
    <variation>P</variation>
    <location>
        <position position="1824"/>
    </location>
</feature>
<feature type="sequence variant" id="VAR_081987" description="In MKHK2." evidence="114">
    <location>
        <position position="1831"/>
    </location>
</feature>
<feature type="sequence variant" id="VAR_080731" description="Found in a patient with spinocerebellar ataxia; uncertain significance; dbSNP:rs763892493." evidence="113">
    <original>Q</original>
    <variation>R</variation>
    <location>
        <position position="2007"/>
    </location>
</feature>
<feature type="sequence variant" id="VAR_038376" description="In dbSNP:rs5758252.">
    <original>T</original>
    <variation>S</variation>
    <location>
        <position position="2174"/>
    </location>
</feature>
<feature type="sequence variant" id="VAR_014431" description="In a colorectal cancer sample; dbSNP:rs28937578." evidence="11">
    <original>P</original>
    <variation>Q</variation>
    <location>
        <position position="2221"/>
    </location>
</feature>
<feature type="sequence variant" id="VAR_038377" description="In dbSNP:rs1046088." evidence="121">
    <original>Q</original>
    <variation>P</variation>
    <location>
        <position position="2223"/>
    </location>
</feature>
<feature type="mutagenesis site" description="Abolishes AMPK-mediated phosphorylation." evidence="24">
    <original>S</original>
    <variation>A</variation>
    <location>
        <position position="89"/>
    </location>
</feature>
<feature type="mutagenesis site" description="Phosphomimetic mutant that leads to descreased interaction with nuclear receptors." evidence="24">
    <original>S</original>
    <variation>D</variation>
    <location>
        <position position="89"/>
    </location>
</feature>
<feature type="mutagenesis site" description="Inhibits interaction with HIF1A and transcription activation; when associated with A-345." evidence="43">
    <original>L</original>
    <variation>A</variation>
    <location>
        <position position="344"/>
    </location>
</feature>
<feature type="mutagenesis site" description="Inhibits interaction with HIF1A and transcription activation; when associated with A-344." evidence="43">
    <original>L</original>
    <variation>A</variation>
    <location>
        <position position="345"/>
    </location>
</feature>
<feature type="mutagenesis site" description="Inhibits interaction with HIF1A. Reduces interaction with CITED2." evidence="128">
    <original>TMKNVL</original>
    <variation>NAAIRS</variation>
    <location>
        <begin position="371"/>
        <end position="376"/>
    </location>
</feature>
<feature type="mutagenesis site" description="Inhibits interaction with HIF1A. Does not inhibit interaction with CITED2." evidence="128">
    <original>VCLPLK</original>
    <variation>NAAIRS</variation>
    <location>
        <begin position="413"/>
        <end position="418"/>
    </location>
</feature>
<feature type="mutagenesis site" description="Abolishes sumoylation and transcriptional repression when associated with A-1024." evidence="40 56">
    <original>K</original>
    <variation>A</variation>
    <location>
        <position position="1020"/>
    </location>
</feature>
<feature type="mutagenesis site" description="Abolishes sumoylation and transcriptional repression; when associated with R-1024." evidence="40 56">
    <original>K</original>
    <variation>R</variation>
    <location>
        <position position="1020"/>
    </location>
</feature>
<feature type="mutagenesis site" description="Abolishes sumoylation and transcriptional repression; when associated with A-1020." evidence="40 56">
    <original>K</original>
    <variation>A</variation>
    <location>
        <position position="1024"/>
    </location>
</feature>
<feature type="mutagenesis site" description="Abolishes sumoylation and transcriptional repression; when associated with R-1020." evidence="40 56">
    <original>K</original>
    <variation>R</variation>
    <location>
        <position position="1024"/>
    </location>
</feature>
<feature type="mutagenesis site" description="Increased acetyltransferase activity." evidence="92">
    <original>F</original>
    <variation>E</variation>
    <location>
        <position position="1170"/>
    </location>
</feature>
<feature type="mutagenesis site" description="Increased acetyltransferase activity." evidence="92">
    <original>C</original>
    <variation>R</variation>
    <location>
        <position position="1204"/>
    </location>
</feature>
<feature type="mutagenesis site" description="Increased acetyltransferase activity." evidence="92">
    <original>E</original>
    <variation>K</variation>
    <location>
        <position position="1242"/>
    </location>
</feature>
<feature type="mutagenesis site" description="40% decrease in activity." evidence="74">
    <original>T</original>
    <variation>L</variation>
    <location>
        <position position="1357"/>
    </location>
</feature>
<feature type="mutagenesis site" description="40% decrease in activity. 90% decrease in activity; when associated with R-1505; R-1625 and R-1628." evidence="74">
    <original>T</original>
    <variation>R</variation>
    <location>
        <position position="1357"/>
    </location>
</feature>
<feature type="mutagenesis site" description="Loss of activity; when associated with R-1397." evidence="74">
    <original>S</original>
    <variation>R</variation>
    <location>
        <position position="1396"/>
    </location>
</feature>
<feature type="mutagenesis site" description="Loss of activity; when associated with W-1396." evidence="74">
    <original>S</original>
    <variation>W</variation>
    <location>
        <position position="1396"/>
    </location>
</feature>
<feature type="mutagenesis site" description="Loss of activity; when associated with R-1396." evidence="74">
    <original>Y</original>
    <variation>R</variation>
    <location>
        <position position="1397"/>
    </location>
</feature>
<feature type="mutagenesis site" description="Loss of activity; when associated with W-1397." evidence="74">
    <original>Y</original>
    <variation>W</variation>
    <location>
        <position position="1397"/>
    </location>
</feature>
<feature type="mutagenesis site" description="Abolished acetyltransferase and acyltransferase activities. Abolishes autoacetylation. Does not interact with TFAP2A and inhibits transcriptional coactivation of TFAP2A by CITED2. Does not inhibit interaction with CITED2, DNA-binding of TFAP2A or nuclear localization of TFAP2A or CITED2. No enhancement of FOXO1-mediated transcriptional activity. No inhibition of insulin-mediated translocation to the cytoplasm. No acetylation of RXRA." evidence="39 60 72 92 115">
    <original>D</original>
    <variation>Y</variation>
    <location>
        <position position="1399"/>
    </location>
</feature>
<feature type="mutagenesis site" description="Abolishes autoacetylation. Loss of acetyltransferase activity." evidence="92">
    <original>Y</original>
    <variation>F</variation>
    <location>
        <position position="1467"/>
    </location>
</feature>
<feature type="mutagenesis site" description="Abolished acetyltransferase activity." evidence="100">
    <original>F</original>
    <variation>A</variation>
    <location>
        <position position="1504"/>
    </location>
</feature>
<feature type="mutagenesis site" description="90% decrease in activity; when associated with R-1625 and R-1628. 90% decrease in activity; when associated with R-1357; R-1625 and R-1628." evidence="74">
    <original>E</original>
    <variation>R</variation>
    <location>
        <position position="1505"/>
    </location>
</feature>
<feature type="mutagenesis site" description="70% decrease in activity; when associated with R-1628. 90% decrease in activity; when associated with R-1505 and R-1628. 90% decrease in activity; when associated with R-1357; R-1505 and R-1628." evidence="74">
    <original>D</original>
    <variation>R</variation>
    <location>
        <position position="1625"/>
    </location>
</feature>
<feature type="mutagenesis site" description="70% decrease in activity; when associated with R-1625. 90% decrease in activity; when associated with E-1505 and R-1625. 90% decrease in activity; when associated with R-1357; R-1505 and R-1625." evidence="74">
    <original>D</original>
    <variation>R</variation>
    <location>
        <position position="1628"/>
    </location>
</feature>
<feature type="mutagenesis site" description="Increased acetyltransferase activity." evidence="92">
    <original>RR</original>
    <variation>EE</variation>
    <location>
        <begin position="1645"/>
        <end position="1646"/>
    </location>
</feature>
<feature type="mutagenesis site" description="No effect on interaction with NCOA2." evidence="59">
    <original>R</original>
    <variation>K</variation>
    <location>
        <position position="2056"/>
    </location>
</feature>
<feature type="mutagenesis site" description="Abolishes interaction with NCOA2." evidence="59">
    <original>R</original>
    <variation>K</variation>
    <location>
        <position position="2088"/>
    </location>
</feature>
<feature type="mutagenesis site" description="Strongly reduces interaction with NCOA2." evidence="59">
    <original>R</original>
    <variation>K</variation>
    <location>
        <position position="2142"/>
    </location>
</feature>
<feature type="sequence conflict" description="In Ref. 1; AAA18639." evidence="131" ref="1">
    <original>M</original>
    <variation>T</variation>
    <location>
        <position position="169"/>
    </location>
</feature>
<feature type="sequence conflict" description="In Ref. 1; AAA18639." evidence="131" ref="1">
    <original>N</original>
    <variation>D</variation>
    <location>
        <position position="204"/>
    </location>
</feature>
<feature type="sequence conflict" description="In Ref. 1; AAA18639." evidence="131" ref="1">
    <original>T</original>
    <variation>N</variation>
    <location>
        <position position="928"/>
    </location>
</feature>
<feature type="sequence conflict" description="In Ref. 1; AAA18639." evidence="131" ref="1">
    <original>A</original>
    <variation>T</variation>
    <location>
        <position position="1924"/>
    </location>
</feature>
<feature type="helix" evidence="154">
    <location>
        <begin position="332"/>
        <end position="357"/>
    </location>
</feature>
<feature type="helix" evidence="154">
    <location>
        <begin position="369"/>
        <end position="381"/>
    </location>
</feature>
<feature type="helix" evidence="154">
    <location>
        <begin position="385"/>
        <end position="387"/>
    </location>
</feature>
<feature type="helix" evidence="154">
    <location>
        <begin position="393"/>
        <end position="405"/>
    </location>
</feature>
<feature type="strand" evidence="143">
    <location>
        <begin position="408"/>
        <end position="410"/>
    </location>
</feature>
<feature type="turn" evidence="154">
    <location>
        <begin position="412"/>
        <end position="414"/>
    </location>
</feature>
<feature type="helix" evidence="154">
    <location>
        <begin position="415"/>
        <end position="418"/>
    </location>
</feature>
<feature type="helix" evidence="148">
    <location>
        <begin position="1051"/>
        <end position="1066"/>
    </location>
</feature>
<feature type="turn" evidence="148">
    <location>
        <begin position="1069"/>
        <end position="1072"/>
    </location>
</feature>
<feature type="helix" evidence="148">
    <location>
        <begin position="1073"/>
        <end position="1075"/>
    </location>
</feature>
<feature type="helix" evidence="148">
    <location>
        <begin position="1081"/>
        <end position="1084"/>
    </location>
</feature>
<feature type="helix" evidence="148">
    <location>
        <begin position="1089"/>
        <end position="1092"/>
    </location>
</feature>
<feature type="helix" evidence="148">
    <location>
        <begin position="1099"/>
        <end position="1107"/>
    </location>
</feature>
<feature type="helix" evidence="148">
    <location>
        <begin position="1114"/>
        <end position="1131"/>
    </location>
</feature>
<feature type="helix" evidence="148">
    <location>
        <begin position="1137"/>
        <end position="1160"/>
    </location>
</feature>
<feature type="strand" evidence="151">
    <location>
        <begin position="1175"/>
        <end position="1177"/>
    </location>
</feature>
<feature type="strand" evidence="155">
    <location>
        <begin position="1178"/>
        <end position="1180"/>
    </location>
</feature>
<feature type="strand" evidence="151">
    <location>
        <begin position="1181"/>
        <end position="1185"/>
    </location>
</feature>
<feature type="strand" evidence="155">
    <location>
        <begin position="1190"/>
        <end position="1194"/>
    </location>
</feature>
<feature type="turn" evidence="155">
    <location>
        <begin position="1195"/>
        <end position="1197"/>
    </location>
</feature>
<feature type="strand" evidence="155">
    <location>
        <begin position="1198"/>
        <end position="1201"/>
    </location>
</feature>
<feature type="helix" evidence="155">
    <location>
        <begin position="1202"/>
        <end position="1206"/>
    </location>
</feature>
<feature type="strand" evidence="155">
    <location>
        <begin position="1208"/>
        <end position="1215"/>
    </location>
</feature>
<feature type="strand" evidence="147">
    <location>
        <begin position="1218"/>
        <end position="1221"/>
    </location>
</feature>
<feature type="strand" evidence="155">
    <location>
        <begin position="1224"/>
        <end position="1227"/>
    </location>
</feature>
<feature type="helix" evidence="155">
    <location>
        <begin position="1228"/>
        <end position="1230"/>
    </location>
</feature>
<feature type="strand" evidence="155">
    <location>
        <begin position="1231"/>
        <end position="1236"/>
    </location>
</feature>
<feature type="strand" evidence="155">
    <location>
        <begin position="1244"/>
        <end position="1246"/>
    </location>
</feature>
<feature type="turn" evidence="155">
    <location>
        <begin position="1248"/>
        <end position="1250"/>
    </location>
</feature>
<feature type="strand" evidence="155">
    <location>
        <begin position="1253"/>
        <end position="1255"/>
    </location>
</feature>
<feature type="helix" evidence="155">
    <location>
        <begin position="1256"/>
        <end position="1259"/>
    </location>
</feature>
<feature type="turn" evidence="155">
    <location>
        <begin position="1263"/>
        <end position="1265"/>
    </location>
</feature>
<feature type="helix" evidence="155">
    <location>
        <begin position="1273"/>
        <end position="1277"/>
    </location>
</feature>
<feature type="turn" evidence="155">
    <location>
        <begin position="1278"/>
        <end position="1280"/>
    </location>
</feature>
<feature type="turn" evidence="153">
    <location>
        <begin position="1290"/>
        <end position="1292"/>
    </location>
</feature>
<feature type="helix" evidence="145">
    <location>
        <begin position="1297"/>
        <end position="1313"/>
    </location>
</feature>
<feature type="strand" evidence="145">
    <location>
        <begin position="1321"/>
        <end position="1334"/>
    </location>
</feature>
<feature type="helix" evidence="145">
    <location>
        <begin position="1339"/>
        <end position="1342"/>
    </location>
</feature>
<feature type="turn" evidence="145">
    <location>
        <begin position="1343"/>
        <end position="1347"/>
    </location>
</feature>
<feature type="strand" evidence="145">
    <location>
        <begin position="1351"/>
        <end position="1366"/>
    </location>
</feature>
<feature type="strand" evidence="145">
    <location>
        <begin position="1369"/>
        <end position="1381"/>
    </location>
</feature>
<feature type="strand" evidence="152">
    <location>
        <begin position="1383"/>
        <end position="1385"/>
    </location>
</feature>
<feature type="strand" evidence="145">
    <location>
        <begin position="1392"/>
        <end position="1400"/>
    </location>
</feature>
<feature type="helix" evidence="145">
    <location>
        <begin position="1407"/>
        <end position="1409"/>
    </location>
</feature>
<feature type="helix" evidence="145">
    <location>
        <begin position="1410"/>
        <end position="1428"/>
    </location>
</feature>
<feature type="strand" evidence="145">
    <location>
        <begin position="1432"/>
        <end position="1436"/>
    </location>
</feature>
<feature type="strand" evidence="155">
    <location>
        <begin position="1442"/>
        <end position="1444"/>
    </location>
</feature>
<feature type="strand" evidence="145">
    <location>
        <begin position="1446"/>
        <end position="1450"/>
    </location>
</feature>
<feature type="helix" evidence="145">
    <location>
        <begin position="1460"/>
        <end position="1476"/>
    </location>
</feature>
<feature type="strand" evidence="145">
    <location>
        <begin position="1482"/>
        <end position="1485"/>
    </location>
</feature>
<feature type="helix" evidence="145">
    <location>
        <begin position="1486"/>
        <end position="1493"/>
    </location>
</feature>
<feature type="helix" evidence="145">
    <location>
        <begin position="1498"/>
        <end position="1500"/>
    </location>
</feature>
<feature type="helix" evidence="145">
    <location>
        <begin position="1508"/>
        <end position="1517"/>
    </location>
</feature>
<feature type="helix" evidence="145">
    <location>
        <begin position="1582"/>
        <end position="1590"/>
    </location>
</feature>
<feature type="helix" evidence="145">
    <location>
        <begin position="1592"/>
        <end position="1594"/>
    </location>
</feature>
<feature type="strand" evidence="145">
    <location>
        <begin position="1595"/>
        <end position="1601"/>
    </location>
</feature>
<feature type="helix" evidence="145">
    <location>
        <begin position="1603"/>
        <end position="1606"/>
    </location>
</feature>
<feature type="helix" evidence="145">
    <location>
        <begin position="1622"/>
        <end position="1624"/>
    </location>
</feature>
<feature type="strand" evidence="145">
    <location>
        <begin position="1625"/>
        <end position="1627"/>
    </location>
</feature>
<feature type="helix" evidence="145">
    <location>
        <begin position="1628"/>
        <end position="1636"/>
    </location>
</feature>
<feature type="helix" evidence="145">
    <location>
        <begin position="1644"/>
        <end position="1662"/>
    </location>
</feature>
<feature type="turn" evidence="149">
    <location>
        <begin position="1671"/>
        <end position="1673"/>
    </location>
</feature>
<feature type="strand" evidence="149">
    <location>
        <begin position="1676"/>
        <end position="1688"/>
    </location>
</feature>
<feature type="helix" evidence="149">
    <location>
        <begin position="1693"/>
        <end position="1696"/>
    </location>
</feature>
<feature type="strand" evidence="149">
    <location>
        <begin position="1705"/>
        <end position="1708"/>
    </location>
</feature>
<feature type="turn" evidence="144">
    <location>
        <begin position="1726"/>
        <end position="1728"/>
    </location>
</feature>
<feature type="helix" evidence="146">
    <location>
        <begin position="1730"/>
        <end position="1747"/>
    </location>
</feature>
<feature type="strand" evidence="150">
    <location>
        <begin position="1750"/>
        <end position="1752"/>
    </location>
</feature>
<feature type="helix" evidence="146">
    <location>
        <begin position="1756"/>
        <end position="1770"/>
    </location>
</feature>
<feature type="turn" evidence="146">
    <location>
        <begin position="1774"/>
        <end position="1778"/>
    </location>
</feature>
<feature type="helix" evidence="146">
    <location>
        <begin position="1780"/>
        <end position="1793"/>
    </location>
</feature>
<feature type="strand" evidence="144">
    <location>
        <begin position="1799"/>
        <end position="1802"/>
    </location>
</feature>
<feature type="helix" evidence="146">
    <location>
        <begin position="1806"/>
        <end position="1818"/>
    </location>
</feature>
<gene>
    <name evidence="129 136" type="primary">EP300</name>
    <name evidence="130" type="synonym">P300</name>
</gene>
<dbReference type="EC" id="2.3.1.48" evidence="47 90 92 106 124"/>
<dbReference type="EC" id="2.3.1.-" evidence="71 106 115 118"/>
<dbReference type="EMBL" id="U01877">
    <property type="protein sequence ID" value="AAA18639.1"/>
    <property type="molecule type" value="mRNA"/>
</dbReference>
<dbReference type="EMBL" id="AL080243">
    <property type="status" value="NOT_ANNOTATED_CDS"/>
    <property type="molecule type" value="Genomic_DNA"/>
</dbReference>
<dbReference type="EMBL" id="AL096765">
    <property type="status" value="NOT_ANNOTATED_CDS"/>
    <property type="molecule type" value="Genomic_DNA"/>
</dbReference>
<dbReference type="EMBL" id="AL035658">
    <property type="status" value="NOT_ANNOTATED_CDS"/>
    <property type="molecule type" value="Genomic_DNA"/>
</dbReference>
<dbReference type="EMBL" id="CH471095">
    <property type="protein sequence ID" value="EAW60408.1"/>
    <property type="molecule type" value="Genomic_DNA"/>
</dbReference>
<dbReference type="CCDS" id="CCDS14010.1"/>
<dbReference type="PIR" id="A54277">
    <property type="entry name" value="A54277"/>
</dbReference>
<dbReference type="RefSeq" id="NP_001420.2">
    <property type="nucleotide sequence ID" value="NM_001429.4"/>
</dbReference>
<dbReference type="PDB" id="1L3E">
    <property type="method" value="NMR"/>
    <property type="chains" value="B=323-423"/>
</dbReference>
<dbReference type="PDB" id="1P4Q">
    <property type="method" value="NMR"/>
    <property type="chains" value="B=323-423"/>
</dbReference>
<dbReference type="PDB" id="2K8F">
    <property type="method" value="NMR"/>
    <property type="chains" value="A=1723-1812"/>
</dbReference>
<dbReference type="PDB" id="2MH0">
    <property type="method" value="NMR"/>
    <property type="chains" value="B=1723-1812"/>
</dbReference>
<dbReference type="PDB" id="2MZD">
    <property type="method" value="NMR"/>
    <property type="chains" value="A=1723-1812"/>
</dbReference>
<dbReference type="PDB" id="3BIY">
    <property type="method" value="X-ray"/>
    <property type="resolution" value="1.70 A"/>
    <property type="chains" value="A=1287-1666"/>
</dbReference>
<dbReference type="PDB" id="3I3J">
    <property type="method" value="X-ray"/>
    <property type="resolution" value="2.33 A"/>
    <property type="chains" value="A/B/C/D/E/F/G/H/I/J/K/L=1040-1161"/>
</dbReference>
<dbReference type="PDB" id="3IO2">
    <property type="method" value="X-ray"/>
    <property type="resolution" value="2.50 A"/>
    <property type="chains" value="A=1723-1836"/>
</dbReference>
<dbReference type="PDB" id="3P57">
    <property type="method" value="X-ray"/>
    <property type="resolution" value="2.19 A"/>
    <property type="chains" value="P=1726-1835"/>
</dbReference>
<dbReference type="PDB" id="3T92">
    <property type="method" value="X-ray"/>
    <property type="resolution" value="1.50 A"/>
    <property type="chains" value="A=1723-1818"/>
</dbReference>
<dbReference type="PDB" id="4BHW">
    <property type="method" value="X-ray"/>
    <property type="resolution" value="2.80 A"/>
    <property type="chains" value="A/B=1043-1519, A/B=1581-1666"/>
</dbReference>
<dbReference type="PDB" id="4PZR">
    <property type="method" value="X-ray"/>
    <property type="resolution" value="2.10 A"/>
    <property type="chains" value="A=1287-1664"/>
</dbReference>
<dbReference type="PDB" id="4PZS">
    <property type="method" value="X-ray"/>
    <property type="resolution" value="1.94 A"/>
    <property type="chains" value="A=1287-1664"/>
</dbReference>
<dbReference type="PDB" id="4PZT">
    <property type="method" value="X-ray"/>
    <property type="resolution" value="2.80 A"/>
    <property type="chains" value="A=1287-1664"/>
</dbReference>
<dbReference type="PDB" id="5BT3">
    <property type="method" value="X-ray"/>
    <property type="resolution" value="1.05 A"/>
    <property type="chains" value="A=1048-1161"/>
</dbReference>
<dbReference type="PDB" id="5KJ2">
    <property type="method" value="X-ray"/>
    <property type="resolution" value="1.95 A"/>
    <property type="chains" value="A=1287-1522, A=1555-1666"/>
</dbReference>
<dbReference type="PDB" id="5LKT">
    <property type="method" value="X-ray"/>
    <property type="resolution" value="2.04 A"/>
    <property type="chains" value="A=1043-1519, A=1581-1666"/>
</dbReference>
<dbReference type="PDB" id="5LKU">
    <property type="method" value="X-ray"/>
    <property type="resolution" value="3.50 A"/>
    <property type="chains" value="A=1043-1519, A=1581-1666"/>
</dbReference>
<dbReference type="PDB" id="5LKX">
    <property type="method" value="X-ray"/>
    <property type="resolution" value="2.52 A"/>
    <property type="chains" value="A=1043-1519, A=1581-1666"/>
</dbReference>
<dbReference type="PDB" id="5LKZ">
    <property type="method" value="X-ray"/>
    <property type="resolution" value="2.50 A"/>
    <property type="chains" value="A=1043-1519, A=1581-1666"/>
</dbReference>
<dbReference type="PDB" id="5LPK">
    <property type="method" value="X-ray"/>
    <property type="resolution" value="2.10 A"/>
    <property type="chains" value="A/B/C/D/E/F/G=1040-1161"/>
</dbReference>
<dbReference type="PDB" id="5LPM">
    <property type="method" value="X-ray"/>
    <property type="resolution" value="1.50 A"/>
    <property type="chains" value="A/B=1048-1161"/>
</dbReference>
<dbReference type="PDB" id="5NU5">
    <property type="method" value="X-ray"/>
    <property type="resolution" value="1.60 A"/>
    <property type="chains" value="A/B=1048-1161"/>
</dbReference>
<dbReference type="PDB" id="5XZC">
    <property type="method" value="EM"/>
    <property type="resolution" value="10.70 A"/>
    <property type="chains" value="A=1046-1664"/>
</dbReference>
<dbReference type="PDB" id="6DS6">
    <property type="method" value="X-ray"/>
    <property type="resolution" value="1.95 A"/>
    <property type="chains" value="A=1661-1713"/>
</dbReference>
<dbReference type="PDB" id="6FGN">
    <property type="method" value="NMR"/>
    <property type="chains" value="A=1723-1812"/>
</dbReference>
<dbReference type="PDB" id="6FGS">
    <property type="method" value="NMR"/>
    <property type="chains" value="A=1723-1812"/>
</dbReference>
<dbReference type="PDB" id="6GYR">
    <property type="method" value="X-ray"/>
    <property type="resolution" value="3.10 A"/>
    <property type="chains" value="A/B/C/D=1046-1664"/>
</dbReference>
<dbReference type="PDB" id="6GYT">
    <property type="method" value="X-ray"/>
    <property type="resolution" value="2.50 A"/>
    <property type="chains" value="A/B=1047-1168"/>
</dbReference>
<dbReference type="PDB" id="6K4N">
    <property type="method" value="EM"/>
    <property type="resolution" value="9.80 A"/>
    <property type="chains" value="A=1046-1664"/>
</dbReference>
<dbReference type="PDB" id="6PF1">
    <property type="method" value="X-ray"/>
    <property type="resolution" value="2.32 A"/>
    <property type="chains" value="A/B=1287-1663"/>
</dbReference>
<dbReference type="PDB" id="6PGU">
    <property type="method" value="X-ray"/>
    <property type="resolution" value="1.72 A"/>
    <property type="chains" value="A/B=1287-1519, A/B=1582-1663"/>
</dbReference>
<dbReference type="PDB" id="6V8B">
    <property type="method" value="X-ray"/>
    <property type="resolution" value="3.13 A"/>
    <property type="chains" value="A=1287-1666"/>
</dbReference>
<dbReference type="PDB" id="6V8K">
    <property type="method" value="X-ray"/>
    <property type="resolution" value="1.84 A"/>
    <property type="chains" value="A=1287-1519, A=1581-1663"/>
</dbReference>
<dbReference type="PDB" id="6V8N">
    <property type="method" value="X-ray"/>
    <property type="resolution" value="2.30 A"/>
    <property type="chains" value="A=1287-1666"/>
</dbReference>
<dbReference type="PDB" id="6V90">
    <property type="method" value="X-ray"/>
    <property type="resolution" value="2.04 A"/>
    <property type="chains" value="A=1287-1666"/>
</dbReference>
<dbReference type="PDB" id="7LJE">
    <property type="method" value="X-ray"/>
    <property type="resolution" value="2.61 A"/>
    <property type="chains" value="A/B/C/D=1287-1666"/>
</dbReference>
<dbReference type="PDB" id="7QGS">
    <property type="method" value="X-ray"/>
    <property type="resolution" value="2.00 A"/>
    <property type="chains" value="A=330-420"/>
</dbReference>
<dbReference type="PDB" id="7SS8">
    <property type="method" value="X-ray"/>
    <property type="resolution" value="2.15 A"/>
    <property type="chains" value="A=1048-1519, A=1582-1664"/>
</dbReference>
<dbReference type="PDB" id="7SSK">
    <property type="method" value="X-ray"/>
    <property type="resolution" value="2.36 A"/>
    <property type="chains" value="A=1048-1519, A=1582-1664"/>
</dbReference>
<dbReference type="PDB" id="7SZQ">
    <property type="method" value="X-ray"/>
    <property type="resolution" value="2.80 A"/>
    <property type="chains" value="A=1279-1666"/>
</dbReference>
<dbReference type="PDB" id="7UGI">
    <property type="method" value="X-ray"/>
    <property type="resolution" value="2.00 A"/>
    <property type="chains" value="A/B=1048-1161"/>
</dbReference>
<dbReference type="PDB" id="7VHY">
    <property type="method" value="X-ray"/>
    <property type="resolution" value="2.30 A"/>
    <property type="chains" value="A/B=1159-1519, A/B=1581-1666"/>
</dbReference>
<dbReference type="PDB" id="7VHZ">
    <property type="method" value="X-ray"/>
    <property type="resolution" value="2.00 A"/>
    <property type="chains" value="A/B=1159-1519, A/B=1581-1666"/>
</dbReference>
<dbReference type="PDB" id="7VI0">
    <property type="method" value="X-ray"/>
    <property type="resolution" value="2.10 A"/>
    <property type="chains" value="A/B=1159-1519, A/B=1581-1666"/>
</dbReference>
<dbReference type="PDB" id="7W9V">
    <property type="method" value="EM"/>
    <property type="resolution" value="3.95 A"/>
    <property type="chains" value="K=1035-1519, K=1581-1720"/>
</dbReference>
<dbReference type="PDB" id="7XEZ">
    <property type="method" value="NMR"/>
    <property type="chains" value="A=1723-1812"/>
</dbReference>
<dbReference type="PDB" id="7XFG">
    <property type="method" value="NMR"/>
    <property type="chains" value="A=1723-1812"/>
</dbReference>
<dbReference type="PDB" id="8E1D">
    <property type="method" value="NMR"/>
    <property type="chains" value="A=1723-1812"/>
</dbReference>
<dbReference type="PDB" id="8FVF">
    <property type="method" value="X-ray"/>
    <property type="resolution" value="2.10 A"/>
    <property type="chains" value="A/B=1048-1161"/>
</dbReference>
<dbReference type="PDB" id="8GZC">
    <property type="method" value="X-ray"/>
    <property type="resolution" value="2.00 A"/>
    <property type="chains" value="A/B=1159-1519, A/B=1581-1666"/>
</dbReference>
<dbReference type="PDB" id="8HAG">
    <property type="method" value="EM"/>
    <property type="resolution" value="3.20 A"/>
    <property type="chains" value="K=1048-1836"/>
</dbReference>
<dbReference type="PDB" id="8HAH">
    <property type="method" value="EM"/>
    <property type="resolution" value="3.90 A"/>
    <property type="chains" value="K=1048-1836"/>
</dbReference>
<dbReference type="PDB" id="8HAI">
    <property type="method" value="EM"/>
    <property type="resolution" value="4.70 A"/>
    <property type="chains" value="K=1048-1836"/>
</dbReference>
<dbReference type="PDB" id="8HAJ">
    <property type="method" value="EM"/>
    <property type="resolution" value="4.80 A"/>
    <property type="chains" value="K=1048-1836"/>
</dbReference>
<dbReference type="PDB" id="8HAK">
    <property type="method" value="EM"/>
    <property type="resolution" value="4.50 A"/>
    <property type="chains" value="N=1048-1836"/>
</dbReference>
<dbReference type="PDB" id="9JEJ">
    <property type="method" value="X-ray"/>
    <property type="resolution" value="2.90 A"/>
    <property type="chains" value="A/B/C=566-652"/>
</dbReference>
<dbReference type="PDB" id="9JUT">
    <property type="method" value="X-ray"/>
    <property type="resolution" value="2.13 A"/>
    <property type="chains" value="A=1040-1161"/>
</dbReference>
<dbReference type="PDBsum" id="1L3E"/>
<dbReference type="PDBsum" id="1P4Q"/>
<dbReference type="PDBsum" id="2K8F"/>
<dbReference type="PDBsum" id="2MH0"/>
<dbReference type="PDBsum" id="2MZD"/>
<dbReference type="PDBsum" id="3BIY"/>
<dbReference type="PDBsum" id="3I3J"/>
<dbReference type="PDBsum" id="3IO2"/>
<dbReference type="PDBsum" id="3P57"/>
<dbReference type="PDBsum" id="3T92"/>
<dbReference type="PDBsum" id="4BHW"/>
<dbReference type="PDBsum" id="4PZR"/>
<dbReference type="PDBsum" id="4PZS"/>
<dbReference type="PDBsum" id="4PZT"/>
<dbReference type="PDBsum" id="5BT3"/>
<dbReference type="PDBsum" id="5KJ2"/>
<dbReference type="PDBsum" id="5LKT"/>
<dbReference type="PDBsum" id="5LKU"/>
<dbReference type="PDBsum" id="5LKX"/>
<dbReference type="PDBsum" id="5LKZ"/>
<dbReference type="PDBsum" id="5LPK"/>
<dbReference type="PDBsum" id="5LPM"/>
<dbReference type="PDBsum" id="5NU5"/>
<dbReference type="PDBsum" id="5XZC"/>
<dbReference type="PDBsum" id="6DS6"/>
<dbReference type="PDBsum" id="6FGN"/>
<dbReference type="PDBsum" id="6FGS"/>
<dbReference type="PDBsum" id="6GYR"/>
<dbReference type="PDBsum" id="6GYT"/>
<dbReference type="PDBsum" id="6K4N"/>
<dbReference type="PDBsum" id="6PF1"/>
<dbReference type="PDBsum" id="6PGU"/>
<dbReference type="PDBsum" id="6V8B"/>
<dbReference type="PDBsum" id="6V8K"/>
<dbReference type="PDBsum" id="6V8N"/>
<dbReference type="PDBsum" id="6V90"/>
<dbReference type="PDBsum" id="7LJE"/>
<dbReference type="PDBsum" id="7QGS"/>
<dbReference type="PDBsum" id="7SS8"/>
<dbReference type="PDBsum" id="7SSK"/>
<dbReference type="PDBsum" id="7SZQ"/>
<dbReference type="PDBsum" id="7UGI"/>
<dbReference type="PDBsum" id="7VHY"/>
<dbReference type="PDBsum" id="7VHZ"/>
<dbReference type="PDBsum" id="7VI0"/>
<dbReference type="PDBsum" id="7W9V"/>
<dbReference type="PDBsum" id="7XEZ"/>
<dbReference type="PDBsum" id="7XFG"/>
<dbReference type="PDBsum" id="8E1D"/>
<dbReference type="PDBsum" id="8FVF"/>
<dbReference type="PDBsum" id="8GZC"/>
<dbReference type="PDBsum" id="8HAG"/>
<dbReference type="PDBsum" id="8HAH"/>
<dbReference type="PDBsum" id="8HAI"/>
<dbReference type="PDBsum" id="8HAJ"/>
<dbReference type="PDBsum" id="8HAK"/>
<dbReference type="PDBsum" id="9JEJ"/>
<dbReference type="PDBsum" id="9JUT"/>
<dbReference type="BMRB" id="Q09472"/>
<dbReference type="EMDB" id="EMD-32373"/>
<dbReference type="EMDB" id="EMD-34588"/>
<dbReference type="EMDB" id="EMD-34589"/>
<dbReference type="EMDB" id="EMD-34591"/>
<dbReference type="EMDB" id="EMD-34592"/>
<dbReference type="EMDB" id="EMD-34594"/>
<dbReference type="EMDB" id="EMD-6261"/>
<dbReference type="EMDB" id="EMD-6262"/>
<dbReference type="EMDB" id="EMD-6263"/>
<dbReference type="EMDB" id="EMD-6791"/>
<dbReference type="EMDB" id="EMD-6792"/>
<dbReference type="SMR" id="Q09472"/>
<dbReference type="BioGRID" id="108347">
    <property type="interactions" value="1394"/>
</dbReference>
<dbReference type="CORUM" id="Q09472"/>
<dbReference type="DIP" id="DIP-257N"/>
<dbReference type="FunCoup" id="Q09472">
    <property type="interactions" value="7351"/>
</dbReference>
<dbReference type="IntAct" id="Q09472">
    <property type="interactions" value="261"/>
</dbReference>
<dbReference type="MINT" id="Q09472"/>
<dbReference type="STRING" id="9606.ENSP00000263253"/>
<dbReference type="BindingDB" id="Q09472"/>
<dbReference type="ChEMBL" id="CHEMBL3784"/>
<dbReference type="GuidetoPHARMACOLOGY" id="2735"/>
<dbReference type="MoonDB" id="Q09472">
    <property type="type" value="Predicted"/>
</dbReference>
<dbReference type="GlyCosmos" id="Q09472">
    <property type="glycosylation" value="3 sites, 1 glycan"/>
</dbReference>
<dbReference type="GlyGen" id="Q09472">
    <property type="glycosylation" value="15 sites, 1 O-linked glycan (6 sites)"/>
</dbReference>
<dbReference type="iPTMnet" id="Q09472"/>
<dbReference type="MetOSite" id="Q09472"/>
<dbReference type="PhosphoSitePlus" id="Q09472"/>
<dbReference type="BioMuta" id="EP300"/>
<dbReference type="DMDM" id="223590203"/>
<dbReference type="CPTAC" id="CPTAC-1240"/>
<dbReference type="jPOST" id="Q09472"/>
<dbReference type="MassIVE" id="Q09472"/>
<dbReference type="PaxDb" id="9606-ENSP00000263253"/>
<dbReference type="PeptideAtlas" id="Q09472"/>
<dbReference type="ProteomicsDB" id="58723"/>
<dbReference type="Pumba" id="Q09472"/>
<dbReference type="ABCD" id="Q09472">
    <property type="antibodies" value="1 sequenced antibody"/>
</dbReference>
<dbReference type="Antibodypedia" id="296">
    <property type="antibodies" value="1018 antibodies from 40 providers"/>
</dbReference>
<dbReference type="DNASU" id="2033"/>
<dbReference type="Ensembl" id="ENST00000263253.9">
    <property type="protein sequence ID" value="ENSP00000263253.7"/>
    <property type="gene ID" value="ENSG00000100393.16"/>
</dbReference>
<dbReference type="Ensembl" id="ENST00000715703.1">
    <property type="protein sequence ID" value="ENSP00000520505.1"/>
    <property type="gene ID" value="ENSG00000100393.16"/>
</dbReference>
<dbReference type="GeneID" id="2033"/>
<dbReference type="KEGG" id="hsa:2033"/>
<dbReference type="MANE-Select" id="ENST00000263253.9">
    <property type="protein sequence ID" value="ENSP00000263253.7"/>
    <property type="RefSeq nucleotide sequence ID" value="NM_001429.4"/>
    <property type="RefSeq protein sequence ID" value="NP_001420.2"/>
</dbReference>
<dbReference type="UCSC" id="uc003azl.5">
    <property type="organism name" value="human"/>
</dbReference>
<dbReference type="AGR" id="HGNC:3373"/>
<dbReference type="CTD" id="2033"/>
<dbReference type="DisGeNET" id="2033"/>
<dbReference type="GeneCards" id="EP300"/>
<dbReference type="GeneReviews" id="EP300"/>
<dbReference type="HGNC" id="HGNC:3373">
    <property type="gene designation" value="EP300"/>
</dbReference>
<dbReference type="HPA" id="ENSG00000100393">
    <property type="expression patterns" value="Low tissue specificity"/>
</dbReference>
<dbReference type="MalaCards" id="EP300"/>
<dbReference type="MIM" id="602700">
    <property type="type" value="gene"/>
</dbReference>
<dbReference type="MIM" id="613684">
    <property type="type" value="phenotype"/>
</dbReference>
<dbReference type="MIM" id="618333">
    <property type="type" value="phenotype"/>
</dbReference>
<dbReference type="neXtProt" id="NX_Q09472"/>
<dbReference type="OpenTargets" id="ENSG00000100393"/>
<dbReference type="Orphanet" id="353284">
    <property type="disease" value="Rubinstein-Taybi syndrome due to EP300 haploinsufficiency"/>
</dbReference>
<dbReference type="PharmGKB" id="PA27807"/>
<dbReference type="VEuPathDB" id="HostDB:ENSG00000100393"/>
<dbReference type="eggNOG" id="KOG1778">
    <property type="taxonomic scope" value="Eukaryota"/>
</dbReference>
<dbReference type="GeneTree" id="ENSGT00940000155497"/>
<dbReference type="HOGENOM" id="CLU_000162_2_0_1"/>
<dbReference type="InParanoid" id="Q09472"/>
<dbReference type="OMA" id="LMMHHAY"/>
<dbReference type="OrthoDB" id="899at2759"/>
<dbReference type="PAN-GO" id="Q09472">
    <property type="GO annotations" value="7 GO annotations based on evolutionary models"/>
</dbReference>
<dbReference type="PhylomeDB" id="Q09472"/>
<dbReference type="TreeFam" id="TF101097"/>
<dbReference type="BRENDA" id="2.3.1.48">
    <property type="organism ID" value="2681"/>
</dbReference>
<dbReference type="PathwayCommons" id="Q09472"/>
<dbReference type="Reactome" id="R-HSA-1234158">
    <property type="pathway name" value="Regulation of gene expression by Hypoxia-inducible Factor"/>
</dbReference>
<dbReference type="Reactome" id="R-HSA-1368082">
    <property type="pathway name" value="RORA activates gene expression"/>
</dbReference>
<dbReference type="Reactome" id="R-HSA-156711">
    <property type="pathway name" value="Polo-like kinase mediated events"/>
</dbReference>
<dbReference type="Reactome" id="R-HSA-1912408">
    <property type="pathway name" value="Pre-NOTCH Transcription and Translation"/>
</dbReference>
<dbReference type="Reactome" id="R-HSA-1989781">
    <property type="pathway name" value="PPARA activates gene expression"/>
</dbReference>
<dbReference type="Reactome" id="R-HSA-201722">
    <property type="pathway name" value="Formation of the beta-catenin:TCF transactivating complex"/>
</dbReference>
<dbReference type="Reactome" id="R-HSA-210744">
    <property type="pathway name" value="Regulation of gene expression in late stage (branching morphogenesis) pancreatic bud precursor cells"/>
</dbReference>
<dbReference type="Reactome" id="R-HSA-2122947">
    <property type="pathway name" value="NOTCH1 Intracellular Domain Regulates Transcription"/>
</dbReference>
<dbReference type="Reactome" id="R-HSA-2173796">
    <property type="pathway name" value="SMAD2/SMAD3:SMAD4 heterotrimer regulates transcription"/>
</dbReference>
<dbReference type="Reactome" id="R-HSA-2197563">
    <property type="pathway name" value="NOTCH2 intracellular domain regulates transcription"/>
</dbReference>
<dbReference type="Reactome" id="R-HSA-2644606">
    <property type="pathway name" value="Constitutive Signaling by NOTCH1 PEST Domain Mutants"/>
</dbReference>
<dbReference type="Reactome" id="R-HSA-2894862">
    <property type="pathway name" value="Constitutive Signaling by NOTCH1 HD+PEST Domain Mutants"/>
</dbReference>
<dbReference type="Reactome" id="R-HSA-3134973">
    <property type="pathway name" value="LRR FLII-interacting protein 1 (LRRFIP1) activates type I IFN production"/>
</dbReference>
<dbReference type="Reactome" id="R-HSA-3214847">
    <property type="pathway name" value="HATs acetylate histones"/>
</dbReference>
<dbReference type="Reactome" id="R-HSA-3371568">
    <property type="pathway name" value="Attenuation phase"/>
</dbReference>
<dbReference type="Reactome" id="R-HSA-381340">
    <property type="pathway name" value="Transcriptional regulation of white adipocyte differentiation"/>
</dbReference>
<dbReference type="Reactome" id="R-HSA-3899300">
    <property type="pathway name" value="SUMOylation of transcription cofactors"/>
</dbReference>
<dbReference type="Reactome" id="R-HSA-400253">
    <property type="pathway name" value="Circadian Clock"/>
</dbReference>
<dbReference type="Reactome" id="R-HSA-5250924">
    <property type="pathway name" value="B-WICH complex positively regulates rRNA expression"/>
</dbReference>
<dbReference type="Reactome" id="R-HSA-5617472">
    <property type="pathway name" value="Activation of anterior HOX genes in hindbrain development during early embryogenesis"/>
</dbReference>
<dbReference type="Reactome" id="R-HSA-5621575">
    <property type="pathway name" value="CD209 (DC-SIGN) signaling"/>
</dbReference>
<dbReference type="Reactome" id="R-HSA-5689901">
    <property type="pathway name" value="Metalloprotease DUBs"/>
</dbReference>
<dbReference type="Reactome" id="R-HSA-6804114">
    <property type="pathway name" value="TP53 Regulates Transcription of Genes Involved in G2 Cell Cycle Arrest"/>
</dbReference>
<dbReference type="Reactome" id="R-HSA-6804758">
    <property type="pathway name" value="Regulation of TP53 Activity through Acetylation"/>
</dbReference>
<dbReference type="Reactome" id="R-HSA-6804760">
    <property type="pathway name" value="Regulation of TP53 Activity through Methylation"/>
</dbReference>
<dbReference type="Reactome" id="R-HSA-6811555">
    <property type="pathway name" value="PI5P Regulates TP53 Acetylation"/>
</dbReference>
<dbReference type="Reactome" id="R-HSA-8866907">
    <property type="pathway name" value="Activation of the TFAP2 (AP-2) family of transcription factors"/>
</dbReference>
<dbReference type="Reactome" id="R-HSA-8936459">
    <property type="pathway name" value="RUNX1 regulates genes involved in megakaryocyte differentiation and platelet function"/>
</dbReference>
<dbReference type="Reactome" id="R-HSA-8939243">
    <property type="pathway name" value="RUNX1 interacts with co-factors whose precise effect on RUNX1 targets is not known"/>
</dbReference>
<dbReference type="Reactome" id="R-HSA-8941856">
    <property type="pathway name" value="RUNX3 regulates NOTCH signaling"/>
</dbReference>
<dbReference type="Reactome" id="R-HSA-8941858">
    <property type="pathway name" value="Regulation of RUNX3 expression and activity"/>
</dbReference>
<dbReference type="Reactome" id="R-HSA-8951936">
    <property type="pathway name" value="RUNX3 regulates p14-ARF"/>
</dbReference>
<dbReference type="Reactome" id="R-HSA-9013508">
    <property type="pathway name" value="NOTCH3 Intracellular Domain Regulates Transcription"/>
</dbReference>
<dbReference type="Reactome" id="R-HSA-9013695">
    <property type="pathway name" value="NOTCH4 Intracellular Domain Regulates Transcription"/>
</dbReference>
<dbReference type="Reactome" id="R-HSA-9018519">
    <property type="pathway name" value="Estrogen-dependent gene expression"/>
</dbReference>
<dbReference type="Reactome" id="R-HSA-9029569">
    <property type="pathway name" value="NR1H3 &amp; NR1H2 regulate gene expression linked to cholesterol transport and efflux"/>
</dbReference>
<dbReference type="Reactome" id="R-HSA-9031628">
    <property type="pathway name" value="NGF-stimulated transcription"/>
</dbReference>
<dbReference type="Reactome" id="R-HSA-918233">
    <property type="pathway name" value="TRAF3-dependent IRF activation pathway"/>
</dbReference>
<dbReference type="Reactome" id="R-HSA-933541">
    <property type="pathway name" value="TRAF6 mediated IRF7 activation"/>
</dbReference>
<dbReference type="Reactome" id="R-HSA-9614657">
    <property type="pathway name" value="FOXO-mediated transcription of cell death genes"/>
</dbReference>
<dbReference type="Reactome" id="R-HSA-9616222">
    <property type="pathway name" value="Transcriptional regulation of granulopoiesis"/>
</dbReference>
<dbReference type="Reactome" id="R-HSA-9617629">
    <property type="pathway name" value="Regulation of FOXO transcriptional activity by acetylation"/>
</dbReference>
<dbReference type="Reactome" id="R-HSA-9701898">
    <property type="pathway name" value="STAT3 nuclear events downstream of ALK signaling"/>
</dbReference>
<dbReference type="Reactome" id="R-HSA-9707616">
    <property type="pathway name" value="Heme signaling"/>
</dbReference>
<dbReference type="Reactome" id="R-HSA-9735871">
    <property type="pathway name" value="SARS-CoV-1 targets host intracellular signalling and regulatory pathways"/>
</dbReference>
<dbReference type="Reactome" id="R-HSA-9759194">
    <property type="pathway name" value="Nuclear events mediated by NFE2L2"/>
</dbReference>
<dbReference type="Reactome" id="R-HSA-9793380">
    <property type="pathway name" value="Formation of paraxial mesoderm"/>
</dbReference>
<dbReference type="Reactome" id="R-HSA-9818026">
    <property type="pathway name" value="NFE2L2 regulating inflammation associated genes"/>
</dbReference>
<dbReference type="Reactome" id="R-HSA-9818027">
    <property type="pathway name" value="NFE2L2 regulating anti-oxidant/detoxification enzymes"/>
</dbReference>
<dbReference type="Reactome" id="R-HSA-9818028">
    <property type="pathway name" value="NFE2L2 regulates pentose phosphate pathway genes"/>
</dbReference>
<dbReference type="Reactome" id="R-HSA-9818030">
    <property type="pathway name" value="NFE2L2 regulating tumorigenic genes"/>
</dbReference>
<dbReference type="Reactome" id="R-HSA-9818032">
    <property type="pathway name" value="NFE2L2 regulating MDR associated enzymes"/>
</dbReference>
<dbReference type="Reactome" id="R-HSA-9818035">
    <property type="pathway name" value="NFE2L2 regulating ER-stress associated genes"/>
</dbReference>
<dbReference type="Reactome" id="R-HSA-9818749">
    <property type="pathway name" value="Regulation of NFE2L2 gene expression"/>
</dbReference>
<dbReference type="Reactome" id="R-HSA-9819196">
    <property type="pathway name" value="Zygotic genome activation (ZGA)"/>
</dbReference>
<dbReference type="Reactome" id="R-HSA-9833109">
    <property type="pathway name" value="Evasion by RSV of host interferon responses"/>
</dbReference>
<dbReference type="Reactome" id="R-HSA-9839394">
    <property type="pathway name" value="TGFBR3 expression"/>
</dbReference>
<dbReference type="Reactome" id="R-HSA-9841922">
    <property type="pathway name" value="MLL4 and MLL3 complexes regulate expression of PPARG target genes in adipogenesis and hepatic steatosis"/>
</dbReference>
<dbReference type="Reactome" id="R-HSA-9856649">
    <property type="pathway name" value="Transcriptional and post-translational regulation of MITF-M expression and activity"/>
</dbReference>
<dbReference type="SABIO-RK" id="Q09472"/>
<dbReference type="SignaLink" id="Q09472"/>
<dbReference type="SIGNOR" id="Q09472"/>
<dbReference type="BioGRID-ORCS" id="2033">
    <property type="hits" value="223 hits in 1220 CRISPR screens"/>
</dbReference>
<dbReference type="CD-CODE" id="38EC0B30">
    <property type="entry name" value="Transcriptional condensate"/>
</dbReference>
<dbReference type="CD-CODE" id="4749EA78">
    <property type="entry name" value="cBAF condensate"/>
</dbReference>
<dbReference type="CD-CODE" id="B5B9A610">
    <property type="entry name" value="PML body"/>
</dbReference>
<dbReference type="CD-CODE" id="DEE660B4">
    <property type="entry name" value="Stress granule"/>
</dbReference>
<dbReference type="ChiTaRS" id="EP300">
    <property type="organism name" value="human"/>
</dbReference>
<dbReference type="EvolutionaryTrace" id="Q09472"/>
<dbReference type="GeneWiki" id="EP300"/>
<dbReference type="GenomeRNAi" id="2033"/>
<dbReference type="Pharos" id="Q09472">
    <property type="development level" value="Tchem"/>
</dbReference>
<dbReference type="PRO" id="PR:Q09472"/>
<dbReference type="Proteomes" id="UP000005640">
    <property type="component" value="Chromosome 22"/>
</dbReference>
<dbReference type="RNAct" id="Q09472">
    <property type="molecule type" value="protein"/>
</dbReference>
<dbReference type="Bgee" id="ENSG00000100393">
    <property type="expression patterns" value="Expressed in colonic epithelium and 212 other cell types or tissues"/>
</dbReference>
<dbReference type="ExpressionAtlas" id="Q09472">
    <property type="expression patterns" value="baseline and differential"/>
</dbReference>
<dbReference type="GO" id="GO:0000785">
    <property type="term" value="C:chromatin"/>
    <property type="evidence" value="ECO:0000314"/>
    <property type="project" value="UniProt"/>
</dbReference>
<dbReference type="GO" id="GO:0005737">
    <property type="term" value="C:cytoplasm"/>
    <property type="evidence" value="ECO:0000314"/>
    <property type="project" value="UniProt"/>
</dbReference>
<dbReference type="GO" id="GO:0005829">
    <property type="term" value="C:cytosol"/>
    <property type="evidence" value="ECO:0000314"/>
    <property type="project" value="HPA"/>
</dbReference>
<dbReference type="GO" id="GO:0000123">
    <property type="term" value="C:histone acetyltransferase complex"/>
    <property type="evidence" value="ECO:0000318"/>
    <property type="project" value="GO_Central"/>
</dbReference>
<dbReference type="GO" id="GO:0005654">
    <property type="term" value="C:nucleoplasm"/>
    <property type="evidence" value="ECO:0000314"/>
    <property type="project" value="HPA"/>
</dbReference>
<dbReference type="GO" id="GO:0005634">
    <property type="term" value="C:nucleus"/>
    <property type="evidence" value="ECO:0000314"/>
    <property type="project" value="UniProtKB"/>
</dbReference>
<dbReference type="GO" id="GO:0032993">
    <property type="term" value="C:protein-DNA complex"/>
    <property type="evidence" value="ECO:0000250"/>
    <property type="project" value="ARUK-UCL"/>
</dbReference>
<dbReference type="GO" id="GO:0005667">
    <property type="term" value="C:transcription regulator complex"/>
    <property type="evidence" value="ECO:0000318"/>
    <property type="project" value="GO_Central"/>
</dbReference>
<dbReference type="GO" id="GO:0140033">
    <property type="term" value="F:acetylation-dependent protein binding"/>
    <property type="evidence" value="ECO:0000314"/>
    <property type="project" value="UniProtKB"/>
</dbReference>
<dbReference type="GO" id="GO:0016407">
    <property type="term" value="F:acetyltransferase activity"/>
    <property type="evidence" value="ECO:0000314"/>
    <property type="project" value="UniProtKB"/>
</dbReference>
<dbReference type="GO" id="GO:0016746">
    <property type="term" value="F:acyltransferase activity"/>
    <property type="evidence" value="ECO:0000314"/>
    <property type="project" value="UniProtKB"/>
</dbReference>
<dbReference type="GO" id="GO:0008013">
    <property type="term" value="F:beta-catenin binding"/>
    <property type="evidence" value="ECO:0000353"/>
    <property type="project" value="BHF-UCL"/>
</dbReference>
<dbReference type="GO" id="GO:0003682">
    <property type="term" value="F:chromatin binding"/>
    <property type="evidence" value="ECO:0000314"/>
    <property type="project" value="UniProtKB"/>
</dbReference>
<dbReference type="GO" id="GO:0031490">
    <property type="term" value="F:chromatin DNA binding"/>
    <property type="evidence" value="ECO:0000318"/>
    <property type="project" value="GO_Central"/>
</dbReference>
<dbReference type="GO" id="GO:0003684">
    <property type="term" value="F:damaged DNA binding"/>
    <property type="evidence" value="ECO:0000314"/>
    <property type="project" value="UniProtKB"/>
</dbReference>
<dbReference type="GO" id="GO:0003677">
    <property type="term" value="F:DNA binding"/>
    <property type="evidence" value="ECO:0000314"/>
    <property type="project" value="UniProtKB"/>
</dbReference>
<dbReference type="GO" id="GO:0140297">
    <property type="term" value="F:DNA-binding transcription factor binding"/>
    <property type="evidence" value="ECO:0000353"/>
    <property type="project" value="UniProtKB"/>
</dbReference>
<dbReference type="GO" id="GO:0004402">
    <property type="term" value="F:histone acetyltransferase activity"/>
    <property type="evidence" value="ECO:0000314"/>
    <property type="project" value="UniProtKB"/>
</dbReference>
<dbReference type="GO" id="GO:0140069">
    <property type="term" value="F:histone butyryltransferase activity"/>
    <property type="evidence" value="ECO:0007669"/>
    <property type="project" value="Ensembl"/>
</dbReference>
<dbReference type="GO" id="GO:0140068">
    <property type="term" value="F:histone crotonyltransferase activity"/>
    <property type="evidence" value="ECO:0000314"/>
    <property type="project" value="UniProtKB"/>
</dbReference>
<dbReference type="GO" id="GO:0044013">
    <property type="term" value="F:histone H2B acetyltransferase activity"/>
    <property type="evidence" value="ECO:0000314"/>
    <property type="project" value="GO_Central"/>
</dbReference>
<dbReference type="GO" id="GO:0010484">
    <property type="term" value="F:histone H3 acetyltransferase activity"/>
    <property type="evidence" value="ECO:0000314"/>
    <property type="project" value="GO_Central"/>
</dbReference>
<dbReference type="GO" id="GO:0140908">
    <property type="term" value="F:histone H3K122 acetyltransferase activity"/>
    <property type="evidence" value="ECO:0000314"/>
    <property type="project" value="UniProtKB"/>
</dbReference>
<dbReference type="GO" id="GO:0043993">
    <property type="term" value="F:histone H3K18 acetyltransferase activity"/>
    <property type="evidence" value="ECO:0000314"/>
    <property type="project" value="UniProtKB"/>
</dbReference>
<dbReference type="GO" id="GO:0044017">
    <property type="term" value="F:histone H3K27 acetyltransferase activity"/>
    <property type="evidence" value="ECO:0000314"/>
    <property type="project" value="UniProtKB"/>
</dbReference>
<dbReference type="GO" id="GO:0010485">
    <property type="term" value="F:histone H4 acetyltransferase activity"/>
    <property type="evidence" value="ECO:0000314"/>
    <property type="project" value="GO_Central"/>
</dbReference>
<dbReference type="GO" id="GO:0120301">
    <property type="term" value="F:histone lactyltransferase (CoA-dependent) activity"/>
    <property type="evidence" value="ECO:0000314"/>
    <property type="project" value="UniProtKB"/>
</dbReference>
<dbReference type="GO" id="GO:0004468">
    <property type="term" value="F:L-lysine N-acetyltransferase activity, acting on acetyl phosphate as donor"/>
    <property type="evidence" value="ECO:0000314"/>
    <property type="project" value="UniProtKB"/>
</dbReference>
<dbReference type="GO" id="GO:0051059">
    <property type="term" value="F:NF-kappaB binding"/>
    <property type="evidence" value="ECO:0000353"/>
    <property type="project" value="ARUK-UCL"/>
</dbReference>
<dbReference type="GO" id="GO:0050681">
    <property type="term" value="F:nuclear androgen receptor binding"/>
    <property type="evidence" value="ECO:0000353"/>
    <property type="project" value="BHF-UCL"/>
</dbReference>
<dbReference type="GO" id="GO:0016922">
    <property type="term" value="F:nuclear receptor binding"/>
    <property type="evidence" value="ECO:0000353"/>
    <property type="project" value="UniProtKB"/>
</dbReference>
<dbReference type="GO" id="GO:0002039">
    <property type="term" value="F:p53 binding"/>
    <property type="evidence" value="ECO:0007669"/>
    <property type="project" value="Ensembl"/>
</dbReference>
<dbReference type="GO" id="GO:0106226">
    <property type="term" value="F:peptide 2-hydroxyisobutyryltransferase activity"/>
    <property type="evidence" value="ECO:0007669"/>
    <property type="project" value="RHEA"/>
</dbReference>
<dbReference type="GO" id="GO:0140065">
    <property type="term" value="F:peptide butyryltransferase activity"/>
    <property type="evidence" value="ECO:0000314"/>
    <property type="project" value="UniProtKB"/>
</dbReference>
<dbReference type="GO" id="GO:0097157">
    <property type="term" value="F:pre-mRNA intronic binding"/>
    <property type="evidence" value="ECO:0007669"/>
    <property type="project" value="Ensembl"/>
</dbReference>
<dbReference type="GO" id="GO:0061920">
    <property type="term" value="F:protein propionyltransferase activity"/>
    <property type="evidence" value="ECO:0000314"/>
    <property type="project" value="UniProtKB"/>
</dbReference>
<dbReference type="GO" id="GO:0061733">
    <property type="term" value="F:protein-lysine-acetyltransferase activity"/>
    <property type="evidence" value="ECO:0000314"/>
    <property type="project" value="UniProtKB"/>
</dbReference>
<dbReference type="GO" id="GO:0061629">
    <property type="term" value="F:RNA polymerase II-specific DNA-binding transcription factor binding"/>
    <property type="evidence" value="ECO:0000353"/>
    <property type="project" value="BHF-UCL"/>
</dbReference>
<dbReference type="GO" id="GO:0097677">
    <property type="term" value="F:STAT family protein binding"/>
    <property type="evidence" value="ECO:0000353"/>
    <property type="project" value="UniProtKB"/>
</dbReference>
<dbReference type="GO" id="GO:0048156">
    <property type="term" value="F:tau protein binding"/>
    <property type="evidence" value="ECO:0000303"/>
    <property type="project" value="ARUK-UCL"/>
</dbReference>
<dbReference type="GO" id="GO:0003713">
    <property type="term" value="F:transcription coactivator activity"/>
    <property type="evidence" value="ECO:0000314"/>
    <property type="project" value="UniProtKB"/>
</dbReference>
<dbReference type="GO" id="GO:0001223">
    <property type="term" value="F:transcription coactivator binding"/>
    <property type="evidence" value="ECO:0000353"/>
    <property type="project" value="UniProtKB"/>
</dbReference>
<dbReference type="GO" id="GO:0001221">
    <property type="term" value="F:transcription coregulator binding"/>
    <property type="evidence" value="ECO:0000353"/>
    <property type="project" value="UniProtKB"/>
</dbReference>
<dbReference type="GO" id="GO:0008270">
    <property type="term" value="F:zinc ion binding"/>
    <property type="evidence" value="ECO:0007669"/>
    <property type="project" value="UniProtKB-KW"/>
</dbReference>
<dbReference type="GO" id="GO:0009887">
    <property type="term" value="P:animal organ morphogenesis"/>
    <property type="evidence" value="ECO:0007669"/>
    <property type="project" value="Ensembl"/>
</dbReference>
<dbReference type="GO" id="GO:0006915">
    <property type="term" value="P:apoptotic process"/>
    <property type="evidence" value="ECO:0000315"/>
    <property type="project" value="UniProtKB"/>
</dbReference>
<dbReference type="GO" id="GO:0030183">
    <property type="term" value="P:B cell differentiation"/>
    <property type="evidence" value="ECO:0007669"/>
    <property type="project" value="Ensembl"/>
</dbReference>
<dbReference type="GO" id="GO:0002209">
    <property type="term" value="P:behavioral defense response"/>
    <property type="evidence" value="ECO:0007669"/>
    <property type="project" value="Ensembl"/>
</dbReference>
<dbReference type="GO" id="GO:0007249">
    <property type="term" value="P:canonical NF-kappaB signal transduction"/>
    <property type="evidence" value="ECO:0000314"/>
    <property type="project" value="ARUK-UCL"/>
</dbReference>
<dbReference type="GO" id="GO:0071233">
    <property type="term" value="P:cellular response to L-leucine"/>
    <property type="evidence" value="ECO:0000314"/>
    <property type="project" value="UniProtKB"/>
</dbReference>
<dbReference type="GO" id="GO:0031669">
    <property type="term" value="P:cellular response to nutrient levels"/>
    <property type="evidence" value="ECO:0000314"/>
    <property type="project" value="UniProt"/>
</dbReference>
<dbReference type="GO" id="GO:0034644">
    <property type="term" value="P:cellular response to UV"/>
    <property type="evidence" value="ECO:0000314"/>
    <property type="project" value="UniProtKB"/>
</dbReference>
<dbReference type="GO" id="GO:0007623">
    <property type="term" value="P:circadian rhythm"/>
    <property type="evidence" value="ECO:0000250"/>
    <property type="project" value="UniProtKB"/>
</dbReference>
<dbReference type="GO" id="GO:0060325">
    <property type="term" value="P:face morphogenesis"/>
    <property type="evidence" value="ECO:0007669"/>
    <property type="project" value="Ensembl"/>
</dbReference>
<dbReference type="GO" id="GO:0045444">
    <property type="term" value="P:fat cell differentiation"/>
    <property type="evidence" value="ECO:0000250"/>
    <property type="project" value="UniProtKB"/>
</dbReference>
<dbReference type="GO" id="GO:0007507">
    <property type="term" value="P:heart development"/>
    <property type="evidence" value="ECO:0007669"/>
    <property type="project" value="Ensembl"/>
</dbReference>
<dbReference type="GO" id="GO:0018393">
    <property type="term" value="P:internal peptidyl-lysine acetylation"/>
    <property type="evidence" value="ECO:0000314"/>
    <property type="project" value="UniProtKB"/>
</dbReference>
<dbReference type="GO" id="GO:0006475">
    <property type="term" value="P:internal protein amino acid acetylation"/>
    <property type="evidence" value="ECO:0000314"/>
    <property type="project" value="UniProtKB"/>
</dbReference>
<dbReference type="GO" id="GO:0042771">
    <property type="term" value="P:intrinsic apoptotic signaling pathway in response to DNA damage by p53 class mediator"/>
    <property type="evidence" value="ECO:0000314"/>
    <property type="project" value="UniProtKB"/>
</dbReference>
<dbReference type="GO" id="GO:0007611">
    <property type="term" value="P:learning or memory"/>
    <property type="evidence" value="ECO:0007669"/>
    <property type="project" value="Ensembl"/>
</dbReference>
<dbReference type="GO" id="GO:0030324">
    <property type="term" value="P:lung development"/>
    <property type="evidence" value="ECO:0007669"/>
    <property type="project" value="Ensembl"/>
</dbReference>
<dbReference type="GO" id="GO:0035855">
    <property type="term" value="P:megakaryocyte development"/>
    <property type="evidence" value="ECO:0007669"/>
    <property type="project" value="Ensembl"/>
</dbReference>
<dbReference type="GO" id="GO:0035264">
    <property type="term" value="P:multicellular organism growth"/>
    <property type="evidence" value="ECO:0007669"/>
    <property type="project" value="Ensembl"/>
</dbReference>
<dbReference type="GO" id="GO:0018076">
    <property type="term" value="P:N-terminal peptidyl-lysine acetylation"/>
    <property type="evidence" value="ECO:0000314"/>
    <property type="project" value="UniProtKB"/>
</dbReference>
<dbReference type="GO" id="GO:0010507">
    <property type="term" value="P:negative regulation of autophagy"/>
    <property type="evidence" value="ECO:0000314"/>
    <property type="project" value="UniProt"/>
</dbReference>
<dbReference type="GO" id="GO:0045721">
    <property type="term" value="P:negative regulation of gluconeogenesis"/>
    <property type="evidence" value="ECO:0000314"/>
    <property type="project" value="UniProtKB"/>
</dbReference>
<dbReference type="GO" id="GO:0032460">
    <property type="term" value="P:negative regulation of protein oligomerization"/>
    <property type="evidence" value="ECO:0000315"/>
    <property type="project" value="ARUK-UCL"/>
</dbReference>
<dbReference type="GO" id="GO:0031333">
    <property type="term" value="P:negative regulation of protein-containing complex assembly"/>
    <property type="evidence" value="ECO:0000314"/>
    <property type="project" value="ARUK-UCL"/>
</dbReference>
<dbReference type="GO" id="GO:0000122">
    <property type="term" value="P:negative regulation of transcription by RNA polymerase II"/>
    <property type="evidence" value="ECO:0000314"/>
    <property type="project" value="UniProtKB"/>
</dbReference>
<dbReference type="GO" id="GO:0007399">
    <property type="term" value="P:nervous system development"/>
    <property type="evidence" value="ECO:0000304"/>
    <property type="project" value="ARUK-UCL"/>
</dbReference>
<dbReference type="GO" id="GO:0140067">
    <property type="term" value="P:peptidyl-lysine butyrylation"/>
    <property type="evidence" value="ECO:0000314"/>
    <property type="project" value="UniProtKB"/>
</dbReference>
<dbReference type="GO" id="GO:0140066">
    <property type="term" value="P:peptidyl-lysine crotonylation"/>
    <property type="evidence" value="ECO:0000314"/>
    <property type="project" value="UniProtKB"/>
</dbReference>
<dbReference type="GO" id="GO:0061921">
    <property type="term" value="P:peptidyl-lysine propionylation"/>
    <property type="evidence" value="ECO:0000314"/>
    <property type="project" value="UniProtKB"/>
</dbReference>
<dbReference type="GO" id="GO:0030220">
    <property type="term" value="P:platelet formation"/>
    <property type="evidence" value="ECO:0007669"/>
    <property type="project" value="Ensembl"/>
</dbReference>
<dbReference type="GO" id="GO:0043923">
    <property type="term" value="P:positive regulation by host of viral transcription"/>
    <property type="evidence" value="ECO:0000314"/>
    <property type="project" value="BHF-UCL"/>
</dbReference>
<dbReference type="GO" id="GO:0051091">
    <property type="term" value="P:positive regulation of DNA-binding transcription factor activity"/>
    <property type="evidence" value="ECO:0000314"/>
    <property type="project" value="UniProtKB"/>
</dbReference>
<dbReference type="GO" id="GO:0045893">
    <property type="term" value="P:positive regulation of DNA-templated transcription"/>
    <property type="evidence" value="ECO:0000314"/>
    <property type="project" value="UniProtKB"/>
</dbReference>
<dbReference type="GO" id="GO:0010976">
    <property type="term" value="P:positive regulation of neuron projection development"/>
    <property type="evidence" value="ECO:0000314"/>
    <property type="project" value="ARUK-UCL"/>
</dbReference>
<dbReference type="GO" id="GO:0042307">
    <property type="term" value="P:positive regulation of protein import into nucleus"/>
    <property type="evidence" value="ECO:0000314"/>
    <property type="project" value="UniProt"/>
</dbReference>
<dbReference type="GO" id="GO:0046427">
    <property type="term" value="P:positive regulation of receptor signaling pathway via JAK-STAT"/>
    <property type="evidence" value="ECO:0000314"/>
    <property type="project" value="UniProt"/>
</dbReference>
<dbReference type="GO" id="GO:2000330">
    <property type="term" value="P:positive regulation of T-helper 17 cell lineage commitment"/>
    <property type="evidence" value="ECO:0000314"/>
    <property type="project" value="UniProt"/>
</dbReference>
<dbReference type="GO" id="GO:1904263">
    <property type="term" value="P:positive regulation of TORC1 signaling"/>
    <property type="evidence" value="ECO:0000314"/>
    <property type="project" value="UniProtKB"/>
</dbReference>
<dbReference type="GO" id="GO:1904515">
    <property type="term" value="P:positive regulation of TORC2 signaling"/>
    <property type="evidence" value="ECO:0000314"/>
    <property type="project" value="UniProtKB"/>
</dbReference>
<dbReference type="GO" id="GO:0045944">
    <property type="term" value="P:positive regulation of transcription by RNA polymerase II"/>
    <property type="evidence" value="ECO:0000314"/>
    <property type="project" value="UniProtKB"/>
</dbReference>
<dbReference type="GO" id="GO:0030511">
    <property type="term" value="P:positive regulation of transforming growth factor beta receptor signaling pathway"/>
    <property type="evidence" value="ECO:0000315"/>
    <property type="project" value="UniProtKB"/>
</dbReference>
<dbReference type="GO" id="GO:0006473">
    <property type="term" value="P:protein acetylation"/>
    <property type="evidence" value="ECO:0000314"/>
    <property type="project" value="UniProtKB"/>
</dbReference>
<dbReference type="GO" id="GO:0031648">
    <property type="term" value="P:protein destabilization"/>
    <property type="evidence" value="ECO:0000315"/>
    <property type="project" value="UniProtKB"/>
</dbReference>
<dbReference type="GO" id="GO:0050821">
    <property type="term" value="P:protein stabilization"/>
    <property type="evidence" value="ECO:0000250"/>
    <property type="project" value="UniProtKB"/>
</dbReference>
<dbReference type="GO" id="GO:0060765">
    <property type="term" value="P:regulation of androgen receptor signaling pathway"/>
    <property type="evidence" value="ECO:0000314"/>
    <property type="project" value="BHF-UCL"/>
</dbReference>
<dbReference type="GO" id="GO:0010506">
    <property type="term" value="P:regulation of autophagy"/>
    <property type="evidence" value="ECO:0000304"/>
    <property type="project" value="ParkinsonsUK-UCL"/>
</dbReference>
<dbReference type="GO" id="GO:1900034">
    <property type="term" value="P:regulation of cellular response to heat"/>
    <property type="evidence" value="ECO:0000304"/>
    <property type="project" value="Reactome"/>
</dbReference>
<dbReference type="GO" id="GO:0006110">
    <property type="term" value="P:regulation of glycolytic process"/>
    <property type="evidence" value="ECO:0000314"/>
    <property type="project" value="UniProtKB"/>
</dbReference>
<dbReference type="GO" id="GO:0010821">
    <property type="term" value="P:regulation of mitochondrion organization"/>
    <property type="evidence" value="ECO:0000250"/>
    <property type="project" value="UniProtKB"/>
</dbReference>
<dbReference type="GO" id="GO:1901796">
    <property type="term" value="P:regulation of signal transduction by p53 class mediator"/>
    <property type="evidence" value="ECO:0000304"/>
    <property type="project" value="Reactome"/>
</dbReference>
<dbReference type="GO" id="GO:0090043">
    <property type="term" value="P:regulation of tubulin deacetylation"/>
    <property type="evidence" value="ECO:0000314"/>
    <property type="project" value="UniProtKB"/>
</dbReference>
<dbReference type="GO" id="GO:0043627">
    <property type="term" value="P:response to estrogen"/>
    <property type="evidence" value="ECO:0000314"/>
    <property type="project" value="UniProtKB"/>
</dbReference>
<dbReference type="GO" id="GO:0001666">
    <property type="term" value="P:response to hypoxia"/>
    <property type="evidence" value="ECO:0000314"/>
    <property type="project" value="UniProtKB"/>
</dbReference>
<dbReference type="GO" id="GO:0007519">
    <property type="term" value="P:skeletal muscle tissue development"/>
    <property type="evidence" value="ECO:0007669"/>
    <property type="project" value="Ensembl"/>
</dbReference>
<dbReference type="GO" id="GO:0001756">
    <property type="term" value="P:somitogenesis"/>
    <property type="evidence" value="ECO:0007669"/>
    <property type="project" value="Ensembl"/>
</dbReference>
<dbReference type="GO" id="GO:0002223">
    <property type="term" value="P:stimulatory C-type lectin receptor signaling pathway"/>
    <property type="evidence" value="ECO:0000304"/>
    <property type="project" value="Reactome"/>
</dbReference>
<dbReference type="GO" id="GO:0036268">
    <property type="term" value="P:swimming"/>
    <property type="evidence" value="ECO:0007669"/>
    <property type="project" value="Ensembl"/>
</dbReference>
<dbReference type="GO" id="GO:0001966">
    <property type="term" value="P:thigmotaxis"/>
    <property type="evidence" value="ECO:0007669"/>
    <property type="project" value="Ensembl"/>
</dbReference>
<dbReference type="GO" id="GO:0045815">
    <property type="term" value="P:transcription initiation-coupled chromatin remodeling"/>
    <property type="evidence" value="ECO:0000314"/>
    <property type="project" value="UniProtKB"/>
</dbReference>
<dbReference type="CDD" id="cd05495">
    <property type="entry name" value="Bromo_cbp_like"/>
    <property type="match status" value="1"/>
</dbReference>
<dbReference type="CDD" id="cd20910">
    <property type="entry name" value="NCBD_CREBBP-p300_like"/>
    <property type="match status" value="1"/>
</dbReference>
<dbReference type="CDD" id="cd15646">
    <property type="entry name" value="PHD_p300"/>
    <property type="match status" value="1"/>
</dbReference>
<dbReference type="CDD" id="cd15802">
    <property type="entry name" value="RING_CBP-p300"/>
    <property type="match status" value="1"/>
</dbReference>
<dbReference type="CDD" id="cd02337">
    <property type="entry name" value="ZZ_CBP"/>
    <property type="match status" value="1"/>
</dbReference>
<dbReference type="DisProt" id="DP00633"/>
<dbReference type="FunFam" id="1.10.246.20:FF:000001">
    <property type="entry name" value="E1A binding protein p300"/>
    <property type="match status" value="1"/>
</dbReference>
<dbReference type="FunFam" id="1.20.1020.10:FF:000001">
    <property type="entry name" value="E1A binding protein p300"/>
    <property type="match status" value="1"/>
</dbReference>
<dbReference type="FunFam" id="1.20.1020.10:FF:000002">
    <property type="entry name" value="E1A binding protein p300"/>
    <property type="match status" value="1"/>
</dbReference>
<dbReference type="FunFam" id="2.10.110.40:FF:000001">
    <property type="entry name" value="E1A binding protein p300"/>
    <property type="match status" value="1"/>
</dbReference>
<dbReference type="FunFam" id="3.30.60.90:FF:000003">
    <property type="entry name" value="E1A binding protein p300"/>
    <property type="match status" value="1"/>
</dbReference>
<dbReference type="FunFam" id="1.20.920.10:FF:000001">
    <property type="entry name" value="Histone acetyltransferase p300"/>
    <property type="match status" value="1"/>
</dbReference>
<dbReference type="FunFam" id="3.30.40.10:FF:000034">
    <property type="entry name" value="Histone acetyltransferase p300"/>
    <property type="match status" value="1"/>
</dbReference>
<dbReference type="Gene3D" id="2.10.110.40">
    <property type="match status" value="1"/>
</dbReference>
<dbReference type="Gene3D" id="3.30.60.90">
    <property type="match status" value="1"/>
</dbReference>
<dbReference type="Gene3D" id="1.20.920.10">
    <property type="entry name" value="Bromodomain-like"/>
    <property type="match status" value="1"/>
</dbReference>
<dbReference type="Gene3D" id="1.10.246.20">
    <property type="entry name" value="Coactivator CBP, KIX domain"/>
    <property type="match status" value="1"/>
</dbReference>
<dbReference type="Gene3D" id="1.10.1630.10">
    <property type="entry name" value="Nuclear receptor coactivator, CREB-bp-like, interlocking domain"/>
    <property type="match status" value="1"/>
</dbReference>
<dbReference type="Gene3D" id="1.20.1020.10">
    <property type="entry name" value="TAZ domain"/>
    <property type="match status" value="2"/>
</dbReference>
<dbReference type="Gene3D" id="3.30.40.10">
    <property type="entry name" value="Zinc/RING finger domain, C3HC4 (zinc finger)"/>
    <property type="match status" value="1"/>
</dbReference>
<dbReference type="IDEAL" id="IID00070"/>
<dbReference type="InterPro" id="IPR001487">
    <property type="entry name" value="Bromodomain"/>
</dbReference>
<dbReference type="InterPro" id="IPR036427">
    <property type="entry name" value="Bromodomain-like_sf"/>
</dbReference>
<dbReference type="InterPro" id="IPR018359">
    <property type="entry name" value="Bromodomain_CS"/>
</dbReference>
<dbReference type="InterPro" id="IPR031162">
    <property type="entry name" value="CBP_P300_HAT"/>
</dbReference>
<dbReference type="InterPro" id="IPR013178">
    <property type="entry name" value="Histone_AcTrfase_Rtt109/CBP"/>
</dbReference>
<dbReference type="InterPro" id="IPR003101">
    <property type="entry name" value="KIX_dom"/>
</dbReference>
<dbReference type="InterPro" id="IPR036529">
    <property type="entry name" value="KIX_dom_sf"/>
</dbReference>
<dbReference type="InterPro" id="IPR009110">
    <property type="entry name" value="Nuc_rcpt_coact"/>
</dbReference>
<dbReference type="InterPro" id="IPR014744">
    <property type="entry name" value="Nuc_rcpt_coact_CREBbp"/>
</dbReference>
<dbReference type="InterPro" id="IPR037073">
    <property type="entry name" value="Nuc_rcpt_coact_CREBbp_sf"/>
</dbReference>
<dbReference type="InterPro" id="IPR056484">
    <property type="entry name" value="PHD_P300"/>
</dbReference>
<dbReference type="InterPro" id="IPR010303">
    <property type="entry name" value="RING_CBP-p300"/>
</dbReference>
<dbReference type="InterPro" id="IPR038547">
    <property type="entry name" value="RING_CBP-p300_sf"/>
</dbReference>
<dbReference type="InterPro" id="IPR035898">
    <property type="entry name" value="TAZ_dom_sf"/>
</dbReference>
<dbReference type="InterPro" id="IPR013083">
    <property type="entry name" value="Znf_RING/FYVE/PHD"/>
</dbReference>
<dbReference type="InterPro" id="IPR000197">
    <property type="entry name" value="Znf_TAZ"/>
</dbReference>
<dbReference type="InterPro" id="IPR000433">
    <property type="entry name" value="Znf_ZZ"/>
</dbReference>
<dbReference type="InterPro" id="IPR043145">
    <property type="entry name" value="Znf_ZZ_sf"/>
</dbReference>
<dbReference type="PANTHER" id="PTHR13808">
    <property type="entry name" value="CBP/P300-RELATED"/>
    <property type="match status" value="1"/>
</dbReference>
<dbReference type="PANTHER" id="PTHR13808:SF29">
    <property type="entry name" value="HISTONE ACETYLTRANSFERASE P300"/>
    <property type="match status" value="1"/>
</dbReference>
<dbReference type="Pfam" id="PF00439">
    <property type="entry name" value="Bromodomain"/>
    <property type="match status" value="1"/>
</dbReference>
<dbReference type="Pfam" id="PF09030">
    <property type="entry name" value="Creb_binding"/>
    <property type="match status" value="1"/>
</dbReference>
<dbReference type="Pfam" id="PF08214">
    <property type="entry name" value="HAT_KAT11"/>
    <property type="match status" value="1"/>
</dbReference>
<dbReference type="Pfam" id="PF02172">
    <property type="entry name" value="KIX"/>
    <property type="match status" value="1"/>
</dbReference>
<dbReference type="Pfam" id="PF23570">
    <property type="entry name" value="PHD_P300"/>
    <property type="match status" value="1"/>
</dbReference>
<dbReference type="Pfam" id="PF06001">
    <property type="entry name" value="RING_CBP-p300"/>
    <property type="match status" value="1"/>
</dbReference>
<dbReference type="Pfam" id="PF02135">
    <property type="entry name" value="zf-TAZ"/>
    <property type="match status" value="2"/>
</dbReference>
<dbReference type="Pfam" id="PF00569">
    <property type="entry name" value="ZZ"/>
    <property type="match status" value="1"/>
</dbReference>
<dbReference type="PRINTS" id="PR00503">
    <property type="entry name" value="BROMODOMAIN"/>
</dbReference>
<dbReference type="SMART" id="SM00297">
    <property type="entry name" value="BROMO"/>
    <property type="match status" value="1"/>
</dbReference>
<dbReference type="SMART" id="SM01250">
    <property type="entry name" value="KAT11"/>
    <property type="match status" value="1"/>
</dbReference>
<dbReference type="SMART" id="SM00551">
    <property type="entry name" value="ZnF_TAZ"/>
    <property type="match status" value="2"/>
</dbReference>
<dbReference type="SMART" id="SM00291">
    <property type="entry name" value="ZnF_ZZ"/>
    <property type="match status" value="1"/>
</dbReference>
<dbReference type="SUPFAM" id="SSF47370">
    <property type="entry name" value="Bromodomain"/>
    <property type="match status" value="1"/>
</dbReference>
<dbReference type="SUPFAM" id="SSF47040">
    <property type="entry name" value="Kix domain of CBP (creb binding protein)"/>
    <property type="match status" value="1"/>
</dbReference>
<dbReference type="SUPFAM" id="SSF69125">
    <property type="entry name" value="Nuclear receptor coactivator interlocking domain"/>
    <property type="match status" value="1"/>
</dbReference>
<dbReference type="SUPFAM" id="SSF57850">
    <property type="entry name" value="RING/U-box"/>
    <property type="match status" value="1"/>
</dbReference>
<dbReference type="SUPFAM" id="SSF57933">
    <property type="entry name" value="TAZ domain"/>
    <property type="match status" value="2"/>
</dbReference>
<dbReference type="PROSITE" id="PS00633">
    <property type="entry name" value="BROMODOMAIN_1"/>
    <property type="match status" value="1"/>
</dbReference>
<dbReference type="PROSITE" id="PS50014">
    <property type="entry name" value="BROMODOMAIN_2"/>
    <property type="match status" value="1"/>
</dbReference>
<dbReference type="PROSITE" id="PS51727">
    <property type="entry name" value="CBP_P300_HAT"/>
    <property type="match status" value="1"/>
</dbReference>
<dbReference type="PROSITE" id="PS50952">
    <property type="entry name" value="KIX"/>
    <property type="match status" value="1"/>
</dbReference>
<dbReference type="PROSITE" id="PS50134">
    <property type="entry name" value="ZF_TAZ"/>
    <property type="match status" value="2"/>
</dbReference>
<dbReference type="PROSITE" id="PS01357">
    <property type="entry name" value="ZF_ZZ_1"/>
    <property type="match status" value="1"/>
</dbReference>
<dbReference type="PROSITE" id="PS50135">
    <property type="entry name" value="ZF_ZZ_2"/>
    <property type="match status" value="1"/>
</dbReference>
<evidence type="ECO:0000250" key="1">
    <source>
        <dbReference type="UniProtKB" id="B2RWS6"/>
    </source>
</evidence>
<evidence type="ECO:0000255" key="2"/>
<evidence type="ECO:0000255" key="3">
    <source>
        <dbReference type="PROSITE-ProRule" id="PRU00035"/>
    </source>
</evidence>
<evidence type="ECO:0000255" key="4">
    <source>
        <dbReference type="PROSITE-ProRule" id="PRU00203"/>
    </source>
</evidence>
<evidence type="ECO:0000255" key="5">
    <source>
        <dbReference type="PROSITE-ProRule" id="PRU00228"/>
    </source>
</evidence>
<evidence type="ECO:0000255" key="6">
    <source>
        <dbReference type="PROSITE-ProRule" id="PRU00311"/>
    </source>
</evidence>
<evidence type="ECO:0000255" key="7">
    <source>
        <dbReference type="PROSITE-ProRule" id="PRU01065"/>
    </source>
</evidence>
<evidence type="ECO:0000256" key="8">
    <source>
        <dbReference type="SAM" id="MobiDB-lite"/>
    </source>
</evidence>
<evidence type="ECO:0000269" key="9">
    <source>
    </source>
</evidence>
<evidence type="ECO:0000269" key="10">
    <source>
    </source>
</evidence>
<evidence type="ECO:0000269" key="11">
    <source>
    </source>
</evidence>
<evidence type="ECO:0000269" key="12">
    <source>
    </source>
</evidence>
<evidence type="ECO:0000269" key="13">
    <source>
    </source>
</evidence>
<evidence type="ECO:0000269" key="14">
    <source>
    </source>
</evidence>
<evidence type="ECO:0000269" key="15">
    <source>
    </source>
</evidence>
<evidence type="ECO:0000269" key="16">
    <source>
    </source>
</evidence>
<evidence type="ECO:0000269" key="17">
    <source>
    </source>
</evidence>
<evidence type="ECO:0000269" key="18">
    <source>
    </source>
</evidence>
<evidence type="ECO:0000269" key="19">
    <source>
    </source>
</evidence>
<evidence type="ECO:0000269" key="20">
    <source>
    </source>
</evidence>
<evidence type="ECO:0000269" key="21">
    <source>
    </source>
</evidence>
<evidence type="ECO:0000269" key="22">
    <source>
    </source>
</evidence>
<evidence type="ECO:0000269" key="23">
    <source>
    </source>
</evidence>
<evidence type="ECO:0000269" key="24">
    <source>
    </source>
</evidence>
<evidence type="ECO:0000269" key="25">
    <source>
    </source>
</evidence>
<evidence type="ECO:0000269" key="26">
    <source>
    </source>
</evidence>
<evidence type="ECO:0000269" key="27">
    <source>
    </source>
</evidence>
<evidence type="ECO:0000269" key="28">
    <source>
    </source>
</evidence>
<evidence type="ECO:0000269" key="29">
    <source>
    </source>
</evidence>
<evidence type="ECO:0000269" key="30">
    <source>
    </source>
</evidence>
<evidence type="ECO:0000269" key="31">
    <source>
    </source>
</evidence>
<evidence type="ECO:0000269" key="32">
    <source>
    </source>
</evidence>
<evidence type="ECO:0000269" key="33">
    <source>
    </source>
</evidence>
<evidence type="ECO:0000269" key="34">
    <source>
    </source>
</evidence>
<evidence type="ECO:0000269" key="35">
    <source>
    </source>
</evidence>
<evidence type="ECO:0000269" key="36">
    <source>
    </source>
</evidence>
<evidence type="ECO:0000269" key="37">
    <source>
    </source>
</evidence>
<evidence type="ECO:0000269" key="38">
    <source>
    </source>
</evidence>
<evidence type="ECO:0000269" key="39">
    <source>
    </source>
</evidence>
<evidence type="ECO:0000269" key="40">
    <source>
    </source>
</evidence>
<evidence type="ECO:0000269" key="41">
    <source>
    </source>
</evidence>
<evidence type="ECO:0000269" key="42">
    <source>
    </source>
</evidence>
<evidence type="ECO:0000269" key="43">
    <source>
    </source>
</evidence>
<evidence type="ECO:0000269" key="44">
    <source>
    </source>
</evidence>
<evidence type="ECO:0000269" key="45">
    <source>
    </source>
</evidence>
<evidence type="ECO:0000269" key="46">
    <source>
    </source>
</evidence>
<evidence type="ECO:0000269" key="47">
    <source>
    </source>
</evidence>
<evidence type="ECO:0000269" key="48">
    <source>
    </source>
</evidence>
<evidence type="ECO:0000269" key="49">
    <source>
    </source>
</evidence>
<evidence type="ECO:0000269" key="50">
    <source>
    </source>
</evidence>
<evidence type="ECO:0000269" key="51">
    <source>
    </source>
</evidence>
<evidence type="ECO:0000269" key="52">
    <source>
    </source>
</evidence>
<evidence type="ECO:0000269" key="53">
    <source>
    </source>
</evidence>
<evidence type="ECO:0000269" key="54">
    <source>
    </source>
</evidence>
<evidence type="ECO:0000269" key="55">
    <source>
    </source>
</evidence>
<evidence type="ECO:0000269" key="56">
    <source>
    </source>
</evidence>
<evidence type="ECO:0000269" key="57">
    <source>
    </source>
</evidence>
<evidence type="ECO:0000269" key="58">
    <source>
    </source>
</evidence>
<evidence type="ECO:0000269" key="59">
    <source>
    </source>
</evidence>
<evidence type="ECO:0000269" key="60">
    <source>
    </source>
</evidence>
<evidence type="ECO:0000269" key="61">
    <source>
    </source>
</evidence>
<evidence type="ECO:0000269" key="62">
    <source>
    </source>
</evidence>
<evidence type="ECO:0000269" key="63">
    <source>
    </source>
</evidence>
<evidence type="ECO:0000269" key="64">
    <source>
    </source>
</evidence>
<evidence type="ECO:0000269" key="65">
    <source>
    </source>
</evidence>
<evidence type="ECO:0000269" key="66">
    <source>
    </source>
</evidence>
<evidence type="ECO:0000269" key="67">
    <source>
    </source>
</evidence>
<evidence type="ECO:0000269" key="68">
    <source>
    </source>
</evidence>
<evidence type="ECO:0000269" key="69">
    <source>
    </source>
</evidence>
<evidence type="ECO:0000269" key="70">
    <source>
    </source>
</evidence>
<evidence type="ECO:0000269" key="71">
    <source>
    </source>
</evidence>
<evidence type="ECO:0000269" key="72">
    <source>
    </source>
</evidence>
<evidence type="ECO:0000269" key="73">
    <source>
    </source>
</evidence>
<evidence type="ECO:0000269" key="74">
    <source>
    </source>
</evidence>
<evidence type="ECO:0000269" key="75">
    <source>
    </source>
</evidence>
<evidence type="ECO:0000269" key="76">
    <source>
    </source>
</evidence>
<evidence type="ECO:0000269" key="77">
    <source>
    </source>
</evidence>
<evidence type="ECO:0000269" key="78">
    <source>
    </source>
</evidence>
<evidence type="ECO:0000269" key="79">
    <source>
    </source>
</evidence>
<evidence type="ECO:0000269" key="80">
    <source>
    </source>
</evidence>
<evidence type="ECO:0000269" key="81">
    <source>
    </source>
</evidence>
<evidence type="ECO:0000269" key="82">
    <source>
    </source>
</evidence>
<evidence type="ECO:0000269" key="83">
    <source>
    </source>
</evidence>
<evidence type="ECO:0000269" key="84">
    <source>
    </source>
</evidence>
<evidence type="ECO:0000269" key="85">
    <source>
    </source>
</evidence>
<evidence type="ECO:0000269" key="86">
    <source>
    </source>
</evidence>
<evidence type="ECO:0000269" key="87">
    <source>
    </source>
</evidence>
<evidence type="ECO:0000269" key="88">
    <source>
    </source>
</evidence>
<evidence type="ECO:0000269" key="89">
    <source>
    </source>
</evidence>
<evidence type="ECO:0000269" key="90">
    <source>
    </source>
</evidence>
<evidence type="ECO:0000269" key="91">
    <source>
    </source>
</evidence>
<evidence type="ECO:0000269" key="92">
    <source>
    </source>
</evidence>
<evidence type="ECO:0000269" key="93">
    <source>
    </source>
</evidence>
<evidence type="ECO:0000269" key="94">
    <source>
    </source>
</evidence>
<evidence type="ECO:0000269" key="95">
    <source>
    </source>
</evidence>
<evidence type="ECO:0000269" key="96">
    <source>
    </source>
</evidence>
<evidence type="ECO:0000269" key="97">
    <source>
    </source>
</evidence>
<evidence type="ECO:0000269" key="98">
    <source>
    </source>
</evidence>
<evidence type="ECO:0000269" key="99">
    <source>
    </source>
</evidence>
<evidence type="ECO:0000269" key="100">
    <source>
    </source>
</evidence>
<evidence type="ECO:0000269" key="101">
    <source>
    </source>
</evidence>
<evidence type="ECO:0000269" key="102">
    <source>
    </source>
</evidence>
<evidence type="ECO:0000269" key="103">
    <source>
    </source>
</evidence>
<evidence type="ECO:0000269" key="104">
    <source>
    </source>
</evidence>
<evidence type="ECO:0000269" key="105">
    <source>
    </source>
</evidence>
<evidence type="ECO:0000269" key="106">
    <source>
    </source>
</evidence>
<evidence type="ECO:0000269" key="107">
    <source>
    </source>
</evidence>
<evidence type="ECO:0000269" key="108">
    <source>
    </source>
</evidence>
<evidence type="ECO:0000269" key="109">
    <source>
    </source>
</evidence>
<evidence type="ECO:0000269" key="110">
    <source>
    </source>
</evidence>
<evidence type="ECO:0000269" key="111">
    <source>
    </source>
</evidence>
<evidence type="ECO:0000269" key="112">
    <source>
    </source>
</evidence>
<evidence type="ECO:0000269" key="113">
    <source>
    </source>
</evidence>
<evidence type="ECO:0000269" key="114">
    <source>
    </source>
</evidence>
<evidence type="ECO:0000269" key="115">
    <source>
    </source>
</evidence>
<evidence type="ECO:0000269" key="116">
    <source>
    </source>
</evidence>
<evidence type="ECO:0000269" key="117">
    <source>
    </source>
</evidence>
<evidence type="ECO:0000269" key="118">
    <source>
    </source>
</evidence>
<evidence type="ECO:0000269" key="119">
    <source>
    </source>
</evidence>
<evidence type="ECO:0000269" key="120">
    <source>
    </source>
</evidence>
<evidence type="ECO:0000269" key="121">
    <source>
    </source>
</evidence>
<evidence type="ECO:0000269" key="122">
    <source>
    </source>
</evidence>
<evidence type="ECO:0000269" key="123">
    <source>
    </source>
</evidence>
<evidence type="ECO:0000269" key="124">
    <source>
    </source>
</evidence>
<evidence type="ECO:0000269" key="125">
    <source>
    </source>
</evidence>
<evidence type="ECO:0000269" key="126">
    <source>
    </source>
</evidence>
<evidence type="ECO:0000269" key="127">
    <source>
    </source>
</evidence>
<evidence type="ECO:0000269" key="128">
    <source>
    </source>
</evidence>
<evidence type="ECO:0000303" key="129">
    <source>
    </source>
</evidence>
<evidence type="ECO:0000303" key="130">
    <source>
    </source>
</evidence>
<evidence type="ECO:0000305" key="131"/>
<evidence type="ECO:0000305" key="132">
    <source>
    </source>
</evidence>
<evidence type="ECO:0000305" key="133">
    <source>
    </source>
</evidence>
<evidence type="ECO:0000305" key="134">
    <source>
    </source>
</evidence>
<evidence type="ECO:0000305" key="135">
    <source>
    </source>
</evidence>
<evidence type="ECO:0000312" key="136">
    <source>
        <dbReference type="HGNC" id="HGNC:3373"/>
    </source>
</evidence>
<evidence type="ECO:0007744" key="137">
    <source>
    </source>
</evidence>
<evidence type="ECO:0007744" key="138">
    <source>
    </source>
</evidence>
<evidence type="ECO:0007744" key="139">
    <source>
    </source>
</evidence>
<evidence type="ECO:0007744" key="140">
    <source>
    </source>
</evidence>
<evidence type="ECO:0007744" key="141">
    <source>
    </source>
</evidence>
<evidence type="ECO:0007744" key="142">
    <source>
    </source>
</evidence>
<evidence type="ECO:0007829" key="143">
    <source>
        <dbReference type="PDB" id="1P4Q"/>
    </source>
</evidence>
<evidence type="ECO:0007829" key="144">
    <source>
        <dbReference type="PDB" id="2MZD"/>
    </source>
</evidence>
<evidence type="ECO:0007829" key="145">
    <source>
        <dbReference type="PDB" id="3BIY"/>
    </source>
</evidence>
<evidence type="ECO:0007829" key="146">
    <source>
        <dbReference type="PDB" id="3T92"/>
    </source>
</evidence>
<evidence type="ECO:0007829" key="147">
    <source>
        <dbReference type="PDB" id="4BHW"/>
    </source>
</evidence>
<evidence type="ECO:0007829" key="148">
    <source>
        <dbReference type="PDB" id="5BT3"/>
    </source>
</evidence>
<evidence type="ECO:0007829" key="149">
    <source>
        <dbReference type="PDB" id="6DS6"/>
    </source>
</evidence>
<evidence type="ECO:0007829" key="150">
    <source>
        <dbReference type="PDB" id="6FGN"/>
    </source>
</evidence>
<evidence type="ECO:0007829" key="151">
    <source>
        <dbReference type="PDB" id="6GYR"/>
    </source>
</evidence>
<evidence type="ECO:0007829" key="152">
    <source>
        <dbReference type="PDB" id="6PF1"/>
    </source>
</evidence>
<evidence type="ECO:0007829" key="153">
    <source>
        <dbReference type="PDB" id="6V8K"/>
    </source>
</evidence>
<evidence type="ECO:0007829" key="154">
    <source>
        <dbReference type="PDB" id="7QGS"/>
    </source>
</evidence>
<evidence type="ECO:0007829" key="155">
    <source>
        <dbReference type="PDB" id="7VHZ"/>
    </source>
</evidence>
<reference key="1">
    <citation type="journal article" date="1994" name="Genes Dev.">
        <title>Molecular cloning and functional analysis of the adenovirus E1A-associated 300-kD protein (p300) reveals a protein with properties of a transcriptional adaptor.</title>
        <authorList>
            <person name="Eckner R."/>
            <person name="Ewen M.E."/>
            <person name="Newsome D."/>
            <person name="Gerdes M."/>
            <person name="Decaprio J.A."/>
            <person name="Lawrence J.B."/>
            <person name="Livingston D.M."/>
        </authorList>
    </citation>
    <scope>NUCLEOTIDE SEQUENCE [MRNA]</scope>
    <scope>VARIANT PRO-2223</scope>
</reference>
<reference key="2">
    <citation type="journal article" date="1999" name="Nature">
        <title>The DNA sequence of human chromosome 22.</title>
        <authorList>
            <person name="Dunham I."/>
            <person name="Hunt A.R."/>
            <person name="Collins J.E."/>
            <person name="Bruskiewich R."/>
            <person name="Beare D.M."/>
            <person name="Clamp M."/>
            <person name="Smink L.J."/>
            <person name="Ainscough R."/>
            <person name="Almeida J.P."/>
            <person name="Babbage A.K."/>
            <person name="Bagguley C."/>
            <person name="Bailey J."/>
            <person name="Barlow K.F."/>
            <person name="Bates K.N."/>
            <person name="Beasley O.P."/>
            <person name="Bird C.P."/>
            <person name="Blakey S.E."/>
            <person name="Bridgeman A.M."/>
            <person name="Buck D."/>
            <person name="Burgess J."/>
            <person name="Burrill W.D."/>
            <person name="Burton J."/>
            <person name="Carder C."/>
            <person name="Carter N.P."/>
            <person name="Chen Y."/>
            <person name="Clark G."/>
            <person name="Clegg S.M."/>
            <person name="Cobley V.E."/>
            <person name="Cole C.G."/>
            <person name="Collier R.E."/>
            <person name="Connor R."/>
            <person name="Conroy D."/>
            <person name="Corby N.R."/>
            <person name="Coville G.J."/>
            <person name="Cox A.V."/>
            <person name="Davis J."/>
            <person name="Dawson E."/>
            <person name="Dhami P.D."/>
            <person name="Dockree C."/>
            <person name="Dodsworth S.J."/>
            <person name="Durbin R.M."/>
            <person name="Ellington A.G."/>
            <person name="Evans K.L."/>
            <person name="Fey J.M."/>
            <person name="Fleming K."/>
            <person name="French L."/>
            <person name="Garner A.A."/>
            <person name="Gilbert J.G.R."/>
            <person name="Goward M.E."/>
            <person name="Grafham D.V."/>
            <person name="Griffiths M.N.D."/>
            <person name="Hall C."/>
            <person name="Hall R.E."/>
            <person name="Hall-Tamlyn G."/>
            <person name="Heathcott R.W."/>
            <person name="Ho S."/>
            <person name="Holmes S."/>
            <person name="Hunt S.E."/>
            <person name="Jones M.C."/>
            <person name="Kershaw J."/>
            <person name="Kimberley A.M."/>
            <person name="King A."/>
            <person name="Laird G.K."/>
            <person name="Langford C.F."/>
            <person name="Leversha M.A."/>
            <person name="Lloyd C."/>
            <person name="Lloyd D.M."/>
            <person name="Martyn I.D."/>
            <person name="Mashreghi-Mohammadi M."/>
            <person name="Matthews L.H."/>
            <person name="Mccann O.T."/>
            <person name="Mcclay J."/>
            <person name="Mclaren S."/>
            <person name="McMurray A.A."/>
            <person name="Milne S.A."/>
            <person name="Mortimore B.J."/>
            <person name="Odell C.N."/>
            <person name="Pavitt R."/>
            <person name="Pearce A.V."/>
            <person name="Pearson D."/>
            <person name="Phillimore B.J.C.T."/>
            <person name="Phillips S.H."/>
            <person name="Plumb R.W."/>
            <person name="Ramsay H."/>
            <person name="Ramsey Y."/>
            <person name="Rogers L."/>
            <person name="Ross M.T."/>
            <person name="Scott C.E."/>
            <person name="Sehra H.K."/>
            <person name="Skuce C.D."/>
            <person name="Smalley S."/>
            <person name="Smith M.L."/>
            <person name="Soderlund C."/>
            <person name="Spragon L."/>
            <person name="Steward C.A."/>
            <person name="Sulston J.E."/>
            <person name="Swann R.M."/>
            <person name="Vaudin M."/>
            <person name="Wall M."/>
            <person name="Wallis J.M."/>
            <person name="Whiteley M.N."/>
            <person name="Willey D.L."/>
            <person name="Williams L."/>
            <person name="Williams S.A."/>
            <person name="Williamson H."/>
            <person name="Wilmer T.E."/>
            <person name="Wilming L."/>
            <person name="Wright C.L."/>
            <person name="Hubbard T."/>
            <person name="Bentley D.R."/>
            <person name="Beck S."/>
            <person name="Rogers J."/>
            <person name="Shimizu N."/>
            <person name="Minoshima S."/>
            <person name="Kawasaki K."/>
            <person name="Sasaki T."/>
            <person name="Asakawa S."/>
            <person name="Kudoh J."/>
            <person name="Shintani A."/>
            <person name="Shibuya K."/>
            <person name="Yoshizaki Y."/>
            <person name="Aoki N."/>
            <person name="Mitsuyama S."/>
            <person name="Roe B.A."/>
            <person name="Chen F."/>
            <person name="Chu L."/>
            <person name="Crabtree J."/>
            <person name="Deschamps S."/>
            <person name="Do A."/>
            <person name="Do T."/>
            <person name="Dorman A."/>
            <person name="Fang F."/>
            <person name="Fu Y."/>
            <person name="Hu P."/>
            <person name="Hua A."/>
            <person name="Kenton S."/>
            <person name="Lai H."/>
            <person name="Lao H.I."/>
            <person name="Lewis J."/>
            <person name="Lewis S."/>
            <person name="Lin S.-P."/>
            <person name="Loh P."/>
            <person name="Malaj E."/>
            <person name="Nguyen T."/>
            <person name="Pan H."/>
            <person name="Phan S."/>
            <person name="Qi S."/>
            <person name="Qian Y."/>
            <person name="Ray L."/>
            <person name="Ren Q."/>
            <person name="Shaull S."/>
            <person name="Sloan D."/>
            <person name="Song L."/>
            <person name="Wang Q."/>
            <person name="Wang Y."/>
            <person name="Wang Z."/>
            <person name="White J."/>
            <person name="Willingham D."/>
            <person name="Wu H."/>
            <person name="Yao Z."/>
            <person name="Zhan M."/>
            <person name="Zhang G."/>
            <person name="Chissoe S."/>
            <person name="Murray J."/>
            <person name="Miller N."/>
            <person name="Minx P."/>
            <person name="Fulton R."/>
            <person name="Johnson D."/>
            <person name="Bemis G."/>
            <person name="Bentley D."/>
            <person name="Bradshaw H."/>
            <person name="Bourne S."/>
            <person name="Cordes M."/>
            <person name="Du Z."/>
            <person name="Fulton L."/>
            <person name="Goela D."/>
            <person name="Graves T."/>
            <person name="Hawkins J."/>
            <person name="Hinds K."/>
            <person name="Kemp K."/>
            <person name="Latreille P."/>
            <person name="Layman D."/>
            <person name="Ozersky P."/>
            <person name="Rohlfing T."/>
            <person name="Scheet P."/>
            <person name="Walker C."/>
            <person name="Wamsley A."/>
            <person name="Wohldmann P."/>
            <person name="Pepin K."/>
            <person name="Nelson J."/>
            <person name="Korf I."/>
            <person name="Bedell J.A."/>
            <person name="Hillier L.W."/>
            <person name="Mardis E."/>
            <person name="Waterston R."/>
            <person name="Wilson R."/>
            <person name="Emanuel B.S."/>
            <person name="Shaikh T."/>
            <person name="Kurahashi H."/>
            <person name="Saitta S."/>
            <person name="Budarf M.L."/>
            <person name="McDermid H.E."/>
            <person name="Johnson A."/>
            <person name="Wong A.C.C."/>
            <person name="Morrow B.E."/>
            <person name="Edelmann L."/>
            <person name="Kim U.J."/>
            <person name="Shizuya H."/>
            <person name="Simon M.I."/>
            <person name="Dumanski J.P."/>
            <person name="Peyrard M."/>
            <person name="Kedra D."/>
            <person name="Seroussi E."/>
            <person name="Fransson I."/>
            <person name="Tapia I."/>
            <person name="Bruder C.E."/>
            <person name="O'Brien K.P."/>
            <person name="Wilkinson P."/>
            <person name="Bodenteich A."/>
            <person name="Hartman K."/>
            <person name="Hu X."/>
            <person name="Khan A.S."/>
            <person name="Lane L."/>
            <person name="Tilahun Y."/>
            <person name="Wright H."/>
        </authorList>
    </citation>
    <scope>NUCLEOTIDE SEQUENCE [LARGE SCALE GENOMIC DNA]</scope>
</reference>
<reference key="3">
    <citation type="submission" date="2005-07" db="EMBL/GenBank/DDBJ databases">
        <authorList>
            <person name="Mural R.J."/>
            <person name="Istrail S."/>
            <person name="Sutton G.G."/>
            <person name="Florea L."/>
            <person name="Halpern A.L."/>
            <person name="Mobarry C.M."/>
            <person name="Lippert R."/>
            <person name="Walenz B."/>
            <person name="Shatkay H."/>
            <person name="Dew I."/>
            <person name="Miller J.R."/>
            <person name="Flanigan M.J."/>
            <person name="Edwards N.J."/>
            <person name="Bolanos R."/>
            <person name="Fasulo D."/>
            <person name="Halldorsson B.V."/>
            <person name="Hannenhalli S."/>
            <person name="Turner R."/>
            <person name="Yooseph S."/>
            <person name="Lu F."/>
            <person name="Nusskern D.R."/>
            <person name="Shue B.C."/>
            <person name="Zheng X.H."/>
            <person name="Zhong F."/>
            <person name="Delcher A.L."/>
            <person name="Huson D.H."/>
            <person name="Kravitz S.A."/>
            <person name="Mouchard L."/>
            <person name="Reinert K."/>
            <person name="Remington K.A."/>
            <person name="Clark A.G."/>
            <person name="Waterman M.S."/>
            <person name="Eichler E.E."/>
            <person name="Adams M.D."/>
            <person name="Hunkapiller M.W."/>
            <person name="Myers E.W."/>
            <person name="Venter J.C."/>
        </authorList>
    </citation>
    <scope>NUCLEOTIDE SEQUENCE [LARGE SCALE GENOMIC DNA]</scope>
</reference>
<reference key="4">
    <citation type="journal article" date="2000" name="Genes Chromosomes Cancer">
        <title>MOZ is fused to p300 in an acute monocytic leukemia with t(8;22).</title>
        <authorList>
            <person name="Chaffanet M."/>
            <person name="Gressin L."/>
            <person name="Preudhomme C."/>
            <person name="Soenen-Cornu V."/>
            <person name="Birnbaum D."/>
            <person name="Pebusque M.-J."/>
        </authorList>
    </citation>
    <scope>NUCLEOTIDE SEQUENCE [MRNA] OF 27-42</scope>
    <scope>CHROMOSOMAL TRANSLOCATION WITH KAT6A</scope>
</reference>
<reference key="5">
    <citation type="journal article" date="1995" name="Nature">
        <title>Adenoviral E1A-associated protein p300 as a functional homologue of the transcriptional co-activator CBP.</title>
        <authorList>
            <person name="Lundblad J.R."/>
            <person name="Kwok R.P.S."/>
            <person name="Laurance M.E."/>
            <person name="Harter M.L."/>
            <person name="Goodman R.H."/>
        </authorList>
    </citation>
    <scope>NUCLEOTIDE SEQUENCE [MRNA] OF 552-660</scope>
</reference>
<reference key="6">
    <citation type="journal article" date="2001" name="Science">
        <title>A transcriptional switch mediated by cofactor methylation.</title>
        <authorList>
            <person name="Xu W."/>
            <person name="Chen H."/>
            <person name="Du K."/>
            <person name="Asahara H."/>
            <person name="Tini M."/>
            <person name="Emerson B.M."/>
            <person name="Montminy M."/>
            <person name="Evans R.M."/>
        </authorList>
    </citation>
    <scope>PARTIAL PROTEIN SEQUENCE</scope>
    <scope>INTERACTION WITH CARM1</scope>
    <scope>METHYLATION AT ARG-580 AND ARG-604</scope>
    <scope>FUNCTION</scope>
</reference>
<reference key="7">
    <citation type="journal article" date="1999" name="Mol. Cell">
        <title>A novel cofactor for p300 that regulates the p53 response.</title>
        <authorList>
            <person name="Shikama N."/>
            <person name="Lee C.-W."/>
            <person name="France S."/>
            <person name="Delavaine L."/>
            <person name="Lyon J."/>
            <person name="Krstic-Demonacos M."/>
            <person name="La Thangue N.B."/>
        </authorList>
    </citation>
    <scope>INTERACTION WITH JMY</scope>
</reference>
<reference key="8">
    <citation type="journal article" date="1996" name="Cell">
        <title>The transcriptional coactivators p300 and CBP are histone acetyltransferases.</title>
        <authorList>
            <person name="Ogryzko V.V."/>
            <person name="Schiltz R.L."/>
            <person name="Russanova V."/>
            <person name="Howard B.H."/>
            <person name="Nakatani Y."/>
        </authorList>
    </citation>
    <scope>CATALYTIC ACTIVITY</scope>
    <scope>FUNCTION</scope>
</reference>
<reference key="9">
    <citation type="journal article" date="1996" name="Nature">
        <title>A p300/CBP-associated factor that competes with the adenoviral oncoprotein E1A.</title>
        <authorList>
            <person name="Yang X.-J."/>
            <person name="Ogryzko V.V."/>
            <person name="Nishikawa J."/>
            <person name="Howard B.H."/>
            <person name="Nakatani Y."/>
        </authorList>
    </citation>
    <scope>INTERACTION WITH PCAF</scope>
</reference>
<reference key="10">
    <citation type="journal article" date="1996" name="Proc. Natl. Acad. Sci. U.S.A.">
        <title>An essential role for p300/CBP in the cellular response to hypoxia.</title>
        <authorList>
            <person name="Arany Z."/>
            <person name="Huang L.E."/>
            <person name="Eckner R."/>
            <person name="Bhattacharya S."/>
            <person name="Jiang C."/>
            <person name="Goldberg M.A."/>
            <person name="Bunn H.F."/>
            <person name="Livingston D.M."/>
        </authorList>
    </citation>
    <scope>FUNCTION</scope>
    <scope>INTERACTION WITH HIF1A AND CREBBP</scope>
</reference>
<reference key="11">
    <citation type="journal article" date="1998" name="Mol. Cell. Biol.">
        <title>Differential transcriptional activation by human T-cell leukemia virus type 1 Tax mutants is mediated by distinct interactions with CREB binding protein and p300.</title>
        <authorList>
            <person name="Bex F."/>
            <person name="Yin M.-J."/>
            <person name="Burny A."/>
            <person name="Gaynor R.B."/>
        </authorList>
    </citation>
    <scope>INTERACTION WITH HTLV-1 TAX (MICROBIAL INFECTION)</scope>
</reference>
<reference key="12">
    <citation type="journal article" date="1998" name="Nature">
        <title>Chromatin remodelling by the glucocorticoid receptor requires the BRG1 complex.</title>
        <authorList>
            <person name="Fryer C.J."/>
            <person name="Archer T.K."/>
        </authorList>
    </citation>
    <scope>INTERACTION WITH NR3C1</scope>
</reference>
<reference key="13">
    <citation type="journal article" date="1999" name="EMBO J.">
        <title>HIV-1 tat transcriptional activity is regulated by acetylation.</title>
        <authorList>
            <person name="Kiernan R.E."/>
            <person name="Vanhulle C."/>
            <person name="Schiltz L."/>
            <person name="Adam E."/>
            <person name="Xiao H."/>
            <person name="Maudoux F."/>
            <person name="Calomme C."/>
            <person name="Burny A."/>
            <person name="Nakatani Y."/>
            <person name="Jeang K.-T."/>
            <person name="Benkirane M."/>
            <person name="Van Lint C."/>
        </authorList>
    </citation>
    <scope>INTERACTION WITH HIV-1 TAT (MICROBIAL INFECTION)</scope>
    <scope>FUNCTION (MICROBIAL INFECTION)</scope>
</reference>
<reference key="14">
    <citation type="journal article" date="1999" name="Genes Dev.">
        <title>Functional role of p35srj, a novel p300/CBP binding protein, during transactivation by HIF-1.</title>
        <authorList>
            <person name="Bhattacharya S."/>
            <person name="Michels C.M."/>
            <person name="Leung M.K."/>
            <person name="Arany Z.P."/>
            <person name="Kung A.L."/>
            <person name="Livingston D.M."/>
        </authorList>
    </citation>
    <scope>INTERACTION WITH CITED2 AND HIF1A</scope>
    <scope>MUTAGENESIS OF 371-THR--LEU-376 AND 413-VAL--LYS-418</scope>
</reference>
<reference key="15">
    <citation type="journal article" date="1999" name="Nucleic Acids Res.">
        <title>Exogenous expression of a dominant negative RORalpha1 vector in muscle cells impairs differentiation: RORalpha1 directly interacts with p300 and myoD.</title>
        <authorList>
            <person name="Lau P."/>
            <person name="Bailey P."/>
            <person name="Dowhan D.H."/>
            <person name="Muscat G.E."/>
        </authorList>
    </citation>
    <scope>INTERACTION WITH RORA</scope>
</reference>
<reference key="16">
    <citation type="journal article" date="2000" name="J. Biol. Chem.">
        <title>The MSG1 non-DNA-binding transactivator binds to the p300/CBP coactivators, enhancing their functional link to the Smad transcription factors.</title>
        <authorList>
            <person name="Yahata T."/>
            <person name="de Caestecker M.P."/>
            <person name="Lechleider R.J."/>
            <person name="Andriole S."/>
            <person name="Roberts A.B."/>
            <person name="Isselbacher K.J."/>
            <person name="Shioda T."/>
        </authorList>
    </citation>
    <scope>INTERACTION WITH CITED1</scope>
</reference>
<reference key="17">
    <citation type="journal article" date="2000" name="Mol. Cell. Biol.">
        <title>A novel transcriptional repression domain mediates p21(WAF1/CIP1) induction of p300 transactivation.</title>
        <authorList>
            <person name="Snowden A.W."/>
            <person name="Anderson L.A."/>
            <person name="Webster G.A."/>
            <person name="Perkins N.D."/>
        </authorList>
    </citation>
    <scope>FUNCTION IN TRANSCRIPTIONAL REPRESSION</scope>
</reference>
<reference key="18">
    <citation type="journal article" date="2000" name="Mol. Cell. Biol.">
        <authorList>
            <person name="Snowden A.W."/>
            <person name="Anderson L.A."/>
            <person name="Webster G.A."/>
            <person name="Perkins N.D."/>
        </authorList>
    </citation>
    <scope>ERRATUM OF PUBMED:10733570</scope>
</reference>
<reference key="19">
    <citation type="journal article" date="2000" name="Mol. Cell. Biol.">
        <title>Cells degrade a novel inhibitor of differentiation with E1A-like properties upon exiting the cell cycle.</title>
        <authorList>
            <person name="Miyake S."/>
            <person name="Sellers W.R."/>
            <person name="Safran M."/>
            <person name="Li X."/>
            <person name="Zhao W."/>
            <person name="Grossman S.R."/>
            <person name="Gan J."/>
            <person name="DeCaprio J.A."/>
            <person name="Adams P.D."/>
            <person name="Kaelin W.G. Jr."/>
        </authorList>
    </citation>
    <scope>INTERACTION WITH EID1</scope>
</reference>
<reference key="20">
    <citation type="journal article" date="2000" name="Mol. Cell. Biol.">
        <title>A novel Rb- and p300-binding protein inhibits transactivation by MyoD.</title>
        <authorList>
            <person name="MacLellan W.R."/>
            <person name="Xiao G."/>
            <person name="Abdellatif M."/>
            <person name="Schneider M.D."/>
        </authorList>
    </citation>
    <scope>INTERACTION WITH EID1</scope>
</reference>
<reference key="21">
    <citation type="journal article" date="2000" name="Proc. Natl. Acad. Sci. U.S.A.">
        <title>Thyroid hormone receptor-binding protein, an LXXLL motif-containing protein, functions as a general coactivator.</title>
        <authorList>
            <person name="Ko L."/>
            <person name="Cardona G.R."/>
            <person name="Chin W.W."/>
        </authorList>
    </citation>
    <scope>INTERACTION WITH NCOA6</scope>
</reference>
<reference key="22">
    <citation type="journal article" date="2000" name="Virology">
        <title>Acetylation of HIV-1 Tat by CBP/P300 increases transcription of integrated HIV-1 genome and enhances binding to core histones.</title>
        <authorList>
            <person name="Deng L."/>
            <person name="de la Fuente C."/>
            <person name="Fu P."/>
            <person name="Wang L."/>
            <person name="Donnelly R."/>
            <person name="Wade J.D."/>
            <person name="Lambert P."/>
            <person name="Li H."/>
            <person name="Lee C.-G."/>
            <person name="Kashanchi F."/>
        </authorList>
    </citation>
    <scope>INTERACTION WITH HIV-1 TAT (MICROBIAL INFECTION)</scope>
    <scope>FUNCTION (MICROBIAL INFECTION)</scope>
</reference>
<reference key="23">
    <citation type="journal article" date="2001" name="Genes Dev.">
        <title>Selective coactivation of estrogen-dependent transcription by CITED1 CBP/p300-binding protein.</title>
        <authorList>
            <person name="Yahata T."/>
            <person name="Shao W."/>
            <person name="Endoh H."/>
            <person name="Hur J."/>
            <person name="Coser K.R."/>
            <person name="Sun H."/>
            <person name="Ueda Y."/>
            <person name="Kato S."/>
            <person name="Isselbacher K.J."/>
            <person name="Brown M."/>
            <person name="Shioda T."/>
        </authorList>
    </citation>
    <scope>INTERACTION WITH ESR1</scope>
</reference>
<reference key="24">
    <citation type="journal article" date="2001" name="J. Biol. Chem.">
        <title>Regulation of transcription by AMP-activated protein kinase: phosphorylation of p300 blocks its interaction with nuclear receptors.</title>
        <authorList>
            <person name="Yang W."/>
            <person name="Hong Y.H."/>
            <person name="Shen X.Q."/>
            <person name="Frankowski C."/>
            <person name="Camp H.S."/>
            <person name="Leff T."/>
        </authorList>
    </citation>
    <scope>PHOSPHORYLATION AT SER-89</scope>
    <scope>MUTAGENESIS OF SER-89</scope>
    <scope>INTERACTION WITH PPARG</scope>
</reference>
<reference key="25">
    <citation type="journal article" date="2001" name="J. Virol.">
        <title>Adenovirus DNA binding protein interacts with the SNF2-related CBP activator protein (SrCap) and inhibits SrCap-mediated transcription.</title>
        <authorList>
            <person name="Xu X."/>
            <person name="Chackalaparampil I."/>
            <person name="Monroy M.A."/>
            <person name="Cannella M.T."/>
            <person name="Pesek E."/>
            <person name="Chrivia J."/>
            <person name="Yaciuk P."/>
        </authorList>
    </citation>
    <scope>INTERACTION WITH SRCAP</scope>
</reference>
<reference key="26">
    <citation type="journal article" date="2001" name="Mol. Cell">
        <title>A TPR motif cofactor contributes to p300 activity in the p53 response.</title>
        <authorList>
            <person name="Demonacos C."/>
            <person name="Krstic-Demonacos M."/>
            <person name="La Thangue N.B."/>
        </authorList>
    </citation>
    <scope>FUNCTION</scope>
    <scope>INTERACTION WITH TTC5 AND JMY</scope>
</reference>
<reference key="27">
    <citation type="journal article" date="2001" name="Mol. Cell. Biol.">
        <title>The oncoprotein Tax binds the SRC-1-interacting domain of CBP/p300 to mediate transcriptional activation.</title>
        <authorList>
            <person name="Scoggin K.E.S."/>
            <person name="Ulloa A."/>
            <person name="Nyborg J.K."/>
        </authorList>
    </citation>
    <scope>INTERACTION WITH HTLV-1 TAX (MICROBIAL INFECTION)</scope>
</reference>
<reference key="28">
    <citation type="journal article" date="2001" name="J. Virol.">
        <title>Human T-lymphotropic virus type 1 p30(II) regulates gene transcription by binding CREB binding protein/p300.</title>
        <authorList>
            <person name="Zhang W."/>
            <person name="Nisbet J.W."/>
            <person name="Albrecht B."/>
            <person name="Ding W."/>
            <person name="Kashanchi F."/>
            <person name="Bartoe J.T."/>
            <person name="Lairmore M.D."/>
        </authorList>
    </citation>
    <scope>INTERACTION WITH HTLV-1 ACCESSORY PROTEIN P30II (MICROBIAL INFECTION)</scope>
</reference>
<reference key="29">
    <citation type="journal article" date="2001" name="J. Biol. Chem.">
        <title>A novel zinc finger protein TReP-132 interacts with CBP/p300 to regulate human CYP11A1 gene expression.</title>
        <authorList>
            <person name="Gizard F."/>
            <person name="Lavallee B."/>
            <person name="DeWitte F."/>
            <person name="Hum D.W."/>
        </authorList>
    </citation>
    <scope>INTERACTION WITH TRERF1</scope>
</reference>
<reference key="30">
    <citation type="journal article" date="2001" name="J. Biol. Chem.">
        <title>Molecular cloning and characterization of PELP1, a novel human coregulator of estrogen receptor alpha.</title>
        <authorList>
            <person name="Vadlamudi R.K."/>
            <person name="Wang R.-A."/>
            <person name="Mazumdar A."/>
            <person name="Kim Y.-S."/>
            <person name="Shin J."/>
            <person name="Sahin A."/>
            <person name="Kumar R."/>
        </authorList>
    </citation>
    <scope>INTERACTION WITH PELP1</scope>
</reference>
<reference key="31">
    <citation type="journal article" date="2001" name="J. Biol. Chem.">
        <title>Role of Deltex-1 as a transcriptional regulator downstream of the Notch receptor.</title>
        <authorList>
            <person name="Yamamoto N."/>
            <person name="Yamamoto S."/>
            <person name="Inagaki F."/>
            <person name="Kawaichi M."/>
            <person name="Fukamizu A."/>
            <person name="Kishi N."/>
            <person name="Matsuno K."/>
            <person name="Nakamura K."/>
            <person name="Weinmaster G."/>
            <person name="Okano H."/>
            <person name="Nakafuku M."/>
        </authorList>
    </citation>
    <scope>INTERACTION WITH DTX1</scope>
</reference>
<reference key="32">
    <citation type="journal article" date="2001" name="Mol. Cell">
        <title>Regulation of human flap endonuclease-1 activity by acetylation through the transcriptional coactivator p300.</title>
        <authorList>
            <person name="Hasan S."/>
            <person name="Stucki M."/>
            <person name="Hassa P.O."/>
            <person name="Imhof R."/>
            <person name="Gehrig P."/>
            <person name="Hunziker P."/>
            <person name="Hubscher U."/>
            <person name="Hottiger M.O."/>
        </authorList>
    </citation>
    <scope>FUNCTION</scope>
    <scope>INTERACTION WITH FEN1</scope>
</reference>
<reference key="33">
    <citation type="journal article" date="2001" name="Nat. Cell Biol.">
        <title>Acetylation control of the retinoblastoma tumour-suppressor protein.</title>
        <authorList>
            <person name="Chan H.M."/>
            <person name="Krstic-Demonacos M."/>
            <person name="Smith L."/>
            <person name="Demonacos C."/>
            <person name="La Thangue N.B."/>
        </authorList>
    </citation>
    <scope>INTERACTION WITH HADV5 E1A (MICROBIAL INFECTION)</scope>
</reference>
<reference key="34">
    <citation type="journal article" date="2002" name="Cell Growth Differ.">
        <title>Interaction between the hematopoietic Ets transcription factor Spi-B and the coactivator CREB-binding protein associated with negative cross-talk with c-Myb.</title>
        <authorList>
            <person name="Yamamoto H."/>
            <person name="Kihara-Negishi F."/>
            <person name="Yamada T."/>
            <person name="Suzuki M."/>
            <person name="Nakano T."/>
            <person name="Oikawa T."/>
        </authorList>
    </citation>
    <scope>INTERACTION WITH SPIB</scope>
</reference>
<reference key="35">
    <citation type="journal article" date="2002" name="J. Biol. Chem.">
        <title>Human CREB-binding protein/p300-interacting transactivator with ED-rich tail (CITED) 4, a new member of the CITED family, functions as a co-activator for transcription factor AP-2.</title>
        <authorList>
            <person name="Braganca J."/>
            <person name="Swingler T."/>
            <person name="Marques F.I.R."/>
            <person name="Jones T."/>
            <person name="Eloranta J.J."/>
            <person name="Hurst H.C."/>
            <person name="Shioda T."/>
            <person name="Bhattacharya S."/>
        </authorList>
    </citation>
    <scope>INTERACTION WITH CITED4</scope>
</reference>
<reference key="36">
    <citation type="journal article" date="2002" name="J. Biol. Chem.">
        <title>The HMG-I/Y-related protein p8 binds to p300 and Pax2 trans-activation domain-interacting protein to regulate the trans-activation activity of the Pax2A and Pax2B transcription factors on the glucagon gene promoter.</title>
        <authorList>
            <person name="Hoffmeister A."/>
            <person name="Ropolo A."/>
            <person name="Vasseur S."/>
            <person name="Mallo G.V."/>
            <person name="Bodeker H."/>
            <person name="Ritz-Laser B."/>
            <person name="Dressler G.R."/>
            <person name="Vaccaro M.I."/>
            <person name="Dagorn J.C."/>
            <person name="Moreno S."/>
            <person name="Iovanna J.L."/>
        </authorList>
    </citation>
    <scope>INTERACTION WITH NUPR1</scope>
</reference>
<reference key="37">
    <citation type="journal article" date="2002" name="Mol. Cell. Biol.">
        <title>Scaffold/matrix attachment region elements interact with a p300-scaffold attachment factor A complex and are bound by acetylated nucleosomes.</title>
        <authorList>
            <person name="Martens J.H."/>
            <person name="Verlaan M."/>
            <person name="Kalkhoven E."/>
            <person name="Dorsman J.C."/>
            <person name="Zantema A."/>
        </authorList>
    </citation>
    <scope>INTERACTION WITH HNRNPU</scope>
</reference>
<reference key="38">
    <citation type="journal article" date="2002" name="Mol. Cell. Biol.">
        <title>Synergy among nuclear receptor coactivators: selective requirement for protein methyltransferase and acetyltransferase activities.</title>
        <authorList>
            <person name="Lee Y.-H."/>
            <person name="Koh S.S."/>
            <person name="Zhang X."/>
            <person name="Cheng X."/>
            <person name="Stallcup M.R."/>
        </authorList>
    </citation>
    <scope>IDENTIFICATION IN A COMPLEX WITH CARM1 AND NCOA2</scope>
</reference>
<reference key="39">
    <citation type="journal article" date="2002" name="Nat. Genet.">
        <title>Acetylation inactivates the transcriptional repressor BCL6.</title>
        <authorList>
            <person name="Bereshchenko O.R."/>
            <person name="Gu W."/>
            <person name="Dalla-Favera R."/>
        </authorList>
    </citation>
    <scope>FUNCTION IN BCL6 ACETYLATION</scope>
</reference>
<reference key="40">
    <citation type="journal article" date="2003" name="Cancer Res.">
        <title>p29ING4 and p28ING5 bind to p53 and p300, and enhance p53 activity.</title>
        <authorList>
            <person name="Shiseki M."/>
            <person name="Nagashima M."/>
            <person name="Pedeux R.M."/>
            <person name="Kitahama-Shiseki M."/>
            <person name="Miura K."/>
            <person name="Okamura S."/>
            <person name="Onogi H."/>
            <person name="Higashimoto Y."/>
            <person name="Appella E."/>
            <person name="Yokota J."/>
            <person name="Harris C.C."/>
        </authorList>
    </citation>
    <scope>INTERACTION WITH ING4 AND ING5</scope>
</reference>
<reference key="41">
    <citation type="journal article" date="2003" name="J. Biol. Chem.">
        <title>Identification of a promoter-specific transcriptional activation domain at the C-terminus of the Wnt effector protein T-cell factor 4.</title>
        <authorList>
            <person name="Hecht A."/>
            <person name="Stemmler M.P."/>
        </authorList>
    </citation>
    <scope>PHOSPHORYLATION</scope>
    <scope>INTERACTION WITH TCF7L2 AND LEF1</scope>
</reference>
<reference key="42">
    <citation type="journal article" date="2003" name="J. Biol. Chem.">
        <title>Physical and functional interactions among AP-2 transcription factors, p300/CREB-binding protein, and CITED2.</title>
        <authorList>
            <person name="Braganca J."/>
            <person name="Eloranta J.J."/>
            <person name="Bamforth S.D."/>
            <person name="Ibbitt J.C."/>
            <person name="Hurst H.C."/>
            <person name="Bhattacharya S."/>
        </authorList>
    </citation>
    <scope>FUNCTION</scope>
    <scope>INTERACTION WITH CITED2 AND TFAP2A</scope>
    <scope>MUTAGENESIS OF ASP-1399</scope>
</reference>
<reference key="43">
    <citation type="journal article" date="2003" name="J. Biol. Chem.">
        <title>Transcriptional co-activators CREB-binding protein and p300 regulate chondrocyte-specific gene expression via association with Sox9.</title>
        <authorList>
            <person name="Tsuda M."/>
            <person name="Takahashi S."/>
            <person name="Takahashi Y."/>
            <person name="Asahara H."/>
        </authorList>
    </citation>
    <scope>INTERACTION WITH SOX9</scope>
</reference>
<reference key="44">
    <citation type="journal article" date="2003" name="J. Biol. Chem.">
        <title>Acetylated SP3 is a transcriptional activator.</title>
        <authorList>
            <person name="Ammanamanchi S."/>
            <person name="Freeman J.W."/>
            <person name="Brattain M.G."/>
        </authorList>
    </citation>
    <scope>INTERACTION WITH SP3</scope>
</reference>
<reference key="45">
    <citation type="journal article" date="2003" name="J. Bone Miner. Res.">
        <title>P300/CBP acts as a coactivator to cartilage homeoprotein-1 (Cart1), paired-like homeoprotein, through acetylation of the conserved lysine residue adjacent to the homeodomain.</title>
        <authorList>
            <person name="Iioka T."/>
            <person name="Furukawa K."/>
            <person name="Yamaguchi A."/>
            <person name="Shindo H."/>
            <person name="Yamashita S."/>
            <person name="Tsukazaki T."/>
        </authorList>
    </citation>
    <scope>FUNCTION</scope>
    <scope>SUBCELLULAR LOCATION</scope>
    <scope>INTERACTION WITH ALX1</scope>
    <scope>REGION</scope>
</reference>
<reference key="46">
    <citation type="journal article" date="2003" name="Microbiol. Immunol.">
        <title>SATB1 makes a complex with p300 and represses gp91(phox) promoter activity.</title>
        <authorList>
            <person name="Fujii Y."/>
            <person name="Kumatori A."/>
            <person name="Nakamura M."/>
        </authorList>
    </citation>
    <scope>INTERACTION WITH SATB1</scope>
</reference>
<reference key="47">
    <citation type="journal article" date="2003" name="Mol. Cell">
        <title>P300 transcriptional repression is mediated by SUMO modification.</title>
        <authorList>
            <person name="Girdwood D."/>
            <person name="Bumpass D."/>
            <person name="Vaughan O.A."/>
            <person name="Thain A."/>
            <person name="Anderson L.A."/>
            <person name="Snowden A.W."/>
            <person name="Garcia-Wilson E."/>
            <person name="Perkins N.D."/>
            <person name="Hay R.T."/>
        </authorList>
    </citation>
    <scope>SUMOYLATION AT LYS-1020 AND LYS-1024</scope>
    <scope>MUTAGENESIS OF LYS-1020 AND LYS-1024</scope>
</reference>
<reference key="48">
    <citation type="journal article" date="2003" name="Oncogene">
        <title>Synergism between p68 RNA helicase and the transcriptional coactivators CBP and p300.</title>
        <authorList>
            <person name="Rossow K.L."/>
            <person name="Janknecht R."/>
        </authorList>
    </citation>
    <scope>INTERACTION WITH DDX5</scope>
</reference>
<reference key="49">
    <citation type="journal article" date="2004" name="Cell">
        <title>Ordered cooperative functions of PRMT1, p300, and CARM1 in transcriptional activation by p53.</title>
        <authorList>
            <person name="An W."/>
            <person name="Kim J."/>
            <person name="Roeder R.G."/>
        </authorList>
    </citation>
    <scope>INTERACTION WITH TP53</scope>
    <scope>FUNCTION</scope>
</reference>
<reference key="50">
    <citation type="journal article" date="2004" name="EMBO J.">
        <title>Regulation of human SRY subcellular distribution by its acetylation/deacetylation.</title>
        <authorList>
            <person name="Thevenet L."/>
            <person name="Mejean C."/>
            <person name="Moniot B."/>
            <person name="Bonneaud N."/>
            <person name="Galeotti N."/>
            <person name="Aldrian-Herrada G."/>
            <person name="Poulat F."/>
            <person name="Berta P."/>
            <person name="Benkirane M."/>
            <person name="Boizet-Bonhoure B."/>
        </authorList>
    </citation>
    <scope>INTERACTION WITH SRY</scope>
</reference>
<reference key="51">
    <citation type="journal article" date="2004" name="J. Biol. Chem.">
        <title>Histone acetyltransferase-dependent chromatin remodeling and the vascular clock.</title>
        <authorList>
            <person name="Curtis A.M."/>
            <person name="Seo S.B."/>
            <person name="Westgate E.J."/>
            <person name="Rudic R.D."/>
            <person name="Smyth E.M."/>
            <person name="Chakravarti D."/>
            <person name="FitzGerald G.A."/>
            <person name="McNamara P."/>
        </authorList>
    </citation>
    <scope>FUNCTION</scope>
    <scope>CATALYTIC ACTIVITY</scope>
    <scope>SUBCELLULAR LOCATION</scope>
    <scope>INTERACTION WITH NPAS2; BMAL1 AND CLOCK</scope>
</reference>
<reference key="52">
    <citation type="journal article" date="2004" name="J. Biol. Chem.">
        <title>Positive and negative modulation of the transcriptional activity of the ETS factor ESE-1 through interaction with p300, CREB-binding protein, and Ku 70/86.</title>
        <authorList>
            <person name="Wang H."/>
            <person name="Fang R."/>
            <person name="Cho J.-Y."/>
            <person name="Libermann T.A."/>
            <person name="Oettgen P."/>
        </authorList>
    </citation>
    <scope>INTERACTION WITH ELF3</scope>
</reference>
<reference key="53">
    <citation type="journal article" date="2004" name="Mol. Cell. Biol.">
        <title>Interferon regulatory factor 1 binding to p300 stimulates DNA-dependent acetylation of p53.</title>
        <authorList>
            <person name="Dornan D."/>
            <person name="Eckert M."/>
            <person name="Wallace M."/>
            <person name="Shimizu H."/>
            <person name="Ramsay E."/>
            <person name="Hupp T.R."/>
            <person name="Ball K.L."/>
        </authorList>
    </citation>
    <scope>INTERACTION WITH IRF1</scope>
</reference>
<reference key="54">
    <citation type="journal article" date="2004" name="Nat. Cell Biol.">
        <title>A new effector pathway links ATM kinase with the DNA damage response.</title>
        <authorList>
            <person name="Demonacos C."/>
            <person name="Krstic-Demonacos M."/>
            <person name="Smith L."/>
            <person name="Xu D."/>
            <person name="O'Connor D.P."/>
            <person name="Jansson M."/>
            <person name="La Thangue N.B."/>
        </authorList>
    </citation>
    <scope>FUNCTION</scope>
    <scope>CATALYTIC ACTIVITY</scope>
    <scope>INTERACTION WITH TTC5 AND TP53</scope>
</reference>
<reference key="55">
    <citation type="journal article" date="2004" name="Nat. Struct. Mol. Biol.">
        <title>Regulation of the p300 HAT domain via a novel activation loop.</title>
        <authorList>
            <person name="Thompson P.R."/>
            <person name="Wang D."/>
            <person name="Wang L."/>
            <person name="Fulco M."/>
            <person name="Pediconi N."/>
            <person name="Zhang D."/>
            <person name="An W."/>
            <person name="Ge Q."/>
            <person name="Roeder R.G."/>
            <person name="Wong J."/>
            <person name="Levrero M."/>
            <person name="Sartorelli V."/>
            <person name="Cotter R.J."/>
            <person name="Cole P.A."/>
        </authorList>
    </citation>
    <scope>ACETYLATION AT LYS-1499; LYS-1549; LYS-1554; LYS-1558 AND LYS-1560</scope>
</reference>
<reference key="56">
    <citation type="journal article" date="2004" name="Mol. Endocrinol.">
        <title>Orphan nuclear receptor small heterodimer partner, a novel corepressor for a basic helix-loop-helix transcription factor BETA2/neuroD.</title>
        <authorList>
            <person name="Kim J.Y."/>
            <person name="Chu K."/>
            <person name="Kim H.J."/>
            <person name="Seong H.A."/>
            <person name="Park K.C."/>
            <person name="Sanyal S."/>
            <person name="Takeda J."/>
            <person name="Ha H."/>
            <person name="Shong M."/>
            <person name="Tsai M.J."/>
            <person name="Choi H.S."/>
        </authorList>
    </citation>
    <scope>FUNCTION</scope>
    <scope>INTERACTION WITH NEUROD1 AND TCF3</scope>
</reference>
<reference key="57">
    <citation type="journal article" date="2004" name="Science">
        <title>Dendrite development regulated by CREST, a calcium-regulated transcriptional activator.</title>
        <authorList>
            <person name="Aizawa H."/>
            <person name="Hu S.-C."/>
            <person name="Bobb K."/>
            <person name="Balakrishnan K."/>
            <person name="Ince G."/>
            <person name="Gurevich I."/>
            <person name="Cowan M."/>
            <person name="Ghosh A."/>
        </authorList>
    </citation>
    <scope>INTERACTION WITH SS18L1/CREST</scope>
</reference>
<reference key="58">
    <citation type="journal article" date="2005" name="Am. J. Hum. Genet.">
        <title>Genetic heterogeneity in Rubinstein-Taybi syndrome: mutations in both the CBP and EP300 genes cause disease.</title>
        <authorList>
            <person name="Roelfsema J.H."/>
            <person name="White S.J."/>
            <person name="Ariyuerek Y."/>
            <person name="Bartholdi D."/>
            <person name="Niedrist D."/>
            <person name="Papadia F."/>
            <person name="Bacino C.A."/>
            <person name="den Dunnen J.T."/>
            <person name="van Ommen G.-J.B."/>
            <person name="Breuning M.H."/>
            <person name="Hennekam R.C."/>
            <person name="Peters D.J.M."/>
        </authorList>
    </citation>
    <scope>INVOLVEMENT IN RSTS2</scope>
</reference>
<reference key="59">
    <citation type="journal article" date="2005" name="Gastroenterology">
        <title>STAT3 NH2-terminal acetylation is activated by the hepatic acute-phase response and required for IL-6 induction of angiotensinogen.</title>
        <authorList>
            <person name="Ray S."/>
            <person name="Boldogh I."/>
            <person name="Brasier A.R."/>
        </authorList>
    </citation>
    <scope>FUNCTION</scope>
    <scope>CATALYTIC ACTIVITY</scope>
</reference>
<reference key="60">
    <citation type="journal article" date="2005" name="J. Biol. Chem.">
        <title>SIRT1 deacetylation and repression of p300 involves lysine residues 1020/1024 within the cell cycle regulatory domain 1.</title>
        <authorList>
            <person name="Bouras T."/>
            <person name="Fu M."/>
            <person name="Sauve A.A."/>
            <person name="Wang F."/>
            <person name="Quong A.A."/>
            <person name="Perkins N.D."/>
            <person name="Hay R.T."/>
            <person name="Gu W."/>
            <person name="Pestell R.G."/>
        </authorList>
    </citation>
    <scope>DEACETYLATION BY SIRT1</scope>
    <scope>ACETYLATION AT LYS-1020 AND LYS-1024</scope>
    <scope>MUTAGENESIS OF LYS-1020 AND LYS-1024</scope>
</reference>
<reference key="61">
    <citation type="journal article" date="2005" name="J. Biol. Chem.">
        <title>p300 modulates ATF4 stability and transcriptional activity independently of its acetyltransferase domain.</title>
        <authorList>
            <person name="Lassot I."/>
            <person name="Estrabaud E."/>
            <person name="Emiliani S."/>
            <person name="Benkirane M."/>
            <person name="Benarous R."/>
            <person name="Margottin-Goguet F."/>
        </authorList>
    </citation>
    <scope>SUBCELLULAR LOCATION</scope>
    <scope>INTERACTION WITH ATF4</scope>
</reference>
<reference key="62">
    <citation type="journal article" date="2005" name="Mol. Endocrinol.">
        <title>The coactivator p300 directly acetylates the forkhead transcription factor Foxo1 and stimulates Foxo1-induced transcription.</title>
        <authorList>
            <person name="Perrot V."/>
            <person name="Rechler M.M."/>
        </authorList>
    </citation>
    <scope>FUNCTION</scope>
    <scope>MUTAGENESIS OF ASP-1399</scope>
</reference>
<reference key="63">
    <citation type="journal article" date="2005" name="Proc. Natl. Acad. Sci. U.S.A.">
        <title>Regulation of coactivator complex assembly and function by protein arginine methylation and demethylimination.</title>
        <authorList>
            <person name="Lee Y.-H."/>
            <person name="Coonrod S.A."/>
            <person name="Kraus W.L."/>
            <person name="Jelinek M.A."/>
            <person name="Stallcup M.R."/>
        </authorList>
    </citation>
    <scope>METHYLATION AT ARG-2142</scope>
    <scope>CITRULLINATION AT ARG-2142</scope>
    <scope>INTERACTION WITH NCOA2</scope>
    <scope>MUTAGENESIS OF ARG-2056; ARG-2088 AND ARG-2142</scope>
</reference>
<reference key="64">
    <citation type="journal article" date="2005" name="Science">
        <title>Stat3 dimerization regulated by reversible acetylation of a single lysine residue.</title>
        <authorList>
            <person name="Yuan Z.L."/>
            <person name="Guan Y.J."/>
            <person name="Chatterjee D."/>
            <person name="Chin Y.E."/>
        </authorList>
    </citation>
    <scope>FUNCTION</scope>
    <scope>CATALYTIC ACTIVITY</scope>
</reference>
<reference key="65">
    <citation type="journal article" date="2006" name="Blood">
        <title>BCL11B participates in the activation of IL2 gene expression in CD4+ T lymphocytes.</title>
        <authorList>
            <person name="Cismasiu V.B."/>
            <person name="Ghanta S."/>
            <person name="Duque J."/>
            <person name="Albu D.I."/>
            <person name="Chen H.M."/>
            <person name="Kasturi R."/>
            <person name="Avram D."/>
        </authorList>
    </citation>
    <scope>INTERACTION WITH BCL11B</scope>
</reference>
<reference key="66">
    <citation type="journal article" date="2006" name="J. Biol. Chem.">
        <title>Nuclear Rho kinase, ROCK2, targets p300 acetyltransferase.</title>
        <authorList>
            <person name="Tanaka T."/>
            <person name="Nishimura D."/>
            <person name="Wu R.C."/>
            <person name="Amano M."/>
            <person name="Iso T."/>
            <person name="Kedes L."/>
            <person name="Nishida H."/>
            <person name="Kaibuchi K."/>
            <person name="Hamamori Y."/>
        </authorList>
    </citation>
    <scope>SUBCELLULAR LOCATION</scope>
    <scope>INTERACTION WITH ROCK2</scope>
    <scope>PHOSPHORYLATION AT SER-89</scope>
</reference>
<reference key="67">
    <citation type="journal article" date="2006" name="J. Biol. Chem.">
        <title>The transcriptional activity of CITED1 is regulated by phosphorylation in a cell cycle-dependent manner.</title>
        <authorList>
            <person name="Shi G."/>
            <person name="Boyle S.C."/>
            <person name="Sparrow D.B."/>
            <person name="Dunwoodie S.L."/>
            <person name="Shioda T."/>
            <person name="de Caestecker M.P."/>
        </authorList>
    </citation>
    <scope>INTERACTION WITH CITED1</scope>
</reference>
<reference key="68">
    <citation type="journal article" date="2006" name="J. Biol. Chem.">
        <title>Kinetic and mass spectrometric analysis of p300 histone acetyltransferase domain autoacetylation.</title>
        <authorList>
            <person name="Karanam B."/>
            <person name="Jiang L."/>
            <person name="Wang L."/>
            <person name="Kelleher N.L."/>
            <person name="Cole P.A."/>
        </authorList>
    </citation>
    <scope>ACETYLATION AT LYS-1336 AND LYS-1473</scope>
    <scope>IDENTIFICATION BY MASS SPECTROMETRY</scope>
</reference>
<reference key="69">
    <citation type="journal article" date="2006" name="Mol. Cell">
        <title>HDAC1 acetylation is linked to progressive modulation of steroid receptor-induced gene transcription.</title>
        <authorList>
            <person name="Qiu Y."/>
            <person name="Zhao Y."/>
            <person name="Becker M."/>
            <person name="John S."/>
            <person name="Parekh B.S."/>
            <person name="Huang S."/>
            <person name="Hendarwanto A."/>
            <person name="Martinez E.D."/>
            <person name="Chen Y."/>
            <person name="Lu H."/>
            <person name="Adkins N.L."/>
            <person name="Stavreva D.A."/>
            <person name="Wiench M."/>
            <person name="Georgel P.T."/>
            <person name="Schiltz R.L."/>
            <person name="Hager G.L."/>
        </authorList>
    </citation>
    <scope>FUNCTION IN ACETYLATION OF HDAC1</scope>
</reference>
<reference key="70">
    <citation type="journal article" date="2006" name="Mol. Cell. Biol.">
        <title>Sp1 deacetylation induced by phorbol ester recruits p300 to activate 12(S)-lipoxygenase gene transcription.</title>
        <authorList>
            <person name="Hung J.J."/>
            <person name="Wang Y.T."/>
            <person name="Chang W.C."/>
        </authorList>
    </citation>
    <scope>INTERACTION WITH SP1</scope>
</reference>
<reference key="71">
    <citation type="journal article" date="2006" name="Proc. Natl. Acad. Sci. U.S.A.">
        <title>MTA1, a transcriptional activator of breast cancer amplified sequence 3.</title>
        <authorList>
            <person name="Gururaj A.E."/>
            <person name="Singh R.R."/>
            <person name="Rayala S.K."/>
            <person name="Holm C."/>
            <person name="den Hollander P."/>
            <person name="Zhang H."/>
            <person name="Balasenthil S."/>
            <person name="Talukder A.H."/>
            <person name="Landberg G."/>
            <person name="Kumar R."/>
        </authorList>
    </citation>
    <scope>FUNCTION</scope>
    <scope>INTERACTION WITH MTA1</scope>
</reference>
<reference key="72">
    <citation type="journal article" date="2013" name="Proc. Natl. Acad. Sci. U.S.A.">
        <authorList>
            <person name="Gururaj A.E."/>
            <person name="Singh R.R."/>
            <person name="Rayala S.K."/>
            <person name="Holm C."/>
            <person name="den Hollander P."/>
            <person name="Zhang H."/>
            <person name="Balasenthil S."/>
            <person name="Talukder A.H."/>
            <person name="Landberg G."/>
            <person name="Kumar R."/>
        </authorList>
    </citation>
    <scope>ERRATUM OF PUBMED:16617102</scope>
</reference>
<reference key="73">
    <citation type="journal article" date="2007" name="J. Biol. Chem.">
        <title>Critical and functional regulation of CHOP (C/EBP homologous protein) through the N-terminal portion.</title>
        <authorList>
            <person name="Ohoka N."/>
            <person name="Hattori T."/>
            <person name="Kitagawa M."/>
            <person name="Onozaki K."/>
            <person name="Hayashi H."/>
        </authorList>
    </citation>
    <scope>INTERACTION WITH DDIT3</scope>
</reference>
<reference key="74">
    <citation type="journal article" date="2007" name="J. Cell. Biochem.">
        <title>Concerted activation of the Mdm2 promoter by p72 RNA helicase and the coactivators p300 and P/CAF.</title>
        <authorList>
            <person name="Shin S."/>
            <person name="Janknecht R."/>
        </authorList>
    </citation>
    <scope>INTERACTION WITH DDX17</scope>
</reference>
<reference key="75">
    <citation type="journal article" date="2007" name="Mol. Cell. Proteomics">
        <title>Lysine propionylation and butyrylation are novel post-translational modifications in histones.</title>
        <authorList>
            <person name="Chen Y."/>
            <person name="Sprung R."/>
            <person name="Tang Y."/>
            <person name="Ball H."/>
            <person name="Sangras B."/>
            <person name="Kim S.C."/>
            <person name="Falck J.R."/>
            <person name="Peng J."/>
            <person name="Gu W."/>
            <person name="Zhao Y."/>
        </authorList>
    </citation>
    <scope>FUNCTION</scope>
    <scope>CATALYTIC ACTIVITY</scope>
</reference>
<reference key="76">
    <citation type="journal article" date="2007" name="Mol. Endocrinol.">
        <title>Orphan receptor TR3 attenuates the p300-induced acetylation of retinoid X receptor-alpha.</title>
        <authorList>
            <person name="Zhao W.X."/>
            <person name="Tian M."/>
            <person name="Zhao B.X."/>
            <person name="Li G.D."/>
            <person name="Liu B."/>
            <person name="Zhan Y.Y."/>
            <person name="Chen H.Z."/>
            <person name="Wu Q."/>
        </authorList>
    </citation>
    <scope>FUNCTION</scope>
    <scope>CATALYTIC ACTIVITY</scope>
    <scope>INTERACTION WITH RXRA</scope>
    <scope>SUBCELLULAR LOCATION</scope>
    <scope>MUTAGENESIS OF ASP-1399</scope>
</reference>
<reference key="77">
    <citation type="journal article" date="2008" name="Biochem. Biophys. Res. Commun.">
        <title>Acetylation of Sirt2 by p300 attenuates its deacetylase activity.</title>
        <authorList>
            <person name="Han Y."/>
            <person name="Jin Y.H."/>
            <person name="Kim Y.J."/>
            <person name="Kang B.Y."/>
            <person name="Choi H.J."/>
            <person name="Kim D.W."/>
            <person name="Yeo C.Y."/>
            <person name="Lee K.Y."/>
        </authorList>
    </citation>
    <scope>FUNCTION IN ACETYLATION OF SIRT2</scope>
</reference>
<reference key="78">
    <citation type="journal article" date="2008" name="Blood">
        <title>PEBP2-beta/CBF-beta-dependent phosphorylation of RUNX1 and p300 by HIPK2: implications for leukemogenesis.</title>
        <authorList>
            <person name="Wee H.-J."/>
            <person name="Voon D.C.-C."/>
            <person name="Bae S.-C."/>
            <person name="Ito Y."/>
        </authorList>
    </citation>
    <scope>PHOSPHORYLATION BY HIPK2</scope>
</reference>
<reference key="79">
    <citation type="journal article" date="2008" name="EMBO Rep.">
        <title>A transcription cofactor required for the heat-shock response.</title>
        <authorList>
            <person name="Xu D."/>
            <person name="Zalmas L.P."/>
            <person name="La Thangue N.B."/>
        </authorList>
    </citation>
    <scope>FUNCTION</scope>
    <scope>INTERACTION WITH TTC5 AND HSF1</scope>
</reference>
<reference key="80">
    <citation type="journal article" date="2008" name="J. Biol. Chem.">
        <title>An interaction between the human T cell leukemia virus type 1 basic leucine zipper factor (HBZ) and the KIX domain of p300/CBP contributes to the down-regulation of tax-dependent viral transcription by HBZ.</title>
        <authorList>
            <person name="Clerc I."/>
            <person name="Polakowski N."/>
            <person name="Andre-Arpin C."/>
            <person name="Cook P."/>
            <person name="Barbeau B."/>
            <person name="Mesnard J.M."/>
            <person name="Lemasson I."/>
        </authorList>
    </citation>
    <scope>INTERACTION WITH HUMAN T-CELL LEUKEMIA VIRUS 1/HTLV-1 PROTEIN HBZ</scope>
</reference>
<reference key="81">
    <citation type="journal article" date="2008" name="J. Biol. Chem.">
        <title>The STAT3 NH2-terminal domain stabilizes enhanceosome assembly by interacting with the p300 bromodomain.</title>
        <authorList>
            <person name="Hou T."/>
            <person name="Ray S."/>
            <person name="Lee C."/>
            <person name="Brasier A.R."/>
        </authorList>
    </citation>
    <scope>FUNCTION</scope>
    <scope>INTERACTION WITH STAT3</scope>
</reference>
<reference key="82">
    <citation type="journal article" date="2008" name="Mol. Cell. Biol.">
        <title>PML activates transcription by protecting HIPK2 and p300 from SCFFbx3-mediated degradation.</title>
        <authorList>
            <person name="Shima Y."/>
            <person name="Shima T."/>
            <person name="Chiba T."/>
            <person name="Irimura T."/>
            <person name="Pandolfi P.P."/>
            <person name="Kitabayashi I."/>
        </authorList>
    </citation>
    <scope>FBXO3-MEDIATED DEGRADATION</scope>
</reference>
<reference key="83">
    <citation type="journal article" date="2008" name="Mol. Cell">
        <title>The SIRT2 deacetylase regulates autoacetylation of p300.</title>
        <authorList>
            <person name="Black J.C."/>
            <person name="Mosley A."/>
            <person name="Kitada T."/>
            <person name="Washburn M."/>
            <person name="Carey M."/>
        </authorList>
    </citation>
    <scope>ACETYLATION AT LYS-418; LYS-423; LYS-1542; LYS-1546; LYS-1549; LYS-1699; LYS-1704 AND LYS-1707</scope>
    <scope>DEACETYLATION BY SIRT2</scope>
    <scope>FUNCTION IN TRANSCRIPTIONAL REGULATION</scope>
</reference>
<reference key="84">
    <citation type="journal article" date="2008" name="Proc. Natl. Acad. Sci. U.S.A.">
        <title>A quantitative atlas of mitotic phosphorylation.</title>
        <authorList>
            <person name="Dephoure N."/>
            <person name="Zhou C."/>
            <person name="Villen J."/>
            <person name="Beausoleil S.A."/>
            <person name="Bakalarski C.E."/>
            <person name="Elledge S.J."/>
            <person name="Gygi S.P."/>
        </authorList>
    </citation>
    <scope>IDENTIFICATION BY MASS SPECTROMETRY [LARGE SCALE ANALYSIS]</scope>
    <source>
        <tissue>Cervix carcinoma</tissue>
    </source>
</reference>
<reference key="85">
    <citation type="journal article" date="2009" name="Anal. Chem.">
        <title>Lys-N and trypsin cover complementary parts of the phosphoproteome in a refined SCX-based approach.</title>
        <authorList>
            <person name="Gauci S."/>
            <person name="Helbig A.O."/>
            <person name="Slijper M."/>
            <person name="Krijgsveld J."/>
            <person name="Heck A.J."/>
            <person name="Mohammed S."/>
        </authorList>
    </citation>
    <scope>ACETYLATION [LARGE SCALE ANALYSIS] AT ALA-2</scope>
    <scope>CLEAVAGE OF INITIATOR METHIONINE [LARGE SCALE ANALYSIS]</scope>
    <scope>IDENTIFICATION BY MASS SPECTROMETRY [LARGE SCALE ANALYSIS]</scope>
</reference>
<reference key="86">
    <citation type="journal article" date="2009" name="EMBO J.">
        <title>SENP3 is responsible for HIF-1 transactivation under mild oxidative stress via p300 de-SUMOylation.</title>
        <authorList>
            <person name="Huang C."/>
            <person name="Han Y."/>
            <person name="Wang Y."/>
            <person name="Sun X."/>
            <person name="Yan S."/>
            <person name="Yeh E.T.H."/>
            <person name="Chen Y."/>
            <person name="Cang H."/>
            <person name="Li H."/>
            <person name="Shi G."/>
            <person name="Cheng J."/>
            <person name="Tang X."/>
            <person name="Yi J."/>
        </authorList>
    </citation>
    <scope>INTERACTION WITH SENP3</scope>
    <scope>SUMOYLATION</scope>
</reference>
<reference key="87">
    <citation type="journal article" date="2009" name="Sci. Signal.">
        <title>Quantitative phosphoproteomic analysis of T cell receptor signaling reveals system-wide modulation of protein-protein interactions.</title>
        <authorList>
            <person name="Mayya V."/>
            <person name="Lundgren D.H."/>
            <person name="Hwang S.-I."/>
            <person name="Rezaul K."/>
            <person name="Wu L."/>
            <person name="Eng J.K."/>
            <person name="Rodionov V."/>
            <person name="Han D.K."/>
        </authorList>
    </citation>
    <scope>IDENTIFICATION BY MASS SPECTROMETRY [LARGE SCALE ANALYSIS]</scope>
    <source>
        <tissue>Leukemic T-cell</tissue>
    </source>
</reference>
<reference key="88">
    <citation type="journal article" date="2009" name="Science">
        <title>Lysine acetylation targets protein complexes and co-regulates major cellular functions.</title>
        <authorList>
            <person name="Choudhary C."/>
            <person name="Kumar C."/>
            <person name="Gnad F."/>
            <person name="Nielsen M.L."/>
            <person name="Rehman M."/>
            <person name="Walther T.C."/>
            <person name="Olsen J.V."/>
            <person name="Mann M."/>
        </authorList>
    </citation>
    <scope>ACETYLATION [LARGE SCALE ANALYSIS] AT LYS-636; LYS-977; LYS-1542; LYS-1546; LYS-1554; LYS-1555; LYS-1558; LYS-1560 AND LYS-1583</scope>
    <scope>IDENTIFICATION BY MASS SPECTROMETRY [LARGE SCALE ANALYSIS]</scope>
</reference>
<reference key="89">
    <citation type="journal article" date="2010" name="J. Cell Sci.">
        <title>Acetylation of Rb by PCAF is required for nuclear localization and keratinocyte differentiation.</title>
        <authorList>
            <person name="Pickard A."/>
            <person name="Wong P.P."/>
            <person name="McCance D.J."/>
        </authorList>
    </citation>
    <scope>SUBCELLULAR LOCATION</scope>
</reference>
<reference key="90">
    <citation type="journal article" date="2010" name="J. Immunol.">
        <title>p300-mediated acetylation stabilizes the Th-inducing POK factor.</title>
        <authorList>
            <person name="Zhang M."/>
            <person name="Zhang J."/>
            <person name="Rui J."/>
            <person name="Liu X."/>
        </authorList>
    </citation>
    <scope>FUNCTION IN ACETYLATION OF ZBTB7B</scope>
</reference>
<reference key="91">
    <citation type="journal article" date="2010" name="J. Biol. Chem.">
        <title>Cyclin-dependent kinase-9 is a component of the p300/GATA4 complex required for phenylephrine-induced hypertrophy in cardiomyocytes.</title>
        <authorList>
            <person name="Sunagawa Y."/>
            <person name="Morimoto T."/>
            <person name="Takaya T."/>
            <person name="Kaichi S."/>
            <person name="Wada H."/>
            <person name="Kawamura T."/>
            <person name="Fujita M."/>
            <person name="Shimatsu A."/>
            <person name="Kita T."/>
            <person name="Hasegawa K."/>
        </authorList>
    </citation>
    <scope>IDENTIFICATION IN COMPLEX WITH CCNT1; CDK9 AND GATA4</scope>
</reference>
<reference key="92">
    <citation type="journal article" date="2010" name="J. Biol. Chem.">
        <title>HDAC3 is negatively regulated by the nuclear protein DBC1.</title>
        <authorList>
            <person name="Chini C.C."/>
            <person name="Escande C."/>
            <person name="Nin V."/>
            <person name="Chini E.N."/>
        </authorList>
    </citation>
    <scope>FUNCTION IN ACETYLATION OF MEF2D</scope>
</reference>
<reference key="93">
    <citation type="journal article" date="2011" name="BMC Syst. Biol.">
        <title>Initial characterization of the human central proteome.</title>
        <authorList>
            <person name="Burkard T.R."/>
            <person name="Planyavsky M."/>
            <person name="Kaupe I."/>
            <person name="Breitwieser F.P."/>
            <person name="Buerckstuemmer T."/>
            <person name="Bennett K.L."/>
            <person name="Superti-Furga G."/>
            <person name="Colinge J."/>
        </authorList>
    </citation>
    <scope>IDENTIFICATION BY MASS SPECTROMETRY [LARGE SCALE ANALYSIS]</scope>
</reference>
<reference key="94">
    <citation type="journal article" date="2011" name="Biochem. J.">
        <title>Regulation of unfolded protein response modulator XBP1s by acetylation and deacetylation.</title>
        <authorList>
            <person name="Wang F.M."/>
            <person name="Chen Y.J."/>
            <person name="Ouyang H.J."/>
        </authorList>
    </citation>
    <scope>FUNCTION IN ACETYLATION OF XBP1</scope>
</reference>
<reference key="95">
    <citation type="journal article" date="2011" name="EMBO J.">
        <title>Distinct roles of GCN5/PCAF-mediated H3K9ac and CBP/p300-mediated H3K18/27ac in nuclear receptor transactivation.</title>
        <authorList>
            <person name="Jin Q."/>
            <person name="Yu L.R."/>
            <person name="Wang L."/>
            <person name="Zhang Z."/>
            <person name="Kasper L.H."/>
            <person name="Lee J.E."/>
            <person name="Wang C."/>
            <person name="Brindle P.K."/>
            <person name="Dent S.Y."/>
            <person name="Ge K."/>
        </authorList>
    </citation>
    <scope>FUNCTION</scope>
    <scope>CATALYTIC ACTIVITY</scope>
</reference>
<reference key="96">
    <citation type="journal article" date="2011" name="Sci. Signal.">
        <title>System-wide temporal characterization of the proteome and phosphoproteome of human embryonic stem cell differentiation.</title>
        <authorList>
            <person name="Rigbolt K.T."/>
            <person name="Prokhorova T.A."/>
            <person name="Akimov V."/>
            <person name="Henningsen J."/>
            <person name="Johansen P.T."/>
            <person name="Kratchmarova I."/>
            <person name="Kassem M."/>
            <person name="Mann M."/>
            <person name="Olsen J.V."/>
            <person name="Blagoev B."/>
        </authorList>
    </citation>
    <scope>PHOSPHORYLATION [LARGE SCALE ANALYSIS] AT SER-1038</scope>
    <scope>IDENTIFICATION BY MASS SPECTROMETRY [LARGE SCALE ANALYSIS]</scope>
</reference>
<reference key="97">
    <citation type="journal article" date="2012" name="J. Biol. Chem.">
        <title>Multiple site acetylation of Rictor stimulates mammalian target of rapamycin complex 2 (mTORC2)-dependent phosphorylation of Akt protein.</title>
        <authorList>
            <person name="Glidden E.J."/>
            <person name="Gray L.G."/>
            <person name="Vemuru S."/>
            <person name="Li D."/>
            <person name="Harris T.E."/>
            <person name="Mayo M.W."/>
        </authorList>
    </citation>
    <scope>FUNCTION</scope>
    <scope>CATALYTIC ACTIVITY</scope>
</reference>
<reference key="98">
    <citation type="journal article" date="2012" name="Mol. Cell. Proteomics">
        <title>Comparative large-scale characterisation of plant vs. mammal proteins reveals similar and idiosyncratic N-alpha acetylation features.</title>
        <authorList>
            <person name="Bienvenut W.V."/>
            <person name="Sumpton D."/>
            <person name="Martinez A."/>
            <person name="Lilla S."/>
            <person name="Espagne C."/>
            <person name="Meinnel T."/>
            <person name="Giglione C."/>
        </authorList>
    </citation>
    <scope>ACETYLATION [LARGE SCALE ANALYSIS] AT ALA-2</scope>
    <scope>CLEAVAGE OF INITIATOR METHIONINE [LARGE SCALE ANALYSIS]</scope>
    <scope>IDENTIFICATION BY MASS SPECTROMETRY [LARGE SCALE ANALYSIS]</scope>
</reference>
<reference key="99">
    <citation type="journal article" date="2012" name="PLoS ONE">
        <title>Human ALKBH4 interacts with proteins associated with transcription.</title>
        <authorList>
            <person name="Bjornstad L.G."/>
            <person name="Meza T.J."/>
            <person name="Otterlei M."/>
            <person name="Olafsrud S.M."/>
            <person name="Meza-Zepeda L.A."/>
            <person name="Falnes P.O."/>
        </authorList>
    </citation>
    <scope>INTERACTION WITH ALKBH4</scope>
</reference>
<reference key="100">
    <citation type="journal article" date="2013" name="Cell">
        <title>Regulation of transcription through acetylation of H3K122 on the lateral surface of the histone octamer.</title>
        <authorList>
            <person name="Tropberger P."/>
            <person name="Pott S."/>
            <person name="Keller C."/>
            <person name="Kamieniarz-Gdula K."/>
            <person name="Caron M."/>
            <person name="Richter F."/>
            <person name="Li G."/>
            <person name="Mittler G."/>
            <person name="Liu E.T."/>
            <person name="Buhler M."/>
            <person name="Margueron R."/>
            <person name="Schneider R."/>
        </authorList>
    </citation>
    <scope>FUNCTION</scope>
    <scope>CATALYTIC ACTIVITY</scope>
</reference>
<reference key="101">
    <citation type="journal article" date="2013" name="Cell Rep.">
        <title>A hybrid mechanism of action for BCL6 in B cells defined by formation of functionally distinct complexes at enhancers and promoters.</title>
        <authorList>
            <person name="Hatzi K."/>
            <person name="Jiang Y."/>
            <person name="Huang C."/>
            <person name="Garrett-Bakelman F."/>
            <person name="Gearhart M.D."/>
            <person name="Giannopoulou E.G."/>
            <person name="Zumbo P."/>
            <person name="Kirouac K."/>
            <person name="Bhaskara S."/>
            <person name="Polo J.M."/>
            <person name="Kormaksson M."/>
            <person name="Mackerell A.D. Jr."/>
            <person name="Xue F."/>
            <person name="Mason C.E."/>
            <person name="Hiebert S.W."/>
            <person name="Prive G.G."/>
            <person name="Cerchietti L."/>
            <person name="Bardwell V.J."/>
            <person name="Elemento O."/>
            <person name="Melnick A."/>
        </authorList>
    </citation>
    <scope>FUNCTION AS ACETYLTRANSFERASE OF H3K27</scope>
</reference>
<reference key="102">
    <citation type="journal article" date="2013" name="J. Clin. Invest.">
        <title>Kruppel-like factor 15 is critical for vascular inflammation.</title>
        <authorList>
            <person name="Lu Y."/>
            <person name="Zhang L."/>
            <person name="Liao X."/>
            <person name="Sangwung P."/>
            <person name="Prosdocimo D.A."/>
            <person name="Zhou G."/>
            <person name="Votruba A.R."/>
            <person name="Brian L."/>
            <person name="Han Y.J."/>
            <person name="Gao H."/>
            <person name="Wang Y."/>
            <person name="Shimizu K."/>
            <person name="Weinert-Stein K."/>
            <person name="Khrestian M."/>
            <person name="Simon D.I."/>
            <person name="Freedman N.J."/>
            <person name="Jain M.K."/>
        </authorList>
    </citation>
    <scope>INTERACTION WITH KLF15</scope>
</reference>
<reference key="103">
    <citation type="journal article" date="2013" name="J. Proteome Res.">
        <title>Toward a comprehensive characterization of a human cancer cell phosphoproteome.</title>
        <authorList>
            <person name="Zhou H."/>
            <person name="Di Palma S."/>
            <person name="Preisinger C."/>
            <person name="Peng M."/>
            <person name="Polat A.N."/>
            <person name="Heck A.J."/>
            <person name="Mohammed S."/>
        </authorList>
    </citation>
    <scope>PHOSPHORYLATION [LARGE SCALE ANALYSIS] AT SER-1038 AND SER-1726</scope>
    <scope>IDENTIFICATION BY MASS SPECTROMETRY [LARGE SCALE ANALYSIS]</scope>
    <source>
        <tissue>Cervix carcinoma</tissue>
        <tissue>Erythroleukemia</tissue>
    </source>
</reference>
<reference key="104">
    <citation type="journal article" date="2013" name="Mol. Cell">
        <title>Mitogenic and oncogenic stimulation of K433 acetylation promotes PKM2 protein kinase activity and nuclear localization.</title>
        <authorList>
            <person name="Lv L."/>
            <person name="Xu Y.P."/>
            <person name="Zhao D."/>
            <person name="Li F.L."/>
            <person name="Wang W."/>
            <person name="Sasaki N."/>
            <person name="Jiang Y."/>
            <person name="Zhou X."/>
            <person name="Li T.T."/>
            <person name="Guan K.L."/>
            <person name="Lei Q.Y."/>
            <person name="Xiong Y."/>
        </authorList>
    </citation>
    <scope>FUNCTION</scope>
    <scope>CATALYTIC ACTIVITY</scope>
</reference>
<reference key="105">
    <citation type="journal article" date="2014" name="Cancer Res.">
        <title>Differential regulation of estrogen receptor alpha expression in breast cancer cells by metastasis-associated protein 1.</title>
        <authorList>
            <person name="Kang H.J."/>
            <person name="Lee M.H."/>
            <person name="Kang H.L."/>
            <person name="Kim S.H."/>
            <person name="Ahn J.R."/>
            <person name="Na H."/>
            <person name="Na T.Y."/>
            <person name="Kim Y.N."/>
            <person name="Seong J.K."/>
            <person name="Lee M.O."/>
        </authorList>
    </citation>
    <scope>INTERACTION WITH HDAC4 AND HDAC5</scope>
</reference>
<reference key="106">
    <citation type="journal article" date="2014" name="Cell Rep.">
        <title>Dynamic interactions between TIP60 and p300 regulate FOXP3 function through a structural switch defined by a single lysine on TIP60.</title>
        <authorList>
            <person name="Xiao Y."/>
            <person name="Nagai Y."/>
            <person name="Deng G."/>
            <person name="Ohtani T."/>
            <person name="Zhu Z."/>
            <person name="Zhou Z."/>
            <person name="Zhang H."/>
            <person name="Ji M.Q."/>
            <person name="Lough J.W."/>
            <person name="Samanta A."/>
            <person name="Hancock W.W."/>
            <person name="Greene M.I."/>
        </authorList>
    </citation>
    <scope>INTERACTION WITH KAT5</scope>
    <scope>MUTAGENESIS OF PHE-1504</scope>
</reference>
<reference key="107">
    <citation type="journal article" date="2014" name="J. Biol. Chem.">
        <title>Zinc finger protein 451 is a novel Smad corepressor in transforming growth factor-beta signaling.</title>
        <authorList>
            <person name="Feng Y."/>
            <person name="Wu H."/>
            <person name="Xu Y."/>
            <person name="Zhang Z."/>
            <person name="Liu T."/>
            <person name="Lin X."/>
            <person name="Feng X.H."/>
        </authorList>
    </citation>
    <scope>INTERACTION WITH ZNF451</scope>
    <scope>FUNCTION</scope>
</reference>
<reference key="108">
    <citation type="journal article" date="2014" name="J. Biol. Chem.">
        <title>Human Kruppel-related 3 (HKR3) is a novel transcription activator of alternate reading frame (ARF) gene.</title>
        <authorList>
            <person name="Yoon J.H."/>
            <person name="Choi W.I."/>
            <person name="Jeon B.N."/>
            <person name="Koh D.I."/>
            <person name="Kim M.K."/>
            <person name="Kim M.H."/>
            <person name="Kim J."/>
            <person name="Hur S.S."/>
            <person name="Kim K.S."/>
            <person name="Hur M.W."/>
        </authorList>
    </citation>
    <scope>INTERACTION WITH ZBTB48</scope>
</reference>
<reference key="109">
    <citation type="journal article" date="2014" name="J. Mol. Biol.">
        <title>Constitutive nuclear localization of an alternatively spliced sirtuin-2 isoform.</title>
        <authorList>
            <person name="Rack J.G."/>
            <person name="Vanlinden M.R."/>
            <person name="Lutter T."/>
            <person name="Aasland R."/>
            <person name="Ziegler M."/>
        </authorList>
    </citation>
    <scope>ACETYLATION</scope>
    <scope>DEACETYLATION BY SIRT2</scope>
    <scope>INTERACTION WITH EP300</scope>
</reference>
<reference key="110">
    <citation type="journal article" date="2014" name="J. Proteomics">
        <title>An enzyme assisted RP-RPLC approach for in-depth analysis of human liver phosphoproteome.</title>
        <authorList>
            <person name="Bian Y."/>
            <person name="Song C."/>
            <person name="Cheng K."/>
            <person name="Dong M."/>
            <person name="Wang F."/>
            <person name="Huang J."/>
            <person name="Sun D."/>
            <person name="Wang L."/>
            <person name="Ye M."/>
            <person name="Zou H."/>
        </authorList>
    </citation>
    <scope>PHOSPHORYLATION [LARGE SCALE ANALYSIS] AT SER-1038</scope>
    <scope>IDENTIFICATION BY MASS SPECTROMETRY [LARGE SCALE ANALYSIS]</scope>
    <source>
        <tissue>Liver</tissue>
    </source>
</reference>
<reference key="111">
    <citation type="journal article" date="2014" name="Mol. Cell">
        <title>Modification of ASC1 by UFM1 is crucial for ERalpha transactivation and breast cancer development.</title>
        <authorList>
            <person name="Yoo H.M."/>
            <person name="Kang S.H."/>
            <person name="Kim J.Y."/>
            <person name="Lee J.E."/>
            <person name="Seong M.W."/>
            <person name="Lee S.W."/>
            <person name="Ka S.H."/>
            <person name="Sou Y.S."/>
            <person name="Komatsu M."/>
            <person name="Tanaka K."/>
            <person name="Lee S.T."/>
            <person name="Noh D.Y."/>
            <person name="Baek S.H."/>
            <person name="Jeon Y.J."/>
            <person name="Chung C.H."/>
        </authorList>
    </citation>
    <scope>INTERACTION WITH TRIP4</scope>
</reference>
<reference key="112">
    <citation type="journal article" date="2014" name="Nucleic Acids Res.">
        <title>CBP and p300 acetylate PCNA to link its degradation with nucleotide excision repair synthesis.</title>
        <authorList>
            <person name="Cazzalini O."/>
            <person name="Sommatis S."/>
            <person name="Tillhon M."/>
            <person name="Dutto I."/>
            <person name="Bachi A."/>
            <person name="Rapp A."/>
            <person name="Nardo T."/>
            <person name="Scovassi A.I."/>
            <person name="Necchi D."/>
            <person name="Cardoso M.C."/>
            <person name="Stivala L.A."/>
            <person name="Prosperi E."/>
        </authorList>
    </citation>
    <scope>FUNCTION AS ACETYLTRANSFERASE OF PCNA</scope>
    <scope>INTERACTION WITH PCNA</scope>
</reference>
<reference key="113">
    <citation type="journal article" date="2014" name="Nucleic Acids Res.">
        <title>Two ZNF509 (ZBTB49) isoforms induce cell-cycle arrest by activating transcription of p21/CDKN1A and RB upon exposure to genotoxic stress.</title>
        <authorList>
            <person name="Jeon B.N."/>
            <person name="Kim M.K."/>
            <person name="Yoon J.H."/>
            <person name="Kim M.Y."/>
            <person name="An H."/>
            <person name="Noh H.J."/>
            <person name="Choi W.I."/>
            <person name="Koh D.I."/>
            <person name="Hur M.W."/>
        </authorList>
    </citation>
    <scope>INTERACTION WITH ZBTB49</scope>
</reference>
<reference key="114">
    <citation type="journal article" date="2015" name="Biochim. Biophys. Acta">
        <title>Pokemon (FBI-1) interacts with Smad4 to repress TGF-beta-induced transcriptional responses.</title>
        <authorList>
            <person name="Yang Y."/>
            <person name="Cui J."/>
            <person name="Xue F."/>
            <person name="Zhang C."/>
            <person name="Mei Z."/>
            <person name="Wang Y."/>
            <person name="Bi M."/>
            <person name="Shan D."/>
            <person name="Meredith A."/>
            <person name="Li H."/>
            <person name="Xu Z.Q."/>
        </authorList>
    </citation>
    <scope>FUNCTION</scope>
    <scope>INTERACTION WITH SMAD4</scope>
</reference>
<reference key="115">
    <citation type="journal article" date="2015" name="Genes Dev.">
        <title>Screen identifies bromodomain protein ZMYND8 in chromatin recognition of transcription-associated DNA damage that promotes homologous recombination.</title>
        <authorList>
            <person name="Gong F."/>
            <person name="Chiu L.Y."/>
            <person name="Cox B."/>
            <person name="Aymard F."/>
            <person name="Clouaire T."/>
            <person name="Leung J.W."/>
            <person name="Cammarata M."/>
            <person name="Perez M."/>
            <person name="Agarwal P."/>
            <person name="Brodbelt J.S."/>
            <person name="Legube G."/>
            <person name="Miller K.M."/>
        </authorList>
    </citation>
    <scope>SUBCELLULAR LOCATION</scope>
</reference>
<reference key="116">
    <citation type="journal article" date="2015" name="Mol. Cell">
        <title>Intracellular crotonyl-CoA stimulates transcription through p300-catalyzed histone crotonylation.</title>
        <authorList>
            <person name="Sabari B.R."/>
            <person name="Tang Z."/>
            <person name="Huang H."/>
            <person name="Yong-Gonzalez V."/>
            <person name="Molina H."/>
            <person name="Kong H.E."/>
            <person name="Dai L."/>
            <person name="Shimada M."/>
            <person name="Cross J.R."/>
            <person name="Zhao Y."/>
            <person name="Roeder R.G."/>
            <person name="Allis C.D."/>
        </authorList>
    </citation>
    <scope>FUNCTION</scope>
    <scope>CATALYTIC ACTIVITY</scope>
    <scope>SUBCELLULAR LOCATION</scope>
</reference>
<reference key="117">
    <citation type="journal article" date="2015" name="Nat. Immunol.">
        <title>PARP9-DTX3L ubiquitin ligase targets host histone H2BJ and viral 3C protease to enhance interferon signaling and control viral infection.</title>
        <authorList>
            <person name="Zhang Y."/>
            <person name="Mao D."/>
            <person name="Roswit W.T."/>
            <person name="Jin X."/>
            <person name="Patel A.C."/>
            <person name="Patel D.A."/>
            <person name="Agapov E."/>
            <person name="Wang Z."/>
            <person name="Tidwell R.M."/>
            <person name="Atkinson J.J."/>
            <person name="Huang G."/>
            <person name="McCarthy R."/>
            <person name="Yu J."/>
            <person name="Yun N.E."/>
            <person name="Paessler S."/>
            <person name="Lawson T.G."/>
            <person name="Omattage N.S."/>
            <person name="Brett T.J."/>
            <person name="Holtzman M.J."/>
        </authorList>
    </citation>
    <scope>INTERACTION WITH STAT1</scope>
</reference>
<reference key="118">
    <citation type="journal article" date="2016" name="Mol. Cell">
        <title>Glutamine triggers acetylation-dependent degradation of glutamine synthetase via the thalidomide receptor cereblon.</title>
        <authorList>
            <person name="Nguyen T.V."/>
            <person name="Lee J.E."/>
            <person name="Sweredoski M.J."/>
            <person name="Yang S.J."/>
            <person name="Jeon S.J."/>
            <person name="Harrison J.S."/>
            <person name="Yim J.H."/>
            <person name="Lee S.G."/>
            <person name="Handa H."/>
            <person name="Kuhlman B."/>
            <person name="Jeong J.S."/>
            <person name="Reitsma J.M."/>
            <person name="Park C.S."/>
            <person name="Hess S."/>
            <person name="Deshaies R.J."/>
        </authorList>
    </citation>
    <scope>FUNCTION</scope>
    <scope>CATALYTIC ACTIVITY</scope>
</reference>
<reference key="119">
    <citation type="journal article" date="2016" name="N. Engl. J. Med.">
        <title>Multisystem anomalies in severe combined immunodeficiency with mutant BCL11B.</title>
        <authorList>
            <person name="Punwani D."/>
            <person name="Zhang Y."/>
            <person name="Yu J."/>
            <person name="Cowan M.J."/>
            <person name="Rana S."/>
            <person name="Kwan A."/>
            <person name="Adhikari A.N."/>
            <person name="Lizama C.O."/>
            <person name="Mendelsohn B.A."/>
            <person name="Fahl S.P."/>
            <person name="Chellappan A."/>
            <person name="Srinivasan R."/>
            <person name="Brenner S.E."/>
            <person name="Wiest D.L."/>
            <person name="Puck J.M."/>
        </authorList>
    </citation>
    <scope>INTERACTION WITH BCL11B</scope>
</reference>
<reference key="120">
    <citation type="journal article" date="2016" name="Nucleic Acids Res.">
        <title>DUX4 recruits p300/CBP through its C-terminus and induces global H3K27 acetylation changes.</title>
        <authorList>
            <person name="Choi S.H."/>
            <person name="Gearhart M.D."/>
            <person name="Cui Z."/>
            <person name="Bosnakovski D."/>
            <person name="Kim M."/>
            <person name="Schennum N."/>
            <person name="Kyba M."/>
        </authorList>
    </citation>
    <scope>INTERACTION WITH DUX4</scope>
</reference>
<reference key="121">
    <citation type="journal article" date="2016" name="Sci. Rep.">
        <title>Heat shock factor 1 mediates latent HIV reactivation.</title>
        <authorList>
            <person name="Pan X.Y."/>
            <person name="Zhao W."/>
            <person name="Zeng X.Y."/>
            <person name="Lin J."/>
            <person name="Li M.M."/>
            <person name="Shen X.T."/>
            <person name="Liu S.W."/>
        </authorList>
    </citation>
    <scope>INTERACTION WITH HSF1</scope>
</reference>
<reference key="122">
    <citation type="journal article" date="2017" name="Sci. Rep.">
        <title>RNA helicase DDX3 maintains lipid homeostasis through upregulation of the microsomal triglyceride transfer protein by interacting with HNF4 and SHP.</title>
        <authorList>
            <person name="Tsai T.Y."/>
            <person name="Wang W.T."/>
            <person name="Li H.K."/>
            <person name="Chen W.J."/>
            <person name="Tsai Y.H."/>
            <person name="Chao C.H."/>
            <person name="Wu Lee Y.H."/>
        </authorList>
    </citation>
    <scope>INTERACTION WITH DDX3X</scope>
</reference>
<reference key="123">
    <citation type="journal article" date="2018" name="Mol. Cell">
        <title>p300-mediated lysine 2-hydroxyisobutyrylation regulates glycolysis.</title>
        <authorList>
            <person name="Huang H."/>
            <person name="Tang S."/>
            <person name="Ji M."/>
            <person name="Tang Z."/>
            <person name="Shimada M."/>
            <person name="Liu X."/>
            <person name="Qi S."/>
            <person name="Locasale J.W."/>
            <person name="Roeder R.G."/>
            <person name="Zhao Y."/>
            <person name="Li X."/>
        </authorList>
    </citation>
    <scope>FUNCTION</scope>
    <scope>CATALYTIC ACTIVITY</scope>
    <scope>MUTAGENESIS OF ASP-1399</scope>
</reference>
<reference key="124">
    <citation type="journal article" date="2018" name="Mol. Cell">
        <title>Dynamic acetylation of phosphoenolpyruvate carboxykinase toggles enzyme activity between gluconeogenic and anaplerotic reactions.</title>
        <authorList>
            <person name="Latorre-Muro P."/>
            <person name="Baeza J."/>
            <person name="Armstrong E.A."/>
            <person name="Hurtado-Guerrero R."/>
            <person name="Corzana F."/>
            <person name="Wu L.E."/>
            <person name="Sinclair D.A."/>
            <person name="Lopez-Buesa P."/>
            <person name="Carrodeguas J.A."/>
            <person name="Denu J.M."/>
        </authorList>
    </citation>
    <scope>FUNCTION IN ACETYLATION OF PCK1</scope>
</reference>
<reference key="125">
    <citation type="journal article" date="2019" name="Cell Metab.">
        <title>Leucine signals to mTORC1 via its metabolite acetyl-coenzyme A.</title>
        <authorList>
            <person name="Son S.M."/>
            <person name="Park S.J."/>
            <person name="Lee H."/>
            <person name="Siddiqi F."/>
            <person name="Lee J.E."/>
            <person name="Menzies F.M."/>
            <person name="Rubinsztein D.C."/>
        </authorList>
    </citation>
    <scope>FUNCTION</scope>
    <scope>CATALYTIC ACTIVITY</scope>
</reference>
<reference key="126">
    <citation type="journal article" date="2019" name="Nature">
        <title>Metabolic regulation of gene expression by histone lactylation.</title>
        <authorList>
            <person name="Zhang D."/>
            <person name="Tang Z."/>
            <person name="Huang H."/>
            <person name="Zhou G."/>
            <person name="Cui C."/>
            <person name="Weng Y."/>
            <person name="Liu W."/>
            <person name="Kim S."/>
            <person name="Lee S."/>
            <person name="Perez-Neut M."/>
            <person name="Ding J."/>
            <person name="Czyz D."/>
            <person name="Hu R."/>
            <person name="Ye Z."/>
            <person name="He M."/>
            <person name="Zheng Y.G."/>
            <person name="Shuman H.A."/>
            <person name="Dai L."/>
            <person name="Ren B."/>
            <person name="Roeder R.G."/>
            <person name="Becker L."/>
            <person name="Zhao Y."/>
        </authorList>
    </citation>
    <scope>FUNCTION</scope>
    <scope>CATALYTIC ACTIVITY</scope>
</reference>
<reference key="127">
    <citation type="journal article" date="2020" name="Nat. Commun.">
        <title>Leucine regulates autophagy via acetylation of the mTORC1 component raptor.</title>
        <authorList>
            <person name="Son S.M."/>
            <person name="Park S.J."/>
            <person name="Stamatakou E."/>
            <person name="Vicinanza M."/>
            <person name="Menzies F.M."/>
            <person name="Rubinsztein D.C."/>
        </authorList>
    </citation>
    <scope>FUNCTION</scope>
    <scope>CATALYTIC ACTIVITY</scope>
</reference>
<reference key="128">
    <citation type="journal article" date="2023" name="Nature">
        <title>Acetyl-methyllysine marks chromatin at active transcription start sites.</title>
        <authorList>
            <person name="Lu-Culligan W.J."/>
            <person name="Connor L.J."/>
            <person name="Xie Y."/>
            <person name="Ekundayo B.E."/>
            <person name="Rose B.T."/>
            <person name="Machyna M."/>
            <person name="Pintado-Urbanc A.P."/>
            <person name="Zimmer J.T."/>
            <person name="Vock I.W."/>
            <person name="Bhanu N.V."/>
            <person name="King M.C."/>
            <person name="Garcia B.A."/>
            <person name="Bleichert F."/>
            <person name="Simon M.D."/>
        </authorList>
    </citation>
    <scope>FUNCTION</scope>
    <scope>CATALYTIC ACTIVITY</scope>
</reference>
<reference key="129">
    <citation type="journal article" date="2002" name="Proc. Natl. Acad. Sci. U.S.A.">
        <title>Structural basis for recruitment of CBP/p300 by hypoxia-inducible factor-1 alpha.</title>
        <authorList>
            <person name="Freedman S.J."/>
            <person name="Sun Z.-Y.J."/>
            <person name="Poy F."/>
            <person name="Kung A.L."/>
            <person name="Livingston D.M."/>
            <person name="Wagner G."/>
            <person name="Eck M.J."/>
        </authorList>
    </citation>
    <scope>STRUCTURE BY NMR OF 302-418 IN COMPLEX WITH HIF1A PEPTIDE AND ZINC IONS</scope>
</reference>
<reference key="130">
    <citation type="journal article" date="2003" name="Nat. Struct. Biol.">
        <title>Structural basis for negative regulation of hypoxia-inducible factor-1alpha by CITED2.</title>
        <authorList>
            <person name="Freedman S.J."/>
            <person name="Sun Z.Y."/>
            <person name="Kung A.L."/>
            <person name="France D.S."/>
            <person name="Wagner G."/>
            <person name="Eck M.J."/>
        </authorList>
    </citation>
    <scope>STRUCTURE BY NMR OF 323-423 IN COMPLEX WITH 216-259 OF CITED2 AND ZINC IONS</scope>
    <scope>INTERACTION WITH CITED2</scope>
    <scope>MUTAGENESIS OF LEU-344 AND LEU-345</scope>
</reference>
<reference key="131">
    <citation type="journal article" date="2008" name="Nature">
        <title>The structural basis of protein acetylation by the p300/CBP transcriptional coactivator.</title>
        <authorList>
            <person name="Liu X."/>
            <person name="Wang L."/>
            <person name="Zhao K."/>
            <person name="Thompson P.R."/>
            <person name="Hwang Y."/>
            <person name="Marmorstein R."/>
            <person name="Cole P.A."/>
        </authorList>
    </citation>
    <scope>X-RAY CRYSTALLOGRAPHY (1.7 ANGSTROMS) OF 1287-1666 IN COMPLEX WITH LYS-COA</scope>
    <scope>MUTAGENESIS OF THR-1357; SER-1396; TYR-1397; GLU-1505; ASP-1625 AND ASP-1628</scope>
</reference>
<reference key="132">
    <citation type="journal article" date="2009" name="Structure">
        <title>Structural basis for p300 Taz2-p53 TAD1 binding and modulation by phosphorylation.</title>
        <authorList>
            <person name="Feng H."/>
            <person name="Jenkins L.M.M."/>
            <person name="Durell S.R."/>
            <person name="Hayashi R."/>
            <person name="Mazur S.J."/>
            <person name="Cherry S."/>
            <person name="Tropea J.E."/>
            <person name="Miller M."/>
            <person name="Wlodawer A."/>
            <person name="Appella E."/>
            <person name="Bai Y."/>
        </authorList>
    </citation>
    <scope>STRUCTURE BY NMR OF 1723-1812</scope>
    <scope>INTERACTION WITH TP53</scope>
</reference>
<reference key="133">
    <citation type="journal article" date="2012" name="Cell">
        <title>Histone recognition and large-scale structural analysis of the human bromodomain family.</title>
        <authorList>
            <person name="Filippakopoulos P."/>
            <person name="Picaud S."/>
            <person name="Mangos M."/>
            <person name="Keates T."/>
            <person name="Lambert J.P."/>
            <person name="Barsyte-Lovejoy D."/>
            <person name="Felletar I."/>
            <person name="Volkmer R."/>
            <person name="Muller S."/>
            <person name="Pawson T."/>
            <person name="Gingras A.C."/>
            <person name="Arrowsmith C.H."/>
            <person name="Knapp S."/>
        </authorList>
    </citation>
    <scope>X-RAY CRYSTALLOGRAPHY (2.33 ANGSTROMS) OF 1040-1161</scope>
</reference>
<reference key="134">
    <citation type="journal article" date="2013" name="Nat. Struct. Mol. Biol.">
        <title>Structure of the p300 catalytic core and implications for chromatin targeting and HAT regulation.</title>
        <authorList>
            <person name="Delvecchio M."/>
            <person name="Gaucher J."/>
            <person name="Aguilar-Gurrieri C."/>
            <person name="Ortega E."/>
            <person name="Panne D."/>
        </authorList>
    </citation>
    <scope>X-RAY CRYSTALLOGRAPHY (2.80 ANGSTROMS) OF 1043-1519 AND 1581-1666 OF MUTANT PHE-1467 IN COMPLEX WITH ZINC</scope>
    <scope>CATALYTIC ACTIVITY</scope>
    <scope>FUNCTION</scope>
    <scope>AUTOACETYLATION</scope>
    <scope>MUTAGENESIS OF PHE-1170; CYS-1204; GLU-1242; ASP-1399; TYR-1467 AND 1645-ARG-ARG-1646</scope>
</reference>
<reference key="135">
    <citation type="journal article" date="2014" name="Biochemistry">
        <title>Structure of the p300 histone acetyltransferase bound to acetyl-coenzyme A and its analogues.</title>
        <authorList>
            <person name="Maksimoska J."/>
            <person name="Segura-Pena D."/>
            <person name="Cole P.A."/>
            <person name="Marmorstein R."/>
        </authorList>
    </citation>
    <scope>X-RAY CRYSTALLOGRAPHY (1.94 ANGSTROMS) OF 1287-1664 OF MUTANT PHE-1467 IN COMPLEX WITH ACETYL-COA AND COENZYME A</scope>
</reference>
<reference key="136">
    <citation type="journal article" date="2000" name="Nat. Genet.">
        <title>Mutations truncating the EP300 acetylase in human cancers.</title>
        <authorList>
            <person name="Gayther S.A."/>
            <person name="Batley S.J."/>
            <person name="Linger L."/>
            <person name="Bannister A."/>
            <person name="Thorpe K."/>
            <person name="Chin S.-F."/>
            <person name="Daigo Y."/>
            <person name="Russell P."/>
            <person name="Wilson A."/>
            <person name="Sowter H.M."/>
            <person name="Delhanty J.D.A."/>
            <person name="Ponder B.A.J."/>
            <person name="Kouzarides T."/>
            <person name="Caldas C."/>
        </authorList>
    </citation>
    <scope>VARIANTS PRO-827; GLY-1013; TYR-1650 AND GLN-2221</scope>
    <scope>POSSIBLE INVOLVEMENT IN CANCER</scope>
</reference>
<reference key="137">
    <citation type="journal article" date="2015" name="Clin. Genet.">
        <title>Clinical and molecular characterization of Rubinstein-Taybi syndrome patients carrying distinct novel mutations of the EP300 gene.</title>
        <authorList>
            <person name="Negri G."/>
            <person name="Milani D."/>
            <person name="Colapietro P."/>
            <person name="Forzano F."/>
            <person name="Della Monica M."/>
            <person name="Rusconi D."/>
            <person name="Consonni L."/>
            <person name="Caffi L.G."/>
            <person name="Finelli P."/>
            <person name="Scarano G."/>
            <person name="Magnani C."/>
            <person name="Selicorni A."/>
            <person name="Spena S."/>
            <person name="Larizza L."/>
            <person name="Gervasini C."/>
        </authorList>
    </citation>
    <scope>VARIANT ILE-1511</scope>
</reference>
<reference key="138">
    <citation type="journal article" date="2017" name="Brain">
        <title>Exome sequencing and network analysis identifies shared mechanisms underlying spinocerebellar ataxia.</title>
        <authorList>
            <person name="Nibbeling E.A.R."/>
            <person name="Duarri A."/>
            <person name="Verschuuren-Bemelmans C.C."/>
            <person name="Fokkens M.R."/>
            <person name="Karjalainen J.M."/>
            <person name="Smeets C.J.L.M."/>
            <person name="de Boer-Bergsma J.J."/>
            <person name="van der Vries G."/>
            <person name="Dooijes D."/>
            <person name="Bampi G.B."/>
            <person name="van Diemen C."/>
            <person name="Brunt E."/>
            <person name="Ippel E."/>
            <person name="Kremer B."/>
            <person name="Vlak M."/>
            <person name="Adir N."/>
            <person name="Wijmenga C."/>
            <person name="van de Warrenburg B.P.C."/>
            <person name="Franke L."/>
            <person name="Sinke R.J."/>
            <person name="Verbeek D.S."/>
        </authorList>
    </citation>
    <scope>VARIANT ARG-2007</scope>
</reference>
<reference key="139">
    <citation type="journal article" date="2018" name="Am. J. Med. Genet. A">
        <title>Further delineation of an entity caused by CREBBP and EP300 mutations but not resembling Rubinstein-Taybi syndrome.</title>
        <authorList>
            <consortium name="DDD study"/>
            <person name="Menke L.A."/>
            <person name="Gardeitchik T."/>
            <person name="Hammond P."/>
            <person name="Heimdal K.R."/>
            <person name="Houge G."/>
            <person name="Hufnagel S.B."/>
            <person name="Ji J."/>
            <person name="Johansson S."/>
            <person name="Kant S.G."/>
            <person name="Kinning E."/>
            <person name="Leon E.L."/>
            <person name="Newbury-Ecob R."/>
            <person name="Paolacci S."/>
            <person name="Pfundt R."/>
            <person name="Ragge N.K."/>
            <person name="Rinne T."/>
            <person name="Ruivenkamp C."/>
            <person name="Saitta S.C."/>
            <person name="Sun Y."/>
            <person name="Tartaglia M."/>
            <person name="Terhal P.A."/>
            <person name="van Essen A.J."/>
            <person name="Vigeland M.D."/>
            <person name="Xiao B."/>
            <person name="Hennekam R.C."/>
        </authorList>
    </citation>
    <scope>VARIANTS MKHK2 PRO-1824 AND ARG-1831 DEL</scope>
    <scope>INVOLVEMENT IN MKHK2</scope>
</reference>
<proteinExistence type="evidence at protein level"/>
<keyword id="KW-0002">3D-structure</keyword>
<keyword id="KW-0007">Acetylation</keyword>
<keyword id="KW-0012">Acyltransferase</keyword>
<keyword id="KW-0090">Biological rhythms</keyword>
<keyword id="KW-0103">Bromodomain</keyword>
<keyword id="KW-0131">Cell cycle</keyword>
<keyword id="KW-0160">Chromosomal rearrangement</keyword>
<keyword id="KW-0158">Chromosome</keyword>
<keyword id="KW-0164">Citrullination</keyword>
<keyword id="KW-0963">Cytoplasm</keyword>
<keyword id="KW-0903">Direct protein sequencing</keyword>
<keyword id="KW-0225">Disease variant</keyword>
<keyword id="KW-0945">Host-virus interaction</keyword>
<keyword id="KW-0991">Intellectual disability</keyword>
<keyword id="KW-1017">Isopeptide bond</keyword>
<keyword id="KW-0479">Metal-binding</keyword>
<keyword id="KW-0488">Methylation</keyword>
<keyword id="KW-0539">Nucleus</keyword>
<keyword id="KW-0597">Phosphoprotein</keyword>
<keyword id="KW-1267">Proteomics identification</keyword>
<keyword id="KW-1185">Reference proteome</keyword>
<keyword id="KW-0677">Repeat</keyword>
<keyword id="KW-0804">Transcription</keyword>
<keyword id="KW-0805">Transcription regulation</keyword>
<keyword id="KW-0808">Transferase</keyword>
<keyword id="KW-0832">Ubl conjugation</keyword>
<keyword id="KW-0862">Zinc</keyword>
<keyword id="KW-0863">Zinc-finger</keyword>
<comment type="function">
    <text evidence="1 13 19 23 29 36 39 45 47 49 52 54 57 60 62 65 66 71 72 75 78 79 80 84 86 87 88 90 91 92 94 101 104 106 109 115 116 117 118 119 120 123 124 133">Functions as a histone acetyltransferase and regulates transcription via chromatin remodeling (PubMed:23415232, PubMed:23934153, PubMed:8945521). Acetylates all four core histones in nucleosomes (PubMed:23415232, PubMed:23934153, PubMed:8945521). Histone acetylation gives an epigenetic tag for transcriptional activation (PubMed:23415232, PubMed:23934153, PubMed:8945521). Mediates acetylation of histone H3 at 'Lys-122' (H3K122ac), a modification that localizes at the surface of the histone octamer and stimulates transcription, possibly by promoting nucleosome instability (PubMed:23415232). Mediates acetylation of histone H3 at 'Lys-18' and 'Lys-27' (H3K18ac and H3K27ac, respectively) (PubMed:21131905, PubMed:23911289). Also able to acetylate histone lysine residues that are already monomethylated on the same side chain to form N6-acetyl-N6-methyllysine (Kacme), an epigenetic mark of active chromatin associated with increased transcriptional initiation (PubMed:37731000). Catalyzes formation of histone H4 acetyl-methylated at 'Lys-5' and 'Lys-12' (H4K5acme and H4K12acme, respectively) (PubMed:37731000). Also functions as acetyltransferase for non-histone targets, such as ALX1, HDAC1, PRMT1, SIRT2, STAT3 or GLUL (PubMed:12929931, PubMed:15653507, PubMed:16285960, PubMed:16762839, PubMed:18722353, PubMed:18782771, PubMed:26990986). Acetylates 'Lys-131' of ALX1 and acts as its coactivator (PubMed:12929931). Acetylates SIRT2 and is proposed to indirectly increase the transcriptional activity of p53/TP53 through acetylation and subsequent attenuation of SIRT2 deacetylase function (PubMed:18722353). Following DNA damage, forms a stress-responsive p53/TP53 coactivator complex with JMY which mediates p53/TP53 acetylation, thereby increasing p53/TP53-dependent transcription and apoptosis (PubMed:11511361, PubMed:15448695). Promotes chromatin acetylation in heat shock responsive HSP genes during the heat shock response (HSR), thereby stimulating HSR transcription (PubMed:18451878). Acetylates HDAC1 leading to its inactivation and modulation of transcription (PubMed:16762839). Acetylates 'Lys-247' of EGR2 (By similarity). Acts as a TFAP2A-mediated transcriptional coactivator in presence of CITED2 (PubMed:12586840). Plays a role as a coactivator of NEUROD1-dependent transcription of the secretin and p21 genes and controls terminal differentiation of cells in the intestinal epithelium. Promotes cardiac myocyte enlargement (PubMed:14752053). Can also mediate transcriptional repression. Acetylates FOXO1 and enhances its transcriptional activity (PubMed:15890677). Acetylates STAT3 at different sites, promoting both STAT3 dimerization and activation and recruitment to chromatin (PubMed:15653507, PubMed:16285960, PubMed:18782771). Acetylates BCL6 which disrupts its ability to recruit histone deacetylases and hinders its transcriptional repressor activity (PubMed:12402037). Participates in CLOCK or NPAS2-regulated rhythmic gene transcription; exhibits a circadian association with CLOCK or NPAS2, correlating with increase in PER1/2 mRNA and histone H3 acetylation on the PER1/2 promoter (PubMed:14645221). Acetylates MTA1 at 'Lys-626' which is essential for its transcriptional coactivator activity (PubMed:16617102). Acetylates XBP1 isoform 2; acetylation increases protein stability of XBP1 isoform 2 and enhances its transcriptional activity (PubMed:20955178). Acetylates PCNA; acetylation promotes removal of chromatin-bound PCNA and its degradation during nucleotide excision repair (NER) (PubMed:24939902). Acetylates MEF2D (PubMed:21030595). Acetylates and stabilizes ZBTB7B protein by antagonizing ubiquitin conjugation and degradation, this mechanism may be involved in CD4/CD8 lineage differentiation (PubMed:20810990). Acetylates GABPB1, impairing GABPB1 heterotetramerization and activity (By similarity). Acetylates PCK1 and promotes PCK1 anaplerotic activity (PubMed:30193097). Acetylates RXRA and RXRG (PubMed:17761950). Acetylates isoform M2 of PKM (PKM2), promoting its homodimerization and conversion into a protein kinase (PubMed:24120661). Acetylates RPTOR in response to leucine, leading to activation of the mTORC1 complex (PubMed:30197302, PubMed:32561715). Acetylates RICTOR, leading to activation of the mTORC2 complex (PubMed:22084251). Mediates cAMP-gene regulation by binding specifically to phosphorylated CREBBP (PubMed:8917528). In addition to protein acetyltransferase, can use different acyl-CoA substrates, such as (2E)-butenoyl-CoA (crotonyl-CoA), butanoyl-CoA (butyryl-CoA), 2-hydroxyisobutanoyl-CoA (2-hydroxyisobutyryl-CoA), lactoyl-CoA or propanoyl-CoA (propionyl-CoA), and is able to mediate protein crotonylation, butyrylation, 2-hydroxyisobutyrylation, lactylation or propionylation, respectively (PubMed:17267393, PubMed:25818647, PubMed:29775581, PubMed:31645732). Acts as a histone crotonyltransferase; crotonylation marks active promoters and enhancers and confers resistance to transcriptional repressors (PubMed:25818647). Histone crotonyltransferase activity is dependent on the concentration of (2E)-butenoyl-CoA (crotonyl-CoA) substrate and such activity is weak when (2E)-butenoyl-CoA (crotonyl-CoA) concentration is low (PubMed:25818647). Also acts as a histone butyryltransferase; butyrylation marks active promoters (PubMed:17267393). Catalyzes histone lactylation in macrophages by using lactoyl-CoA directly derived from endogenous or exogenous lactate, leading to stimulates gene transcription (PubMed:31645732). Acts as a protein-lysine 2-hydroxyisobutyryltransferase; regulates glycolysis by mediating 2-hydroxyisobutyrylation of glycolytic enzymes (PubMed:29775581). Functions as a transcriptional coactivator for SMAD4 in the TGF-beta signaling pathway (PubMed:25514493).</text>
</comment>
<comment type="function">
    <text evidence="10 17">(Microbial infection) In case of HIV-1 infection, it is recruited by the viral protein Tat. Regulates Tat's transactivating activity and may help inducing chromatin remodeling of proviral genes. Binds to and may be involved in the transforming capacity of the adenovirus E1A protein.</text>
</comment>
<comment type="catalytic activity">
    <reaction evidence="47 87 90 92 106 124">
        <text>L-lysyl-[histone] + acetyl-CoA = N(6)-acetyl-L-lysyl-[histone] + CoA + H(+)</text>
        <dbReference type="Rhea" id="RHEA:21992"/>
        <dbReference type="Rhea" id="RHEA-COMP:9845"/>
        <dbReference type="Rhea" id="RHEA-COMP:11338"/>
        <dbReference type="ChEBI" id="CHEBI:15378"/>
        <dbReference type="ChEBI" id="CHEBI:29969"/>
        <dbReference type="ChEBI" id="CHEBI:57287"/>
        <dbReference type="ChEBI" id="CHEBI:57288"/>
        <dbReference type="ChEBI" id="CHEBI:61930"/>
        <dbReference type="EC" id="2.3.1.48"/>
    </reaction>
    <physiologicalReaction direction="left-to-right" evidence="47 87 90 92 106 124">
        <dbReference type="Rhea" id="RHEA:21993"/>
    </physiologicalReaction>
</comment>
<comment type="catalytic activity">
    <reaction evidence="54 57 62 72 88 94 109 117 119">
        <text>L-lysyl-[protein] + acetyl-CoA = N(6)-acetyl-L-lysyl-[protein] + CoA + H(+)</text>
        <dbReference type="Rhea" id="RHEA:45948"/>
        <dbReference type="Rhea" id="RHEA-COMP:9752"/>
        <dbReference type="Rhea" id="RHEA-COMP:10731"/>
        <dbReference type="ChEBI" id="CHEBI:15378"/>
        <dbReference type="ChEBI" id="CHEBI:29969"/>
        <dbReference type="ChEBI" id="CHEBI:57287"/>
        <dbReference type="ChEBI" id="CHEBI:57288"/>
        <dbReference type="ChEBI" id="CHEBI:61930"/>
    </reaction>
    <physiologicalReaction direction="left-to-right" evidence="57 62 132 134 135">
        <dbReference type="Rhea" id="RHEA:45949"/>
    </physiologicalReaction>
</comment>
<comment type="catalytic activity">
    <reaction evidence="120">
        <text>N(6)-methyl-L-lysyl-[histone] + acetyl-CoA = N(6)-acetyl-N(6)-methyl-L-lysyl-[histone] + CoA + H(+)</text>
        <dbReference type="Rhea" id="RHEA:77775"/>
        <dbReference type="Rhea" id="RHEA-COMP:9846"/>
        <dbReference type="Rhea" id="RHEA-COMP:18984"/>
        <dbReference type="ChEBI" id="CHEBI:15378"/>
        <dbReference type="ChEBI" id="CHEBI:57287"/>
        <dbReference type="ChEBI" id="CHEBI:57288"/>
        <dbReference type="ChEBI" id="CHEBI:61929"/>
        <dbReference type="ChEBI" id="CHEBI:197459"/>
    </reaction>
    <physiologicalReaction direction="left-to-right" evidence="120">
        <dbReference type="Rhea" id="RHEA:77776"/>
    </physiologicalReaction>
</comment>
<comment type="catalytic activity">
    <reaction evidence="106">
        <text>(2E)-butenoyl-CoA + L-lysyl-[protein] = N(6)-(2E)-butenoyl-L-lysyl-[protein] + CoA + H(+)</text>
        <dbReference type="Rhea" id="RHEA:53908"/>
        <dbReference type="Rhea" id="RHEA-COMP:9752"/>
        <dbReference type="Rhea" id="RHEA-COMP:13707"/>
        <dbReference type="ChEBI" id="CHEBI:15378"/>
        <dbReference type="ChEBI" id="CHEBI:29969"/>
        <dbReference type="ChEBI" id="CHEBI:57287"/>
        <dbReference type="ChEBI" id="CHEBI:57332"/>
        <dbReference type="ChEBI" id="CHEBI:137954"/>
    </reaction>
</comment>
<comment type="catalytic activity">
    <reaction evidence="1">
        <text>butanoyl-CoA + L-lysyl-[protein] = N(6)-butanoyl-L-lysyl-[protein] + CoA + H(+)</text>
        <dbReference type="Rhea" id="RHEA:53912"/>
        <dbReference type="Rhea" id="RHEA-COMP:9752"/>
        <dbReference type="Rhea" id="RHEA-COMP:13708"/>
        <dbReference type="ChEBI" id="CHEBI:15378"/>
        <dbReference type="ChEBI" id="CHEBI:29969"/>
        <dbReference type="ChEBI" id="CHEBI:57287"/>
        <dbReference type="ChEBI" id="CHEBI:57371"/>
        <dbReference type="ChEBI" id="CHEBI:137955"/>
    </reaction>
</comment>
<comment type="catalytic activity">
    <reaction evidence="71">
        <text>propanoyl-CoA + L-lysyl-[protein] = N(6)-propanoyl-L-lysyl-[protein] + CoA + H(+)</text>
        <dbReference type="Rhea" id="RHEA:54020"/>
        <dbReference type="Rhea" id="RHEA-COMP:9752"/>
        <dbReference type="Rhea" id="RHEA-COMP:13758"/>
        <dbReference type="ChEBI" id="CHEBI:15378"/>
        <dbReference type="ChEBI" id="CHEBI:29969"/>
        <dbReference type="ChEBI" id="CHEBI:57287"/>
        <dbReference type="ChEBI" id="CHEBI:57392"/>
        <dbReference type="ChEBI" id="CHEBI:138019"/>
    </reaction>
</comment>
<comment type="catalytic activity">
    <reaction evidence="115">
        <text>2-hydroxyisobutanoyl-CoA + L-lysyl-[protein] = N(6)-(2-hydroxyisobutanoyl)-L-lysyl-[protein] + CoA + H(+)</text>
        <dbReference type="Rhea" id="RHEA:24180"/>
        <dbReference type="Rhea" id="RHEA-COMP:9752"/>
        <dbReference type="Rhea" id="RHEA-COMP:15921"/>
        <dbReference type="ChEBI" id="CHEBI:15378"/>
        <dbReference type="ChEBI" id="CHEBI:29969"/>
        <dbReference type="ChEBI" id="CHEBI:57287"/>
        <dbReference type="ChEBI" id="CHEBI:131780"/>
        <dbReference type="ChEBI" id="CHEBI:144968"/>
    </reaction>
    <physiologicalReaction direction="left-to-right" evidence="115">
        <dbReference type="Rhea" id="RHEA:24181"/>
    </physiologicalReaction>
</comment>
<comment type="catalytic activity">
    <reaction evidence="118">
        <text>(S)-lactoyl-CoA + L-lysyl-[protein] = N(6)-[(S)-lactoyl]-L-lysyl-[protein] + CoA + H(+)</text>
        <dbReference type="Rhea" id="RHEA:61996"/>
        <dbReference type="Rhea" id="RHEA-COMP:9752"/>
        <dbReference type="Rhea" id="RHEA-COMP:19466"/>
        <dbReference type="ChEBI" id="CHEBI:15378"/>
        <dbReference type="ChEBI" id="CHEBI:29969"/>
        <dbReference type="ChEBI" id="CHEBI:57287"/>
        <dbReference type="ChEBI" id="CHEBI:231527"/>
        <dbReference type="ChEBI" id="CHEBI:231528"/>
    </reaction>
    <physiologicalReaction direction="left-to-right" evidence="118">
        <dbReference type="Rhea" id="RHEA:61997"/>
    </physiologicalReaction>
</comment>
<comment type="subunit">
    <text evidence="1 9 12 14 15 16 18 19 22 23 24 26 27 28 29 30 31 32 33 34 35 37 38 39 41 42 43 44 45 46 47 48 49 51 52 53 54 55 59 61 63 64 65 67 68 70 72 73 75 79 81 82 83 89 93 95 96 97 100 102 103 104 107 108 110 111 112 122 123 126 127 128">Interacts with HIF1A; the interaction is stimulated in response to hypoxia and inhibited by CITED2 (PubMed:11959990, PubMed:9887100). Probably part of a complex with HIF1A and CREBBP (PubMed:8917528). Interacts (via N-terminus) with TFAP2A (via N-terminus); the interaction requires CITED2 (PubMed:12586840). Interacts (via CH1 domain) with CITED2 (via C-terminus) (PubMed:12586840, PubMed:12778114). Interacts with CITED1 (unphosphorylated form preferentially and via C-terminus) (PubMed:10722728, PubMed:16864582). Interacts with ESR1; the interaction is estrogen-dependent and enhanced by CITED1 (PubMed:11581164). Interacts with HIPK2 (By similarity). Interacts with DTX1, EID1, ELF3, FEN1, LEF1, NCOA1, NCOA6, NR3C1, PCAF, PELP1, PRDM6, SP1, SP3, SPIB, SRY, TCF7L2, DDX5, DDX17, SATB1, SRCAP and TRERF1 (PubMed:10823961, PubMed:11073989, PubMed:11073990, PubMed:11349124, PubMed:11430825, PubMed:11481323, PubMed:11564735, PubMed:11581372, PubMed:11864910, PubMed:12446687, PubMed:12527917, PubMed:12837748, PubMed:14605447, PubMed:15075319, PubMed:15297880, PubMed:16478997, PubMed:17226766, PubMed:8684459, PubMed:9590696). Interacts with JMY, the complex activates p53/TP53 transcriptional activity (PubMed:10518217, PubMed:11511361). Interacts with TTC5/STRAP; the interaction facilitates the association between JMY and p300/EP300 cofactors (PubMed:11511361). Interacts with p53/TP53; the interaction is facilitated by TTC5/STRAP (PubMed:15186775, PubMed:15448695, PubMed:19217391). Forms a complex with TTC5/STRAP and HSF1; these interactions augment chromatin-bound HSF1 and p300/EP300 histone acetyltransferase activity (PubMed:18451878). Part of a complex containing CARM1 and NCOA2/GRIP1 (PubMed:11701890, PubMed:11997499, PubMed:15731352). Interacts with ING4 and this interaction may be indirect (PubMed:12750254). Interacts with ING5 (PubMed:12750254). Interacts with the C-terminal region of CITED4 (PubMed:11744733). Non-sumoylated EP300 preferentially interacts with SENP3 (PubMed:19680224). Interacts with SS18L1/CREST (PubMed:14716005). Interacts with ALX1 (via homeobox domain) (PubMed:12929931). Interacts with NEUROD1; the interaction is inhibited by NR0B2 (PubMed:14752053). Interacts with TCF3 (PubMed:14752053). Interacts (via CREB-binding domain) with MYOCD (via C-terminus) (By similarity). Interacts with ROCK2 and PPARG (PubMed:11518699, PubMed:16574662). Forms a complex made of CDK9, CCNT1/cyclin-T1, EP300 and GATA4 that stimulates hypertrophy in cardiomyocytes (PubMed:20081228). Interacts with IRF1 and this interaction enhances acetylation of p53/TP53 and stimulation of its activity (PubMed:15509808). Interacts with ALKBH4 and DDIT3/CHOP (PubMed:17872950, PubMed:23145062). Interacts with KLF15 (PubMed:23999430). Interacts with CEBPB and RORA (PubMed:9862959). Interacts with NPAS2, BMAL1 and CLOCK (PubMed:14645221). Interacts with SIRT2 isoform 1, isoform 2 and isoform 5 (PubMed:24177535). Interacts with MTA1 (PubMed:16617102). Interacts with HDAC4 and HDAC5 in the presence of TFAP2C (PubMed:24413532). Interacts with TRIP4 (PubMed:25219498). Directly interacts with ZBTB49; this interaction leads to synergistic transactivation of CDKN1A (PubMed:25245946). Interacts with NR4A3 (By similarity). Interacts with ZNF451 (PubMed:24324267). Interacts with ATF5; EP300 is required for ATF5 and CEBPB interaction and DNA binding (By similarity). Interacts with HSF1 (PubMed:27189267). Interacts with ZBTB48/TZAP (PubMed:24382891). Interacts with STAT1; the interaction is enhanced upon IFN-gamma stimulation (PubMed:26479788). Interacts with HNRNPU (via C-terminus); this interaction enhances DNA-binding of HNRNPU to nuclear scaffold/matrix attachment region (S/MAR) elements (PubMed:11909954). Interacts with BCL11B (PubMed:16809611, PubMed:27959755). Interacts with SMAD4; negatively regulated by ZBTB7A (PubMed:25514493). Interacts with DUX4 (via C-terminus) (PubMed:26951377). Interacts with NUPR1; this interaction enhances the effect of EP300 on PAX2 transcription factor activity (PubMed:11940591). Interacts with RXRA; the interaction is decreased by 9-cis retinoic acid (PubMed:17761950). NR4A1 competes with EP300 for interaction with RXRA and thereby attenuates EP300 mediated acetylation of RXRA (PubMed:17761950). Interacts with RB1 (By similarity). Interacts with DDX3X; this interaction may facilitate HNF4A acetylation (PubMed:28128295). Interacts with SOX9 (PubMed:12732631). Interacts with ATF4; EP300/p300 stabilizes ATF4 and increases its transcriptional activity independently of its catalytic activity by preventing its ubiquitination (PubMed:16219772). Interacts with KAT5; promoting KAT5 autoacetylation (PubMed:24835996). Interacts (via bromo domain) with (acetylated) STAT3; interaction takes place following STAT3 acetylation by EP300 and promotes enhanceosome assembly (PubMed:18782771).</text>
</comment>
<comment type="subunit">
    <text evidence="20">(Microbial infection) Interacts with human adenovirus 5 E1A protein; this interaction stimulates the acetylation of RB1 by recruiting EP300 and RB1 into a multimeric-protein complex.</text>
</comment>
<comment type="subunit">
    <text evidence="10 17 125">(Microbial infection) Interacts with and acetylates HIV-1 Tat.</text>
</comment>
<comment type="subunit">
    <text evidence="21 25 76">(Microbial infection) Interacts with HTLV-1 proteins Tax, p30II and HBZ.</text>
</comment>
<comment type="interaction">
    <interactant intactId="EBI-447295">
        <id>Q09472</id>
    </interactant>
    <interactant intactId="EBI-8637516">
        <id>Q9NXW9</id>
        <label>ALKBH4</label>
    </interactant>
    <organismsDiffer>false</organismsDiffer>
    <experiments>4</experiments>
</comment>
<comment type="interaction">
    <interactant intactId="EBI-447295">
        <id>Q09472</id>
    </interactant>
    <interactant intactId="EBI-1048805">
        <id>P27695</id>
        <label>APEX1</label>
    </interactant>
    <organismsDiffer>false</organismsDiffer>
    <experiments>8</experiments>
</comment>
<comment type="interaction">
    <interactant intactId="EBI-447295">
        <id>Q09472</id>
    </interactant>
    <interactant intactId="EBI-540797">
        <id>Q9UBL3</id>
        <label>ASH2L</label>
    </interactant>
    <organismsDiffer>false</organismsDiffer>
    <experiments>5</experiments>
</comment>
<comment type="interaction">
    <interactant intactId="EBI-447295">
        <id>Q09472</id>
    </interactant>
    <interactant intactId="EBI-2875359">
        <id>Q8WXX7</id>
        <label>AUTS2</label>
    </interactant>
    <organismsDiffer>false</organismsDiffer>
    <experiments>6</experiments>
</comment>
<comment type="interaction">
    <interactant intactId="EBI-447295">
        <id>Q09472</id>
    </interactant>
    <interactant intactId="EBI-711221">
        <id>Q9NPI1</id>
        <label>BRD7</label>
    </interactant>
    <organismsDiffer>false</organismsDiffer>
    <experiments>3</experiments>
</comment>
<comment type="interaction">
    <interactant intactId="EBI-447295">
        <id>Q09472</id>
    </interactant>
    <interactant intactId="EBI-375096">
        <id>P24941</id>
        <label>CDK2</label>
    </interactant>
    <organismsDiffer>false</organismsDiffer>
    <experiments>7</experiments>
</comment>
<comment type="interaction">
    <interactant intactId="EBI-447295">
        <id>Q09472</id>
    </interactant>
    <interactant intactId="EBI-937732">
        <id>Q99967</id>
        <label>CITED2</label>
    </interactant>
    <organismsDiffer>false</organismsDiffer>
    <experiments>3</experiments>
</comment>
<comment type="interaction">
    <interactant intactId="EBI-447295">
        <id>Q09472</id>
    </interactant>
    <interactant intactId="EBI-1050386">
        <id>P61201</id>
        <label>COPS2</label>
    </interactant>
    <organismsDiffer>false</organismsDiffer>
    <experiments>2</experiments>
</comment>
<comment type="interaction">
    <interactant intactId="EBI-447295">
        <id>Q09472</id>
    </interactant>
    <interactant intactId="EBI-26386865">
        <id>P16220-1</id>
        <label>CREB1</label>
    </interactant>
    <organismsDiffer>false</organismsDiffer>
    <experiments>2</experiments>
</comment>
<comment type="interaction">
    <interactant intactId="EBI-447295">
        <id>Q09472</id>
    </interactant>
    <interactant intactId="EBI-351962">
        <id>P17844</id>
        <label>DDX5</label>
    </interactant>
    <organismsDiffer>false</organismsDiffer>
    <experiments>4</experiments>
</comment>
<comment type="interaction">
    <interactant intactId="EBI-447295">
        <id>Q09472</id>
    </interactant>
    <interactant intactId="EBI-739737">
        <id>Q01844</id>
        <label>EWSR1</label>
    </interactant>
    <organismsDiffer>false</organismsDiffer>
    <experiments>2</experiments>
</comment>
<comment type="interaction">
    <interactant intactId="EBI-447295">
        <id>Q09472</id>
    </interactant>
    <interactant intactId="EBI-400434">
        <id>P35637</id>
        <label>FUS</label>
    </interactant>
    <organismsDiffer>false</organismsDiffer>
    <experiments>4</experiments>
</comment>
<comment type="interaction">
    <interactant intactId="EBI-447295">
        <id>Q09472</id>
    </interactant>
    <interactant intactId="EBI-389564">
        <id>Q00403</id>
        <label>GTF2B</label>
    </interactant>
    <organismsDiffer>false</organismsDiffer>
    <experiments>2</experiments>
</comment>
<comment type="interaction">
    <interactant intactId="EBI-447295">
        <id>Q09472</id>
    </interactant>
    <interactant intactId="EBI-447269">
        <id>Q16665</id>
        <label>HIF1A</label>
    </interactant>
    <organismsDiffer>false</organismsDiffer>
    <experiments>20</experiments>
</comment>
<comment type="interaction">
    <interactant intactId="EBI-447295">
        <id>Q09472</id>
    </interactant>
    <interactant intactId="EBI-348345">
        <id>Q9H2X6</id>
        <label>HIPK2</label>
    </interactant>
    <organismsDiffer>false</organismsDiffer>
    <experiments>4</experiments>
</comment>
<comment type="interaction">
    <interactant intactId="EBI-447295">
        <id>Q09472</id>
    </interactant>
    <interactant intactId="EBI-477430">
        <id>Q92831</id>
        <label>KAT2B</label>
    </interactant>
    <organismsDiffer>false</organismsDiffer>
    <experiments>2</experiments>
</comment>
<comment type="interaction">
    <interactant intactId="EBI-447295">
        <id>Q09472</id>
    </interactant>
    <interactant intactId="EBI-356392">
        <id>P55209</id>
        <label>NAP1L1</label>
    </interactant>
    <organismsDiffer>false</organismsDiffer>
    <experiments>3</experiments>
</comment>
<comment type="interaction">
    <interactant intactId="EBI-447295">
        <id>Q09472</id>
    </interactant>
    <interactant intactId="EBI-494844">
        <id>O60934</id>
        <label>NBN</label>
    </interactant>
    <organismsDiffer>false</organismsDiffer>
    <experiments>5</experiments>
</comment>
<comment type="interaction">
    <interactant intactId="EBI-447295">
        <id>Q09472</id>
    </interactant>
    <interactant intactId="EBI-1167176">
        <id>P20265</id>
        <label>POU3F2</label>
    </interactant>
    <organismsDiffer>false</organismsDiffer>
    <experiments>3</experiments>
</comment>
<comment type="interaction">
    <interactant intactId="EBI-447295">
        <id>Q09472</id>
    </interactant>
    <interactant intactId="EBI-1105153">
        <id>Q96KQ4</id>
        <label>PPP1R13B</label>
    </interactant>
    <organismsDiffer>false</organismsDiffer>
    <experiments>2</experiments>
</comment>
<comment type="interaction">
    <interactant intactId="EBI-447295">
        <id>Q09472</id>
    </interactant>
    <interactant intactId="EBI-5550163">
        <id>Q8WUF5</id>
        <label>PPP1R13L</label>
    </interactant>
    <organismsDiffer>false</organismsDiffer>
    <experiments>2</experiments>
</comment>
<comment type="interaction">
    <interactant intactId="EBI-447295">
        <id>Q09472</id>
    </interactant>
    <interactant intactId="EBI-925990">
        <id>Q13761</id>
        <label>RUNX3</label>
    </interactant>
    <organismsDiffer>false</organismsDiffer>
    <experiments>7</experiments>
</comment>
<comment type="interaction">
    <interactant intactId="EBI-447295">
        <id>Q09472</id>
    </interactant>
    <interactant intactId="EBI-1802965">
        <id>Q96EB6</id>
        <label>SIRT1</label>
    </interactant>
    <organismsDiffer>false</organismsDiffer>
    <experiments>4</experiments>
</comment>
<comment type="interaction">
    <interactant intactId="EBI-447295">
        <id>Q09472</id>
    </interactant>
    <interactant intactId="EBI-456291">
        <id>Q13309</id>
        <label>SKP2</label>
    </interactant>
    <organismsDiffer>false</organismsDiffer>
    <experiments>3</experiments>
</comment>
<comment type="interaction">
    <interactant intactId="EBI-447295">
        <id>Q09472</id>
    </interactant>
    <interactant intactId="EBI-1045459">
        <id>O95863</id>
        <label>SNAI1</label>
    </interactant>
    <organismsDiffer>false</organismsDiffer>
    <experiments>3</experiments>
</comment>
<comment type="interaction">
    <interactant intactId="EBI-447295">
        <id>Q09472</id>
    </interactant>
    <interactant intactId="EBI-1186478">
        <id>P42226</id>
        <label>STAT6</label>
    </interactant>
    <organismsDiffer>false</organismsDiffer>
    <experiments>2</experiments>
</comment>
<comment type="interaction">
    <interactant intactId="EBI-447295">
        <id>Q09472</id>
    </interactant>
    <interactant intactId="EBI-3922312">
        <id>Q9UL17</id>
        <label>TBX21</label>
    </interactant>
    <organismsDiffer>false</organismsDiffer>
    <experiments>5</experiments>
</comment>
<comment type="interaction">
    <interactant intactId="EBI-447295">
        <id>Q09472</id>
    </interactant>
    <interactant intactId="EBI-749995">
        <id>P56279</id>
        <label>TCL1A</label>
    </interactant>
    <organismsDiffer>false</organismsDiffer>
    <experiments>4</experiments>
</comment>
<comment type="interaction">
    <interactant intactId="EBI-447295">
        <id>Q09472</id>
    </interactant>
    <interactant intactId="EBI-347351">
        <id>P05549</id>
        <label>TFAP2A</label>
    </interactant>
    <organismsDiffer>false</organismsDiffer>
    <experiments>7</experiments>
</comment>
<comment type="interaction">
    <interactant intactId="EBI-447295">
        <id>Q09472</id>
    </interactant>
    <interactant intactId="EBI-366083">
        <id>P04637</id>
        <label>TP53</label>
    </interactant>
    <organismsDiffer>false</organismsDiffer>
    <experiments>21</experiments>
</comment>
<comment type="interaction">
    <interactant intactId="EBI-447295">
        <id>Q09472</id>
    </interactant>
    <interactant intactId="EBI-77642">
        <id>Q13625</id>
        <label>TP53BP2</label>
    </interactant>
    <organismsDiffer>false</organismsDiffer>
    <experiments>2</experiments>
</comment>
<comment type="interaction">
    <interactant intactId="EBI-447295">
        <id>Q09472</id>
    </interactant>
    <interactant intactId="EBI-389606">
        <id>O15350</id>
        <label>TP73</label>
    </interactant>
    <organismsDiffer>false</organismsDiffer>
    <experiments>2</experiments>
</comment>
<comment type="interaction">
    <interactant intactId="EBI-447295">
        <id>Q09472</id>
    </interactant>
    <interactant intactId="EBI-286357">
        <id>P11473</id>
        <label>VDR</label>
    </interactant>
    <organismsDiffer>false</organismsDiffer>
    <experiments>3</experiments>
</comment>
<comment type="interaction">
    <interactant intactId="EBI-447295">
        <id>Q09472</id>
    </interactant>
    <interactant intactId="EBI-354065">
        <id>P67809</id>
        <label>YBX1</label>
    </interactant>
    <organismsDiffer>false</organismsDiffer>
    <experiments>2</experiments>
</comment>
<comment type="interaction">
    <interactant intactId="EBI-447295">
        <id>Q09472</id>
    </interactant>
    <interactant intactId="EBI-11296047">
        <id>K4P3M7</id>
        <label>BICP0</label>
    </interactant>
    <organismsDiffer>true</organismsDiffer>
    <experiments>4</experiments>
</comment>
<comment type="interaction">
    <interactant intactId="EBI-447295">
        <id>Q09472</id>
    </interactant>
    <interactant intactId="EBI-7028618">
        <id>P03122</id>
        <label>E2</label>
    </interactant>
    <organismsDiffer>true</organismsDiffer>
    <experiments>3</experiments>
</comment>
<comment type="interaction">
    <interactant intactId="EBI-447295">
        <id>Q09472</id>
    </interactant>
    <interactant intactId="EBI-7136851">
        <id>P06422</id>
        <label>E2</label>
    </interactant>
    <organismsDiffer>true</organismsDiffer>
    <experiments>7</experiments>
</comment>
<comment type="interaction">
    <interactant intactId="EBI-447295">
        <id>Q09472</id>
    </interactant>
    <interactant intactId="EBI-7010629">
        <id>P06790</id>
        <label>E2</label>
    </interactant>
    <organismsDiffer>true</organismsDiffer>
    <experiments>6</experiments>
</comment>
<comment type="interaction">
    <interactant intactId="EBI-447295">
        <id>Q09472</id>
    </interactant>
    <interactant intactId="EBI-298954">
        <id>Q61221</id>
        <label>Hif1a</label>
    </interactant>
    <organismsDiffer>true</organismsDiffer>
    <experiments>2</experiments>
</comment>
<comment type="interaction">
    <interactant intactId="EBI-447295">
        <id>Q09472</id>
    </interactant>
    <interactant intactId="EBI-866001">
        <id>Q9QXM1</id>
        <label>Jmy</label>
    </interactant>
    <organismsDiffer>true</organismsDiffer>
    <experiments>16</experiments>
</comment>
<comment type="interaction">
    <interactant intactId="EBI-447295">
        <id>Q09472</id>
    </interactant>
    <interactant intactId="EBI-6164389">
        <id>P04608</id>
        <label>tat</label>
    </interactant>
    <organismsDiffer>true</organismsDiffer>
    <experiments>3</experiments>
</comment>
<comment type="interaction">
    <interactant intactId="EBI-447295">
        <id>Q09472</id>
    </interactant>
    <interactant intactId="EBI-617698">
        <id>P03070</id>
    </interactant>
    <organismsDiffer>true</organismsDiffer>
    <experiments>2</experiments>
</comment>
<comment type="interaction">
    <interactant intactId="EBI-447295">
        <id>Q09472</id>
    </interactant>
    <interactant intactId="EBI-2603114">
        <id>P03255</id>
    </interactant>
    <organismsDiffer>true</organismsDiffer>
    <experiments>3</experiments>
</comment>
<comment type="interaction">
    <interactant intactId="EBI-447295">
        <id>Q09472</id>
    </interactant>
    <interactant intactId="EBI-6859460">
        <id>P03255-2</id>
    </interactant>
    <organismsDiffer>true</organismsDiffer>
    <experiments>3</experiments>
</comment>
<comment type="interaction">
    <interactant intactId="EBI-447295">
        <id>Q09472</id>
    </interactant>
    <interactant intactId="EBI-6947456">
        <id>P03259</id>
    </interactant>
    <organismsDiffer>true</organismsDiffer>
    <experiments>3</experiments>
</comment>
<comment type="subcellular location">
    <subcellularLocation>
        <location evidence="45 85">Cytoplasm</location>
    </subcellularLocation>
    <subcellularLocation>
        <location evidence="45 47 61 64 72 85 105">Nucleus</location>
    </subcellularLocation>
    <subcellularLocation>
        <location evidence="47 106">Chromosome</location>
    </subcellularLocation>
    <text evidence="45 105 106">Localizes to active chromatin: Colocalizes with histone H3 acetylated and/or crotonylated at 'Lys-18' (H3K18ac and H3K18cr, respectively) (PubMed:25818647). In the presence of ALX1 relocalizes from the cytoplasm to the nucleus. Colocalizes with ROCK2 in the nucleus (PubMed:12929931). Localizes to sites of DNA damage (PubMed:25593309).</text>
</comment>
<comment type="domain">
    <text>The CRD1 domain (cell cycle regulatory domain 1) mediates transcriptional repression of a subset of p300 responsive genes; it can be de-repressed by CDKN1A/p21WAF1 at least at some promoters. It contains sumoylation and acetylation sites and the same lysine residues may be targeted for the respective modifications. It is proposed that deacetylation by SIRT1 allows sumoylation leading to suppressed activity.</text>
</comment>
<comment type="PTM">
    <text evidence="50 56 69 80 92 95">Acetylated on Lys at up to 17 positions by intermolecular autocatalysis. Deacetylated in the transcriptional repression domain (CRD1) by SIRT1, preferentially at Lys-1020. Deacetylated by SIRT2, preferentially at Lys-418, Lys-423, Lys-1542, Lys-1546, Lys-1549, Lys-1699, Lys-1704 and Lys-1707.</text>
</comment>
<comment type="PTM">
    <text evidence="29 59">Citrullinated at Arg-2142 by PADI4, which impairs methylation by CARM1 and promotes interaction with NCOA2/GRIP1.</text>
</comment>
<comment type="PTM">
    <text evidence="29 59">Methylated at Arg-580 and Arg-604 in the KIX domain by CARM1, which blocks association with CREB, inhibits CREB signaling and activates apoptotic response. Also methylated at Arg-2142 by CARM1, which impairs interaction with NCOA2/GRIP1.</text>
</comment>
<comment type="PTM">
    <text evidence="40 82">Sumoylated; sumoylation in the transcriptional repression domain (CRD1) mediates transcriptional repression. Desumoylated by SENP3 through the removal of SUMO2 and SUMO3.</text>
</comment>
<comment type="PTM">
    <text>Probable target of ubiquitination by FBXO3, leading to rapid proteasome-dependent degradation.</text>
</comment>
<comment type="PTM">
    <text evidence="24 37 64 77">Phosphorylated by HIPK2 in a RUNX1-dependent manner. This phosphorylation that activates EP300 happens when RUNX1 is associated with DNA and CBFB. Phosphorylated by ROCK2 and this enhances its activity. Phosphorylation at Ser-89 by AMPK reduces interaction with nuclear receptors, such as PPARG.</text>
</comment>
<comment type="disease">
    <text>Defects in EP300 may play a role in epithelial cancer.</text>
</comment>
<comment type="disease">
    <text>Chromosomal aberrations involving EP300 may be a cause of acute myeloid leukemias. Translocation t(8;22)(p11;q13) with KAT6A.</text>
</comment>
<comment type="disease" evidence="58">
    <disease id="DI-02976">
        <name>Rubinstein-Taybi syndrome 2</name>
        <acronym>RSTS2</acronym>
        <description>A disorder characterized by craniofacial abnormalities, postnatal growth deficiency, broad thumbs, broad big toes, intellectual disability and a propensity for development of malignancies. Some individuals with RSTS2 have less severe mental impairment, more severe microcephaly, and a greater degree of changes in facial bone structure than RSTS1 patients.</description>
        <dbReference type="MIM" id="613684"/>
    </disease>
    <text>The disease is caused by variants affecting the gene represented in this entry.</text>
</comment>
<comment type="disease" evidence="114">
    <disease id="DI-05488">
        <name>Menke-Hennekam syndrome 2</name>
        <acronym>MKHK2</acronym>
        <description>A form of Menke-Hennekam syndrome, a congenital autosomal dominant disease characterized by developmental delay, growth retardation, and craniofacial dysmorphism. Patients have intellectual disability of variable severity, speech delay, autistic behavior, short stature and microcephaly. Main facial characteristics include short palpebral fissures, telecanthi, depressed nasal ridge, short nose, anteverted nares, short columella and long philtrum.</description>
        <dbReference type="MIM" id="618333"/>
    </disease>
    <text>The disease is caused by variants affecting the gene represented in this entry.</text>
</comment>
<comment type="online information" name="Atlas of Genetics and Cytogenetics in Oncology and Haematology">
    <link uri="https://atlasgeneticsoncology.org/gene/97/ep300"/>
</comment>
<comment type="online information" name="Wikipedia">
    <link uri="https://en.wikipedia.org/wiki/P300/CBP"/>
    <text>P300/CBP entry</text>
</comment>